<organism>
    <name type="scientific">Gallus gallus</name>
    <name type="common">Chicken</name>
    <dbReference type="NCBI Taxonomy" id="9031"/>
    <lineage>
        <taxon>Eukaryota</taxon>
        <taxon>Metazoa</taxon>
        <taxon>Chordata</taxon>
        <taxon>Craniata</taxon>
        <taxon>Vertebrata</taxon>
        <taxon>Euteleostomi</taxon>
        <taxon>Archelosauria</taxon>
        <taxon>Archosauria</taxon>
        <taxon>Dinosauria</taxon>
        <taxon>Saurischia</taxon>
        <taxon>Theropoda</taxon>
        <taxon>Coelurosauria</taxon>
        <taxon>Aves</taxon>
        <taxon>Neognathae</taxon>
        <taxon>Galloanserae</taxon>
        <taxon>Galliformes</taxon>
        <taxon>Phasianidae</taxon>
        <taxon>Phasianinae</taxon>
        <taxon>Gallus</taxon>
    </lineage>
</organism>
<name>LYSC_CHICK</name>
<gene>
    <name type="primary">LYZ</name>
</gene>
<keyword id="KW-0002">3D-structure</keyword>
<keyword id="KW-0020">Allergen</keyword>
<keyword id="KW-0929">Antimicrobial</keyword>
<keyword id="KW-0081">Bacteriolytic enzyme</keyword>
<keyword id="KW-0903">Direct protein sequencing</keyword>
<keyword id="KW-1015">Disulfide bond</keyword>
<keyword id="KW-0326">Glycosidase</keyword>
<keyword id="KW-0378">Hydrolase</keyword>
<keyword id="KW-1185">Reference proteome</keyword>
<keyword id="KW-0964">Secreted</keyword>
<keyword id="KW-0732">Signal</keyword>
<feature type="signal peptide" evidence="2">
    <location>
        <begin position="1"/>
        <end position="18"/>
    </location>
</feature>
<feature type="chain" id="PRO_0000018495" description="Lysozyme C">
    <location>
        <begin position="19"/>
        <end position="147"/>
    </location>
</feature>
<feature type="domain" description="C-type lysozyme" evidence="1">
    <location>
        <begin position="19"/>
        <end position="147"/>
    </location>
</feature>
<feature type="active site">
    <location>
        <position position="53"/>
    </location>
</feature>
<feature type="active site">
    <location>
        <position position="70"/>
    </location>
</feature>
<feature type="binding site">
    <location>
        <position position="119"/>
    </location>
    <ligand>
        <name>substrate</name>
    </ligand>
</feature>
<feature type="disulfide bond">
    <location>
        <begin position="24"/>
        <end position="145"/>
    </location>
</feature>
<feature type="disulfide bond">
    <location>
        <begin position="48"/>
        <end position="133"/>
    </location>
</feature>
<feature type="disulfide bond">
    <location>
        <begin position="82"/>
        <end position="98"/>
    </location>
</feature>
<feature type="disulfide bond">
    <location>
        <begin position="94"/>
        <end position="112"/>
    </location>
</feature>
<feature type="sequence variant" evidence="4 6">
    <original>A</original>
    <variation>V</variation>
    <location>
        <position position="49"/>
    </location>
</feature>
<feature type="sequence variant" evidence="4">
    <original>Y</original>
    <variation>F</variation>
    <location>
        <position position="71"/>
    </location>
</feature>
<feature type="sequence variant" evidence="4">
    <original>Y</original>
    <variation>S</variation>
    <location>
        <position position="71"/>
    </location>
</feature>
<feature type="sequence conflict" description="In Ref. 7; AA sequence." evidence="7" ref="7">
    <original>N</original>
    <variation>D</variation>
    <location>
        <position position="121"/>
    </location>
</feature>
<feature type="sequence conflict" description="In Ref. 1; CAA23711." evidence="7" ref="1">
    <original>N</original>
    <variation>S</variation>
    <location>
        <position position="124"/>
    </location>
</feature>
<feature type="sequence conflict" description="In Ref. 8; AAA48944." evidence="7" ref="8">
    <original>R</original>
    <variation>S</variation>
    <location>
        <position position="132"/>
    </location>
</feature>
<feature type="helix" evidence="10">
    <location>
        <begin position="23"/>
        <end position="32"/>
    </location>
</feature>
<feature type="turn" evidence="9">
    <location>
        <begin position="33"/>
        <end position="37"/>
    </location>
</feature>
<feature type="helix" evidence="12">
    <location>
        <begin position="38"/>
        <end position="40"/>
    </location>
</feature>
<feature type="helix" evidence="10">
    <location>
        <begin position="43"/>
        <end position="54"/>
    </location>
</feature>
<feature type="strand" evidence="8">
    <location>
        <begin position="55"/>
        <end position="57"/>
    </location>
</feature>
<feature type="strand" evidence="10">
    <location>
        <begin position="61"/>
        <end position="63"/>
    </location>
</feature>
<feature type="strand" evidence="11">
    <location>
        <begin position="65"/>
        <end position="67"/>
    </location>
</feature>
<feature type="strand" evidence="10">
    <location>
        <begin position="69"/>
        <end position="71"/>
    </location>
</feature>
<feature type="turn" evidence="10">
    <location>
        <begin position="72"/>
        <end position="75"/>
    </location>
</feature>
<feature type="turn" evidence="10">
    <location>
        <begin position="78"/>
        <end position="81"/>
    </location>
</feature>
<feature type="strand" evidence="14">
    <location>
        <begin position="85"/>
        <end position="87"/>
    </location>
</feature>
<feature type="strand" evidence="13">
    <location>
        <begin position="95"/>
        <end position="97"/>
    </location>
</feature>
<feature type="helix" evidence="10">
    <location>
        <begin position="98"/>
        <end position="102"/>
    </location>
</feature>
<feature type="strand" evidence="15">
    <location>
        <begin position="103"/>
        <end position="105"/>
    </location>
</feature>
<feature type="helix" evidence="10">
    <location>
        <begin position="107"/>
        <end position="118"/>
    </location>
</feature>
<feature type="strand" evidence="15">
    <location>
        <begin position="119"/>
        <end position="121"/>
    </location>
</feature>
<feature type="helix" evidence="10">
    <location>
        <begin position="123"/>
        <end position="125"/>
    </location>
</feature>
<feature type="helix" evidence="10">
    <location>
        <begin position="127"/>
        <end position="132"/>
    </location>
</feature>
<feature type="turn" evidence="10">
    <location>
        <begin position="133"/>
        <end position="135"/>
    </location>
</feature>
<feature type="helix" evidence="10">
    <location>
        <begin position="138"/>
        <end position="141"/>
    </location>
</feature>
<feature type="turn" evidence="10">
    <location>
        <begin position="142"/>
        <end position="144"/>
    </location>
</feature>
<proteinExistence type="evidence at protein level"/>
<comment type="function">
    <text evidence="1 5">Lysozymes have primarily a bacteriolytic function; those in tissues and body fluids are associated with the monocyte-macrophage system and enhance the activity of immunoagents. Has bacteriolytic activity against M.luteus.</text>
</comment>
<comment type="catalytic activity">
    <reaction>
        <text>Hydrolysis of (1-&gt;4)-beta-linkages between N-acetylmuramic acid and N-acetyl-D-glucosamine residues in a peptidoglycan and between N-acetyl-D-glucosamine residues in chitodextrins.</text>
        <dbReference type="EC" id="3.2.1.17"/>
    </reaction>
</comment>
<comment type="subunit">
    <text>Monomer.</text>
</comment>
<comment type="interaction">
    <interactant intactId="EBI-1029543">
        <id>P00698</id>
    </interactant>
    <interactant intactId="EBI-1029543">
        <id>P00698</id>
        <label>LYZ</label>
    </interactant>
    <organismsDiffer>false</organismsDiffer>
    <experiments>5</experiments>
</comment>
<comment type="interaction">
    <interactant intactId="EBI-1029543">
        <id>P00698</id>
    </interactant>
    <interactant intactId="EBI-547165">
        <id>P0C0V0</id>
        <label>degP</label>
    </interactant>
    <organismsDiffer>true</organismsDiffer>
    <experiments>11</experiments>
</comment>
<comment type="subcellular location">
    <subcellularLocation>
        <location>Secreted</location>
    </subcellularLocation>
</comment>
<comment type="tissue specificity">
    <text>In the egg white and polymorphonuclear leukocytes.</text>
</comment>
<comment type="polymorphism">
    <text evidence="3 4">Numerous polymorphisms have been identified in various strains, predominantly at positions 49 and 71 (PubMed:19845599). The sequence shown here is that of red jungle fowl (PubMed:15592404).</text>
</comment>
<comment type="allergen">
    <text>Causes an allergic reaction in human.</text>
</comment>
<comment type="miscellaneous">
    <text>Lysozyme C is capable of both hydrolysis and transglycosylation; it also shows a slight esterase activity. It acts rapidly on both peptide-substituted and unsubstituted peptidoglycan, and slowly on chitin oligosaccharides.</text>
</comment>
<comment type="similarity">
    <text evidence="1">Belongs to the glycosyl hydrolase 22 family.</text>
</comment>
<sequence length="147" mass="16239">MRSLLILVLCFLPLAALGKVFGRCELAAAMKRHGLDNYRGYSLGNWVCAAKFESNFNTQATNRNTDGSTDYGILQINSRWWCNDGRTPGSRNLCNIPCSALLSSDITASVNCAKKIVSDGNGMNAWVAWRNRCKGTDVQAWIRGCRL</sequence>
<accession>P00698</accession>
<accession>B8YJN9</accession>
<accession>B8YJP1</accession>
<accession>B8YJT7</accession>
<accession>B8YK79</accession>
<accession>Q90884</accession>
<protein>
    <recommendedName>
        <fullName>Lysozyme C</fullName>
        <ecNumber>3.2.1.17</ecNumber>
    </recommendedName>
    <alternativeName>
        <fullName>1,4-beta-N-acetylmuramidase C</fullName>
    </alternativeName>
    <alternativeName>
        <fullName>Allergen Gal d IV</fullName>
    </alternativeName>
    <allergenName>Gal d 4</allergenName>
</protein>
<evidence type="ECO:0000255" key="1">
    <source>
        <dbReference type="PROSITE-ProRule" id="PRU00680"/>
    </source>
</evidence>
<evidence type="ECO:0000269" key="2">
    <source>
    </source>
</evidence>
<evidence type="ECO:0000269" key="3">
    <source>
    </source>
</evidence>
<evidence type="ECO:0000269" key="4">
    <source>
    </source>
</evidence>
<evidence type="ECO:0000269" key="5">
    <source>
    </source>
</evidence>
<evidence type="ECO:0000269" key="6">
    <source>
    </source>
</evidence>
<evidence type="ECO:0000305" key="7"/>
<evidence type="ECO:0007829" key="8">
    <source>
        <dbReference type="PDB" id="2HS7"/>
    </source>
</evidence>
<evidence type="ECO:0007829" key="9">
    <source>
        <dbReference type="PDB" id="2HSO"/>
    </source>
</evidence>
<evidence type="ECO:0007829" key="10">
    <source>
        <dbReference type="PDB" id="2VB1"/>
    </source>
</evidence>
<evidence type="ECO:0007829" key="11">
    <source>
        <dbReference type="PDB" id="3D9A"/>
    </source>
</evidence>
<evidence type="ECO:0007829" key="12">
    <source>
        <dbReference type="PDB" id="5KXP"/>
    </source>
</evidence>
<evidence type="ECO:0007829" key="13">
    <source>
        <dbReference type="PDB" id="5KXS"/>
    </source>
</evidence>
<evidence type="ECO:0007829" key="14">
    <source>
        <dbReference type="PDB" id="6S7N"/>
    </source>
</evidence>
<evidence type="ECO:0007829" key="15">
    <source>
        <dbReference type="PDB" id="8RT2"/>
    </source>
</evidence>
<reference key="1">
    <citation type="journal article" date="1980" name="Proc. Natl. Acad. Sci. U.S.A.">
        <title>Exons encode functional and structural units of chicken lysozyme.</title>
        <authorList>
            <person name="Jung A."/>
            <person name="Sippel A.E."/>
            <person name="Grez M."/>
            <person name="Schutz G."/>
        </authorList>
    </citation>
    <scope>NUCLEOTIDE SEQUENCE [GENOMIC DNA]</scope>
    <scope>SEQUENCE REVISION TO 121</scope>
    <scope>VARIANT VAL-49</scope>
</reference>
<reference key="2">
    <citation type="journal article" date="2002" name="Nucleic Acids Res.">
        <title>The chicken lysozyme chromatin domain contains a second, widely expressed gene.</title>
        <authorList>
            <person name="Chong S."/>
            <person name="Riggs A.D."/>
            <person name="Bonifer C."/>
        </authorList>
    </citation>
    <scope>NUCLEOTIDE SEQUENCE [GENOMIC DNA]</scope>
</reference>
<reference key="3">
    <citation type="journal article" date="2004" name="Nature">
        <title>Sequence and comparative analysis of the chicken genome provide unique perspectives on vertebrate evolution.</title>
        <authorList>
            <person name="Hillier L.W."/>
            <person name="Miller W."/>
            <person name="Birney E."/>
            <person name="Warren W."/>
            <person name="Hardison R.C."/>
            <person name="Ponting C.P."/>
            <person name="Bork P."/>
            <person name="Burt D.W."/>
            <person name="Groenen M.A.M."/>
            <person name="Delany M.E."/>
            <person name="Dodgson J.B."/>
            <person name="Chinwalla A.T."/>
            <person name="Cliften P.F."/>
            <person name="Clifton S.W."/>
            <person name="Delehaunty K.D."/>
            <person name="Fronick C."/>
            <person name="Fulton R.S."/>
            <person name="Graves T.A."/>
            <person name="Kremitzki C."/>
            <person name="Layman D."/>
            <person name="Magrini V."/>
            <person name="McPherson J.D."/>
            <person name="Miner T.L."/>
            <person name="Minx P."/>
            <person name="Nash W.E."/>
            <person name="Nhan M.N."/>
            <person name="Nelson J.O."/>
            <person name="Oddy L.G."/>
            <person name="Pohl C.S."/>
            <person name="Randall-Maher J."/>
            <person name="Smith S.M."/>
            <person name="Wallis J.W."/>
            <person name="Yang S.-P."/>
            <person name="Romanov M.N."/>
            <person name="Rondelli C.M."/>
            <person name="Paton B."/>
            <person name="Smith J."/>
            <person name="Morrice D."/>
            <person name="Daniels L."/>
            <person name="Tempest H.G."/>
            <person name="Robertson L."/>
            <person name="Masabanda J.S."/>
            <person name="Griffin D.K."/>
            <person name="Vignal A."/>
            <person name="Fillon V."/>
            <person name="Jacobbson L."/>
            <person name="Kerje S."/>
            <person name="Andersson L."/>
            <person name="Crooijmans R.P."/>
            <person name="Aerts J."/>
            <person name="van der Poel J.J."/>
            <person name="Ellegren H."/>
            <person name="Caldwell R.B."/>
            <person name="Hubbard S.J."/>
            <person name="Grafham D.V."/>
            <person name="Kierzek A.M."/>
            <person name="McLaren S.R."/>
            <person name="Overton I.M."/>
            <person name="Arakawa H."/>
            <person name="Beattie K.J."/>
            <person name="Bezzubov Y."/>
            <person name="Boardman P.E."/>
            <person name="Bonfield J.K."/>
            <person name="Croning M.D.R."/>
            <person name="Davies R.M."/>
            <person name="Francis M.D."/>
            <person name="Humphray S.J."/>
            <person name="Scott C.E."/>
            <person name="Taylor R.G."/>
            <person name="Tickle C."/>
            <person name="Brown W.R.A."/>
            <person name="Rogers J."/>
            <person name="Buerstedde J.-M."/>
            <person name="Wilson S.A."/>
            <person name="Stubbs L."/>
            <person name="Ovcharenko I."/>
            <person name="Gordon L."/>
            <person name="Lucas S."/>
            <person name="Miller M.M."/>
            <person name="Inoko H."/>
            <person name="Shiina T."/>
            <person name="Kaufman J."/>
            <person name="Salomonsen J."/>
            <person name="Skjoedt K."/>
            <person name="Wong G.K.-S."/>
            <person name="Wang J."/>
            <person name="Liu B."/>
            <person name="Wang J."/>
            <person name="Yu J."/>
            <person name="Yang H."/>
            <person name="Nefedov M."/>
            <person name="Koriabine M."/>
            <person name="Dejong P.J."/>
            <person name="Goodstadt L."/>
            <person name="Webber C."/>
            <person name="Dickens N.J."/>
            <person name="Letunic I."/>
            <person name="Suyama M."/>
            <person name="Torrents D."/>
            <person name="von Mering C."/>
            <person name="Zdobnov E.M."/>
            <person name="Makova K."/>
            <person name="Nekrutenko A."/>
            <person name="Elnitski L."/>
            <person name="Eswara P."/>
            <person name="King D.C."/>
            <person name="Yang S.-P."/>
            <person name="Tyekucheva S."/>
            <person name="Radakrishnan A."/>
            <person name="Harris R.S."/>
            <person name="Chiaromonte F."/>
            <person name="Taylor J."/>
            <person name="He J."/>
            <person name="Rijnkels M."/>
            <person name="Griffiths-Jones S."/>
            <person name="Ureta-Vidal A."/>
            <person name="Hoffman M.M."/>
            <person name="Severin J."/>
            <person name="Searle S.M.J."/>
            <person name="Law A.S."/>
            <person name="Speed D."/>
            <person name="Waddington D."/>
            <person name="Cheng Z."/>
            <person name="Tuzun E."/>
            <person name="Eichler E."/>
            <person name="Bao Z."/>
            <person name="Flicek P."/>
            <person name="Shteynberg D.D."/>
            <person name="Brent M.R."/>
            <person name="Bye J.M."/>
            <person name="Huckle E.J."/>
            <person name="Chatterji S."/>
            <person name="Dewey C."/>
            <person name="Pachter L."/>
            <person name="Kouranov A."/>
            <person name="Mourelatos Z."/>
            <person name="Hatzigeorgiou A.G."/>
            <person name="Paterson A.H."/>
            <person name="Ivarie R."/>
            <person name="Brandstrom M."/>
            <person name="Axelsson E."/>
            <person name="Backstrom N."/>
            <person name="Berlin S."/>
            <person name="Webster M.T."/>
            <person name="Pourquie O."/>
            <person name="Reymond A."/>
            <person name="Ucla C."/>
            <person name="Antonarakis S.E."/>
            <person name="Long M."/>
            <person name="Emerson J.J."/>
            <person name="Betran E."/>
            <person name="Dupanloup I."/>
            <person name="Kaessmann H."/>
            <person name="Hinrichs A.S."/>
            <person name="Bejerano G."/>
            <person name="Furey T.S."/>
            <person name="Harte R.A."/>
            <person name="Raney B."/>
            <person name="Siepel A."/>
            <person name="Kent W.J."/>
            <person name="Haussler D."/>
            <person name="Eyras E."/>
            <person name="Castelo R."/>
            <person name="Abril J.F."/>
            <person name="Castellano S."/>
            <person name="Camara F."/>
            <person name="Parra G."/>
            <person name="Guigo R."/>
            <person name="Bourque G."/>
            <person name="Tesler G."/>
            <person name="Pevzner P.A."/>
            <person name="Smit A."/>
            <person name="Fulton L.A."/>
            <person name="Mardis E.R."/>
            <person name="Wilson R.K."/>
        </authorList>
    </citation>
    <scope>NUCLEOTIDE SEQUENCE [LARGE SCALE GENOMIC DNA]</scope>
    <source>
        <strain>Red jungle fowl</strain>
    </source>
</reference>
<reference key="4">
    <citation type="journal article" date="2010" name="Anim. Genet.">
        <title>Variation in chicken populations may affect the enzymatic activity of lysozyme.</title>
        <authorList>
            <person name="Downing T."/>
            <person name="O'Farrelly C."/>
            <person name="Bhuiyan A.K."/>
            <person name="Silva P."/>
            <person name="Naqvi A.N."/>
            <person name="Sanfo R."/>
            <person name="Sow R.S."/>
            <person name="Podisi B."/>
            <person name="Hanotte O."/>
            <person name="Bradley D.G."/>
        </authorList>
    </citation>
    <scope>NUCLEOTIDE SEQUENCE [GENOMIC DNA]</scope>
    <scope>VARIANTS VAL-49; PHE-71 AND SER-71</scope>
</reference>
<reference key="5">
    <citation type="submission" date="2016-03" db="EMBL/GenBank/DDBJ databases">
        <title>LYZC haplotype in a line of Rhode Island Red layer chicken.</title>
        <authorList>
            <person name="Yan H."/>
        </authorList>
    </citation>
    <scope>NUCLEOTIDE SEQUENCE [GENOMIC DNA]</scope>
</reference>
<reference key="6">
    <citation type="journal article" date="1977" name="J. Biol. Chem.">
        <title>Precursor of egg white lysozyme. Amino acid sequence of an NH2-terminal extension.</title>
        <authorList>
            <person name="Palmiter R.D."/>
            <person name="Gagnon J."/>
            <person name="Ericsson L.H."/>
            <person name="Walsh K.A."/>
        </authorList>
    </citation>
    <scope>PROTEIN SEQUENCE OF 1-20 (PRECURSOR PROTEIN)</scope>
</reference>
<reference key="7">
    <citation type="journal article" date="1963" name="J. Biol. Chem.">
        <title>The amino acid sequence of egg white lysozyme.</title>
        <authorList>
            <person name="Canfield R.E."/>
        </authorList>
    </citation>
    <scope>PROTEIN SEQUENCE OF 19-147</scope>
</reference>
<reference key="8">
    <citation type="journal article" date="1979" name="J. Biol. Chem.">
        <title>Isolation of recombinant plasmids bearing cDNA to hen ovomucoid and lysozyme mRNAs.</title>
        <authorList>
            <person name="Buell G.N."/>
            <person name="Wickens M.P."/>
            <person name="Carbon J."/>
            <person name="Schimke R.T."/>
        </authorList>
    </citation>
    <scope>NUCLEOTIDE SEQUENCE [MRNA] OF 123-146</scope>
</reference>
<reference key="9">
    <citation type="journal article" date="1965" name="J. Biol. Chem.">
        <title>The disulfide bonds of egg white lysozyme (muramidase).</title>
        <authorList>
            <person name="Canfield R.E."/>
            <person name="Liu A.K."/>
        </authorList>
    </citation>
    <scope>DISULFIDE BONDS</scope>
</reference>
<reference key="10">
    <citation type="journal article" date="1965" name="Biochim. Biophys. Acta">
        <title>The disulfide bridges of hen's egg-white lysozyme.</title>
        <authorList>
            <person name="Jauregui-Adell J."/>
            <person name="Jolles J."/>
            <person name="Jolles P."/>
        </authorList>
    </citation>
    <scope>DISULFIDE BONDS</scope>
</reference>
<reference key="11">
    <citation type="journal article" date="1987" name="J. Biochem.">
        <title>Conversion of Trp 62 of hen egg-white lysozyme to Tyr by site-directed mutagenesis.</title>
        <authorList>
            <person name="Kumagai I."/>
            <person name="Kojima S."/>
            <person name="Tamaki E."/>
            <person name="Miura K."/>
        </authorList>
    </citation>
    <scope>MUTAGENESIS</scope>
</reference>
<reference key="12">
    <citation type="journal article" date="2012" name="Gene">
        <title>Molecular characterization of goose- and chicken-type lysozymes in emu (Dromaius novaehollandiae): evidence for extremely low lysozyme levels in emu egg white.</title>
        <authorList>
            <person name="Maehashi K."/>
            <person name="Matano M."/>
            <person name="Irisawa T."/>
            <person name="Uchino M."/>
            <person name="Kashiwagi Y."/>
            <person name="Watanabe T."/>
        </authorList>
    </citation>
    <scope>FUNCTION</scope>
</reference>
<reference key="13">
    <citation type="book" date="1972" name="The enzymes (3rd ed.)">
        <title>Vertebrate lysozymes.</title>
        <editorList>
            <person name="Boyer P.D."/>
        </editorList>
        <authorList>
            <person name="Imoto T."/>
            <person name="Johnson L.N."/>
            <person name="North A.C.T."/>
            <person name="Phillips D.C."/>
            <person name="Rupley J.A."/>
        </authorList>
    </citation>
    <scope>X-RAY CRYSTALLOGRAPHY (2.0 ANGSTROMS)</scope>
    <scope>REVIEW</scope>
</reference>
<reference key="14">
    <citation type="journal article" date="1965" name="Nature">
        <title>Structure of hen egg-white lysozyme. A three-dimensional Fourier synthesis at 2-A resolution.</title>
        <authorList>
            <person name="Blake C.C.F."/>
            <person name="Koenig D.F."/>
            <person name="Mair G.A."/>
            <person name="North A.C.T."/>
            <person name="Phillips D.C."/>
            <person name="Sarma V.R."/>
        </authorList>
    </citation>
    <scope>X-RAY CRYSTALLOGRAPHY (2.0 ANGSTROMS)</scope>
</reference>
<reference key="15">
    <citation type="journal article" date="1976" name="J. Mol. Biol.">
        <title>The structure of triclinic lysozyme at 2.5-A resolution.</title>
        <authorList>
            <person name="Moult J."/>
            <person name="Yonath A."/>
            <person name="Traub W."/>
            <person name="Smilansky A."/>
            <person name="Podjarny A."/>
            <person name="Rabinovich D."/>
            <person name="Saya A."/>
        </authorList>
    </citation>
    <scope>X-RAY CRYSTALLOGRAPHY (2.5 ANGSTROMS) OF TRICLINIC LYSOZYME</scope>
</reference>
<reference key="16">
    <citation type="journal article" date="1976" name="J. Mol. Biol.">
        <title>Structures of triclinic mono- and di-N-acetylglucosamine: lysozyme complexes -- a crystallographic study.</title>
        <authorList>
            <person name="Kurachi K."/>
            <person name="Sieker L.C."/>
            <person name="Jensen L.H."/>
        </authorList>
    </citation>
    <scope>X-RAY CRYSTALLOGRAPHY (1.9 ANGSTROMS) OF TRICLINIC LYSOZYME</scope>
</reference>
<reference key="17">
    <citation type="journal article" date="1991" name="J. Biol. Chem.">
        <title>Crystallographic refinement of the three-dimensional structure of the FabD1.3-lysozyme complex at 2.5-A resolution.</title>
        <authorList>
            <person name="Fischmann T.O."/>
            <person name="Bentley G.A."/>
            <person name="Bhat T.N."/>
            <person name="Boulot G."/>
            <person name="Mariuzza R.A."/>
            <person name="Phillips S.E."/>
            <person name="Tello D."/>
            <person name="Poljak R.J."/>
        </authorList>
    </citation>
    <scope>X-RAY CRYSTALLOGRAPHY (2.5 ANGSTROMS) OF COMPLEX WITH ANTIBODY</scope>
</reference>
<reference key="18">
    <citation type="journal article" date="1988" name="Biochemistry">
        <title>Sequential 1H NMR assignments and secondary structure of hen egg white lysozyme in solution.</title>
        <authorList>
            <person name="Redfield C."/>
            <person name="Dobson C.M."/>
        </authorList>
    </citation>
    <scope>STRUCTURE BY NMR</scope>
</reference>
<reference key="19">
    <citation type="journal article" date="1997" name="Biochemistry">
        <title>Structural and dynamical properties of a denatured protein. Heteronuclear 3D NMR experiments and theoretical simulations of lysozyme in 8 M urea.</title>
        <authorList>
            <person name="Schwalbe H."/>
            <person name="Fiebig K.M."/>
            <person name="Buck M."/>
            <person name="Jones J.A."/>
            <person name="Grimshaw S.B."/>
            <person name="Spencer A."/>
            <person name="Glaser S.J."/>
            <person name="Smith L.J."/>
            <person name="Dobson C.M."/>
        </authorList>
    </citation>
    <scope>STRUCTURE BY NMR</scope>
</reference>
<reference key="20">
    <citation type="submission" date="2020-03" db="PDB data bank">
        <title>Protein Structural Changes on a CubeSat under Rocket Acceleration Profile.</title>
        <authorList>
            <person name="Fernandez D."/>
            <person name="Russi S."/>
        </authorList>
    </citation>
    <scope>X-RAY CRYSTALLOGRAPHY (1.60 ANGSTROMS) OF 19-147</scope>
    <scope>DISULFIDE BONDS</scope>
</reference>
<dbReference type="EC" id="3.2.1.17"/>
<dbReference type="EMBL" id="J00885">
    <property type="protein sequence ID" value="AAA48943.1"/>
    <property type="molecule type" value="Genomic_DNA"/>
</dbReference>
<dbReference type="EMBL" id="V00428">
    <property type="protein sequence ID" value="CAA23711.1"/>
    <property type="molecule type" value="mRNA"/>
</dbReference>
<dbReference type="EMBL" id="AF410481">
    <property type="protein sequence ID" value="AAL69327.1"/>
    <property type="molecule type" value="Genomic_DNA"/>
</dbReference>
<dbReference type="EMBL" id="M10640">
    <property type="protein sequence ID" value="AAA48944.1"/>
    <property type="molecule type" value="mRNA"/>
</dbReference>
<dbReference type="EMBL" id="FJ542373">
    <property type="protein sequence ID" value="ACL81571.1"/>
    <property type="molecule type" value="Genomic_DNA"/>
</dbReference>
<dbReference type="EMBL" id="FJ542374">
    <property type="protein sequence ID" value="ACL81572.1"/>
    <property type="molecule type" value="Genomic_DNA"/>
</dbReference>
<dbReference type="EMBL" id="FJ542375">
    <property type="protein sequence ID" value="ACL81573.1"/>
    <property type="molecule type" value="Genomic_DNA"/>
</dbReference>
<dbReference type="EMBL" id="FJ542376">
    <property type="protein sequence ID" value="ACL81574.1"/>
    <property type="molecule type" value="Genomic_DNA"/>
</dbReference>
<dbReference type="EMBL" id="FJ542377">
    <property type="protein sequence ID" value="ACL81575.1"/>
    <property type="molecule type" value="Genomic_DNA"/>
</dbReference>
<dbReference type="EMBL" id="FJ542378">
    <property type="protein sequence ID" value="ACL81576.1"/>
    <property type="molecule type" value="Genomic_DNA"/>
</dbReference>
<dbReference type="EMBL" id="FJ542379">
    <property type="protein sequence ID" value="ACL81577.1"/>
    <property type="molecule type" value="Genomic_DNA"/>
</dbReference>
<dbReference type="EMBL" id="FJ542380">
    <property type="protein sequence ID" value="ACL81578.1"/>
    <property type="molecule type" value="Genomic_DNA"/>
</dbReference>
<dbReference type="EMBL" id="FJ542381">
    <property type="protein sequence ID" value="ACL81579.1"/>
    <property type="molecule type" value="Genomic_DNA"/>
</dbReference>
<dbReference type="EMBL" id="FJ542382">
    <property type="protein sequence ID" value="ACL81580.1"/>
    <property type="molecule type" value="Genomic_DNA"/>
</dbReference>
<dbReference type="EMBL" id="FJ542383">
    <property type="protein sequence ID" value="ACL81581.1"/>
    <property type="molecule type" value="Genomic_DNA"/>
</dbReference>
<dbReference type="EMBL" id="FJ542384">
    <property type="protein sequence ID" value="ACL81582.1"/>
    <property type="molecule type" value="Genomic_DNA"/>
</dbReference>
<dbReference type="EMBL" id="FJ542385">
    <property type="protein sequence ID" value="ACL81583.1"/>
    <property type="molecule type" value="Genomic_DNA"/>
</dbReference>
<dbReference type="EMBL" id="FJ542386">
    <property type="protein sequence ID" value="ACL81584.1"/>
    <property type="molecule type" value="Genomic_DNA"/>
</dbReference>
<dbReference type="EMBL" id="FJ542387">
    <property type="protein sequence ID" value="ACL81585.1"/>
    <property type="molecule type" value="Genomic_DNA"/>
</dbReference>
<dbReference type="EMBL" id="FJ542388">
    <property type="protein sequence ID" value="ACL81586.1"/>
    <property type="molecule type" value="Genomic_DNA"/>
</dbReference>
<dbReference type="EMBL" id="FJ542389">
    <property type="protein sequence ID" value="ACL81587.1"/>
    <property type="molecule type" value="Genomic_DNA"/>
</dbReference>
<dbReference type="EMBL" id="FJ542390">
    <property type="protein sequence ID" value="ACL81588.1"/>
    <property type="molecule type" value="Genomic_DNA"/>
</dbReference>
<dbReference type="EMBL" id="FJ542391">
    <property type="protein sequence ID" value="ACL81589.1"/>
    <property type="molecule type" value="Genomic_DNA"/>
</dbReference>
<dbReference type="EMBL" id="FJ542392">
    <property type="protein sequence ID" value="ACL81590.1"/>
    <property type="molecule type" value="Genomic_DNA"/>
</dbReference>
<dbReference type="EMBL" id="FJ542393">
    <property type="protein sequence ID" value="ACL81591.1"/>
    <property type="molecule type" value="Genomic_DNA"/>
</dbReference>
<dbReference type="EMBL" id="FJ542394">
    <property type="protein sequence ID" value="ACL81592.1"/>
    <property type="molecule type" value="Genomic_DNA"/>
</dbReference>
<dbReference type="EMBL" id="FJ542395">
    <property type="protein sequence ID" value="ACL81593.1"/>
    <property type="molecule type" value="Genomic_DNA"/>
</dbReference>
<dbReference type="EMBL" id="FJ542396">
    <property type="protein sequence ID" value="ACL81594.1"/>
    <property type="molecule type" value="Genomic_DNA"/>
</dbReference>
<dbReference type="EMBL" id="FJ542397">
    <property type="protein sequence ID" value="ACL81595.1"/>
    <property type="molecule type" value="Genomic_DNA"/>
</dbReference>
<dbReference type="EMBL" id="FJ542398">
    <property type="protein sequence ID" value="ACL81596.1"/>
    <property type="molecule type" value="Genomic_DNA"/>
</dbReference>
<dbReference type="EMBL" id="FJ542399">
    <property type="protein sequence ID" value="ACL81597.1"/>
    <property type="molecule type" value="Genomic_DNA"/>
</dbReference>
<dbReference type="EMBL" id="FJ542400">
    <property type="protein sequence ID" value="ACL81598.1"/>
    <property type="molecule type" value="Genomic_DNA"/>
</dbReference>
<dbReference type="EMBL" id="FJ542401">
    <property type="protein sequence ID" value="ACL81599.1"/>
    <property type="molecule type" value="Genomic_DNA"/>
</dbReference>
<dbReference type="EMBL" id="FJ542402">
    <property type="protein sequence ID" value="ACL81600.1"/>
    <property type="molecule type" value="Genomic_DNA"/>
</dbReference>
<dbReference type="EMBL" id="FJ542403">
    <property type="protein sequence ID" value="ACL81601.1"/>
    <property type="molecule type" value="Genomic_DNA"/>
</dbReference>
<dbReference type="EMBL" id="FJ542404">
    <property type="protein sequence ID" value="ACL81602.1"/>
    <property type="molecule type" value="Genomic_DNA"/>
</dbReference>
<dbReference type="EMBL" id="FJ542405">
    <property type="protein sequence ID" value="ACL81603.1"/>
    <property type="molecule type" value="Genomic_DNA"/>
</dbReference>
<dbReference type="EMBL" id="FJ542406">
    <property type="protein sequence ID" value="ACL81604.1"/>
    <property type="molecule type" value="Genomic_DNA"/>
</dbReference>
<dbReference type="EMBL" id="FJ542407">
    <property type="protein sequence ID" value="ACL81605.1"/>
    <property type="molecule type" value="Genomic_DNA"/>
</dbReference>
<dbReference type="EMBL" id="FJ542408">
    <property type="protein sequence ID" value="ACL81606.1"/>
    <property type="molecule type" value="Genomic_DNA"/>
</dbReference>
<dbReference type="EMBL" id="FJ542409">
    <property type="protein sequence ID" value="ACL81607.1"/>
    <property type="molecule type" value="Genomic_DNA"/>
</dbReference>
<dbReference type="EMBL" id="FJ542410">
    <property type="protein sequence ID" value="ACL81608.1"/>
    <property type="molecule type" value="Genomic_DNA"/>
</dbReference>
<dbReference type="EMBL" id="FJ542411">
    <property type="protein sequence ID" value="ACL81609.1"/>
    <property type="molecule type" value="Genomic_DNA"/>
</dbReference>
<dbReference type="EMBL" id="FJ542412">
    <property type="protein sequence ID" value="ACL81610.1"/>
    <property type="molecule type" value="Genomic_DNA"/>
</dbReference>
<dbReference type="EMBL" id="FJ542413">
    <property type="protein sequence ID" value="ACL81611.1"/>
    <property type="molecule type" value="Genomic_DNA"/>
</dbReference>
<dbReference type="EMBL" id="FJ542414">
    <property type="protein sequence ID" value="ACL81612.1"/>
    <property type="molecule type" value="Genomic_DNA"/>
</dbReference>
<dbReference type="EMBL" id="FJ542415">
    <property type="protein sequence ID" value="ACL81613.1"/>
    <property type="molecule type" value="Genomic_DNA"/>
</dbReference>
<dbReference type="EMBL" id="FJ542416">
    <property type="protein sequence ID" value="ACL81614.1"/>
    <property type="molecule type" value="Genomic_DNA"/>
</dbReference>
<dbReference type="EMBL" id="FJ542417">
    <property type="protein sequence ID" value="ACL81615.1"/>
    <property type="molecule type" value="Genomic_DNA"/>
</dbReference>
<dbReference type="EMBL" id="FJ542418">
    <property type="protein sequence ID" value="ACL81616.1"/>
    <property type="molecule type" value="Genomic_DNA"/>
</dbReference>
<dbReference type="EMBL" id="FJ542419">
    <property type="protein sequence ID" value="ACL81617.1"/>
    <property type="molecule type" value="Genomic_DNA"/>
</dbReference>
<dbReference type="EMBL" id="FJ542420">
    <property type="protein sequence ID" value="ACL81618.1"/>
    <property type="molecule type" value="Genomic_DNA"/>
</dbReference>
<dbReference type="EMBL" id="FJ542421">
    <property type="protein sequence ID" value="ACL81619.1"/>
    <property type="molecule type" value="Genomic_DNA"/>
</dbReference>
<dbReference type="EMBL" id="FJ542422">
    <property type="protein sequence ID" value="ACL81620.1"/>
    <property type="molecule type" value="Genomic_DNA"/>
</dbReference>
<dbReference type="EMBL" id="FJ542423">
    <property type="protein sequence ID" value="ACL81621.1"/>
    <property type="molecule type" value="Genomic_DNA"/>
</dbReference>
<dbReference type="EMBL" id="FJ542424">
    <property type="protein sequence ID" value="ACL81622.1"/>
    <property type="molecule type" value="Genomic_DNA"/>
</dbReference>
<dbReference type="EMBL" id="FJ542425">
    <property type="protein sequence ID" value="ACL81623.1"/>
    <property type="molecule type" value="Genomic_DNA"/>
</dbReference>
<dbReference type="EMBL" id="FJ542426">
    <property type="protein sequence ID" value="ACL81624.1"/>
    <property type="molecule type" value="Genomic_DNA"/>
</dbReference>
<dbReference type="EMBL" id="FJ542427">
    <property type="protein sequence ID" value="ACL81625.1"/>
    <property type="molecule type" value="Genomic_DNA"/>
</dbReference>
<dbReference type="EMBL" id="FJ542428">
    <property type="protein sequence ID" value="ACL81626.1"/>
    <property type="molecule type" value="Genomic_DNA"/>
</dbReference>
<dbReference type="EMBL" id="FJ542429">
    <property type="protein sequence ID" value="ACL81627.1"/>
    <property type="molecule type" value="Genomic_DNA"/>
</dbReference>
<dbReference type="EMBL" id="FJ542430">
    <property type="protein sequence ID" value="ACL81628.1"/>
    <property type="molecule type" value="Genomic_DNA"/>
</dbReference>
<dbReference type="EMBL" id="FJ542431">
    <property type="protein sequence ID" value="ACL81629.1"/>
    <property type="molecule type" value="Genomic_DNA"/>
</dbReference>
<dbReference type="EMBL" id="FJ542432">
    <property type="protein sequence ID" value="ACL81630.1"/>
    <property type="molecule type" value="Genomic_DNA"/>
</dbReference>
<dbReference type="EMBL" id="FJ542433">
    <property type="protein sequence ID" value="ACL81631.1"/>
    <property type="molecule type" value="Genomic_DNA"/>
</dbReference>
<dbReference type="EMBL" id="FJ542434">
    <property type="protein sequence ID" value="ACL81632.1"/>
    <property type="molecule type" value="Genomic_DNA"/>
</dbReference>
<dbReference type="EMBL" id="FJ542435">
    <property type="protein sequence ID" value="ACL81633.1"/>
    <property type="molecule type" value="Genomic_DNA"/>
</dbReference>
<dbReference type="EMBL" id="FJ542436">
    <property type="protein sequence ID" value="ACL81634.1"/>
    <property type="molecule type" value="Genomic_DNA"/>
</dbReference>
<dbReference type="EMBL" id="FJ542437">
    <property type="protein sequence ID" value="ACL81635.1"/>
    <property type="molecule type" value="Genomic_DNA"/>
</dbReference>
<dbReference type="EMBL" id="FJ542438">
    <property type="protein sequence ID" value="ACL81636.1"/>
    <property type="molecule type" value="Genomic_DNA"/>
</dbReference>
<dbReference type="EMBL" id="FJ542439">
    <property type="protein sequence ID" value="ACL81637.1"/>
    <property type="molecule type" value="Genomic_DNA"/>
</dbReference>
<dbReference type="EMBL" id="FJ542440">
    <property type="protein sequence ID" value="ACL81638.1"/>
    <property type="molecule type" value="Genomic_DNA"/>
</dbReference>
<dbReference type="EMBL" id="FJ542441">
    <property type="protein sequence ID" value="ACL81639.1"/>
    <property type="molecule type" value="Genomic_DNA"/>
</dbReference>
<dbReference type="EMBL" id="FJ542442">
    <property type="protein sequence ID" value="ACL81640.1"/>
    <property type="molecule type" value="Genomic_DNA"/>
</dbReference>
<dbReference type="EMBL" id="FJ542443">
    <property type="protein sequence ID" value="ACL81641.1"/>
    <property type="molecule type" value="Genomic_DNA"/>
</dbReference>
<dbReference type="EMBL" id="FJ542444">
    <property type="protein sequence ID" value="ACL81642.1"/>
    <property type="molecule type" value="Genomic_DNA"/>
</dbReference>
<dbReference type="EMBL" id="FJ542445">
    <property type="protein sequence ID" value="ACL81643.1"/>
    <property type="molecule type" value="Genomic_DNA"/>
</dbReference>
<dbReference type="EMBL" id="FJ542446">
    <property type="protein sequence ID" value="ACL81644.1"/>
    <property type="molecule type" value="Genomic_DNA"/>
</dbReference>
<dbReference type="EMBL" id="FJ542447">
    <property type="protein sequence ID" value="ACL81645.1"/>
    <property type="molecule type" value="Genomic_DNA"/>
</dbReference>
<dbReference type="EMBL" id="FJ542448">
    <property type="protein sequence ID" value="ACL81646.1"/>
    <property type="molecule type" value="Genomic_DNA"/>
</dbReference>
<dbReference type="EMBL" id="FJ542449">
    <property type="protein sequence ID" value="ACL81647.1"/>
    <property type="molecule type" value="Genomic_DNA"/>
</dbReference>
<dbReference type="EMBL" id="FJ542450">
    <property type="protein sequence ID" value="ACL81648.1"/>
    <property type="molecule type" value="Genomic_DNA"/>
</dbReference>
<dbReference type="EMBL" id="FJ542451">
    <property type="protein sequence ID" value="ACL81649.1"/>
    <property type="molecule type" value="Genomic_DNA"/>
</dbReference>
<dbReference type="EMBL" id="FJ542452">
    <property type="protein sequence ID" value="ACL81650.1"/>
    <property type="molecule type" value="Genomic_DNA"/>
</dbReference>
<dbReference type="EMBL" id="FJ542453">
    <property type="protein sequence ID" value="ACL81651.1"/>
    <property type="molecule type" value="Genomic_DNA"/>
</dbReference>
<dbReference type="EMBL" id="FJ542454">
    <property type="protein sequence ID" value="ACL81652.1"/>
    <property type="molecule type" value="Genomic_DNA"/>
</dbReference>
<dbReference type="EMBL" id="FJ542455">
    <property type="protein sequence ID" value="ACL81653.1"/>
    <property type="molecule type" value="Genomic_DNA"/>
</dbReference>
<dbReference type="EMBL" id="FJ542456">
    <property type="protein sequence ID" value="ACL81654.1"/>
    <property type="molecule type" value="Genomic_DNA"/>
</dbReference>
<dbReference type="EMBL" id="FJ542457">
    <property type="protein sequence ID" value="ACL81655.1"/>
    <property type="molecule type" value="Genomic_DNA"/>
</dbReference>
<dbReference type="EMBL" id="FJ542458">
    <property type="protein sequence ID" value="ACL81656.1"/>
    <property type="molecule type" value="Genomic_DNA"/>
</dbReference>
<dbReference type="EMBL" id="FJ542459">
    <property type="protein sequence ID" value="ACL81657.1"/>
    <property type="molecule type" value="Genomic_DNA"/>
</dbReference>
<dbReference type="EMBL" id="FJ542460">
    <property type="protein sequence ID" value="ACL81658.1"/>
    <property type="molecule type" value="Genomic_DNA"/>
</dbReference>
<dbReference type="EMBL" id="FJ542461">
    <property type="protein sequence ID" value="ACL81659.1"/>
    <property type="molecule type" value="Genomic_DNA"/>
</dbReference>
<dbReference type="EMBL" id="FJ542462">
    <property type="protein sequence ID" value="ACL81660.1"/>
    <property type="molecule type" value="Genomic_DNA"/>
</dbReference>
<dbReference type="EMBL" id="FJ542463">
    <property type="protein sequence ID" value="ACL81661.1"/>
    <property type="molecule type" value="Genomic_DNA"/>
</dbReference>
<dbReference type="EMBL" id="FJ542464">
    <property type="protein sequence ID" value="ACL81662.1"/>
    <property type="molecule type" value="Genomic_DNA"/>
</dbReference>
<dbReference type="EMBL" id="FJ542465">
    <property type="protein sequence ID" value="ACL81663.1"/>
    <property type="molecule type" value="Genomic_DNA"/>
</dbReference>
<dbReference type="EMBL" id="FJ542466">
    <property type="protein sequence ID" value="ACL81664.1"/>
    <property type="molecule type" value="Genomic_DNA"/>
</dbReference>
<dbReference type="EMBL" id="FJ542467">
    <property type="protein sequence ID" value="ACL81665.1"/>
    <property type="molecule type" value="Genomic_DNA"/>
</dbReference>
<dbReference type="EMBL" id="FJ542468">
    <property type="protein sequence ID" value="ACL81666.1"/>
    <property type="molecule type" value="Genomic_DNA"/>
</dbReference>
<dbReference type="EMBL" id="FJ542469">
    <property type="protein sequence ID" value="ACL81667.1"/>
    <property type="molecule type" value="Genomic_DNA"/>
</dbReference>
<dbReference type="EMBL" id="FJ542470">
    <property type="protein sequence ID" value="ACL81668.1"/>
    <property type="molecule type" value="Genomic_DNA"/>
</dbReference>
<dbReference type="EMBL" id="FJ542471">
    <property type="protein sequence ID" value="ACL81669.1"/>
    <property type="molecule type" value="Genomic_DNA"/>
</dbReference>
<dbReference type="EMBL" id="FJ542472">
    <property type="protein sequence ID" value="ACL81670.1"/>
    <property type="molecule type" value="Genomic_DNA"/>
</dbReference>
<dbReference type="EMBL" id="FJ542473">
    <property type="protein sequence ID" value="ACL81671.1"/>
    <property type="molecule type" value="Genomic_DNA"/>
</dbReference>
<dbReference type="EMBL" id="FJ542474">
    <property type="protein sequence ID" value="ACL81672.1"/>
    <property type="molecule type" value="Genomic_DNA"/>
</dbReference>
<dbReference type="EMBL" id="FJ542475">
    <property type="protein sequence ID" value="ACL81673.1"/>
    <property type="molecule type" value="Genomic_DNA"/>
</dbReference>
<dbReference type="EMBL" id="FJ542476">
    <property type="protein sequence ID" value="ACL81674.1"/>
    <property type="molecule type" value="Genomic_DNA"/>
</dbReference>
<dbReference type="EMBL" id="FJ542477">
    <property type="protein sequence ID" value="ACL81675.1"/>
    <property type="molecule type" value="Genomic_DNA"/>
</dbReference>
<dbReference type="EMBL" id="FJ542478">
    <property type="protein sequence ID" value="ACL81676.1"/>
    <property type="molecule type" value="Genomic_DNA"/>
</dbReference>
<dbReference type="EMBL" id="FJ542479">
    <property type="protein sequence ID" value="ACL81677.1"/>
    <property type="molecule type" value="Genomic_DNA"/>
</dbReference>
<dbReference type="EMBL" id="FJ542480">
    <property type="protein sequence ID" value="ACL81678.1"/>
    <property type="molecule type" value="Genomic_DNA"/>
</dbReference>
<dbReference type="EMBL" id="FJ542481">
    <property type="protein sequence ID" value="ACL81679.1"/>
    <property type="molecule type" value="Genomic_DNA"/>
</dbReference>
<dbReference type="EMBL" id="FJ542482">
    <property type="protein sequence ID" value="ACL81680.1"/>
    <property type="molecule type" value="Genomic_DNA"/>
</dbReference>
<dbReference type="EMBL" id="FJ542483">
    <property type="protein sequence ID" value="ACL81681.1"/>
    <property type="molecule type" value="Genomic_DNA"/>
</dbReference>
<dbReference type="EMBL" id="FJ542484">
    <property type="protein sequence ID" value="ACL81682.1"/>
    <property type="molecule type" value="Genomic_DNA"/>
</dbReference>
<dbReference type="EMBL" id="FJ542485">
    <property type="protein sequence ID" value="ACL81683.1"/>
    <property type="molecule type" value="Genomic_DNA"/>
</dbReference>
<dbReference type="EMBL" id="FJ542486">
    <property type="protein sequence ID" value="ACL81684.1"/>
    <property type="molecule type" value="Genomic_DNA"/>
</dbReference>
<dbReference type="EMBL" id="FJ542487">
    <property type="protein sequence ID" value="ACL81685.1"/>
    <property type="molecule type" value="Genomic_DNA"/>
</dbReference>
<dbReference type="EMBL" id="FJ542488">
    <property type="protein sequence ID" value="ACL81686.1"/>
    <property type="molecule type" value="Genomic_DNA"/>
</dbReference>
<dbReference type="EMBL" id="FJ542489">
    <property type="protein sequence ID" value="ACL81687.1"/>
    <property type="molecule type" value="Genomic_DNA"/>
</dbReference>
<dbReference type="EMBL" id="FJ542490">
    <property type="protein sequence ID" value="ACL81688.1"/>
    <property type="molecule type" value="Genomic_DNA"/>
</dbReference>
<dbReference type="EMBL" id="FJ542491">
    <property type="protein sequence ID" value="ACL81689.1"/>
    <property type="molecule type" value="Genomic_DNA"/>
</dbReference>
<dbReference type="EMBL" id="FJ542492">
    <property type="protein sequence ID" value="ACL81690.1"/>
    <property type="molecule type" value="Genomic_DNA"/>
</dbReference>
<dbReference type="EMBL" id="FJ542493">
    <property type="protein sequence ID" value="ACL81691.1"/>
    <property type="molecule type" value="Genomic_DNA"/>
</dbReference>
<dbReference type="EMBL" id="FJ542494">
    <property type="protein sequence ID" value="ACL81692.1"/>
    <property type="molecule type" value="Genomic_DNA"/>
</dbReference>
<dbReference type="EMBL" id="FJ542495">
    <property type="protein sequence ID" value="ACL81693.1"/>
    <property type="molecule type" value="Genomic_DNA"/>
</dbReference>
<dbReference type="EMBL" id="FJ542496">
    <property type="protein sequence ID" value="ACL81694.1"/>
    <property type="molecule type" value="Genomic_DNA"/>
</dbReference>
<dbReference type="EMBL" id="FJ542497">
    <property type="protein sequence ID" value="ACL81695.1"/>
    <property type="molecule type" value="Genomic_DNA"/>
</dbReference>
<dbReference type="EMBL" id="FJ542498">
    <property type="protein sequence ID" value="ACL81696.1"/>
    <property type="molecule type" value="Genomic_DNA"/>
</dbReference>
<dbReference type="EMBL" id="FJ542499">
    <property type="protein sequence ID" value="ACL81697.1"/>
    <property type="molecule type" value="Genomic_DNA"/>
</dbReference>
<dbReference type="EMBL" id="FJ542500">
    <property type="protein sequence ID" value="ACL81698.1"/>
    <property type="molecule type" value="Genomic_DNA"/>
</dbReference>
<dbReference type="EMBL" id="FJ542501">
    <property type="protein sequence ID" value="ACL81699.1"/>
    <property type="molecule type" value="Genomic_DNA"/>
</dbReference>
<dbReference type="EMBL" id="FJ542502">
    <property type="protein sequence ID" value="ACL81700.1"/>
    <property type="molecule type" value="Genomic_DNA"/>
</dbReference>
<dbReference type="EMBL" id="FJ542503">
    <property type="protein sequence ID" value="ACL81701.1"/>
    <property type="molecule type" value="Genomic_DNA"/>
</dbReference>
<dbReference type="EMBL" id="FJ542504">
    <property type="protein sequence ID" value="ACL81702.1"/>
    <property type="molecule type" value="Genomic_DNA"/>
</dbReference>
<dbReference type="EMBL" id="FJ542505">
    <property type="protein sequence ID" value="ACL81703.1"/>
    <property type="molecule type" value="Genomic_DNA"/>
</dbReference>
<dbReference type="EMBL" id="FJ542506">
    <property type="protein sequence ID" value="ACL81704.1"/>
    <property type="molecule type" value="Genomic_DNA"/>
</dbReference>
<dbReference type="EMBL" id="FJ542507">
    <property type="protein sequence ID" value="ACL81705.1"/>
    <property type="molecule type" value="Genomic_DNA"/>
</dbReference>
<dbReference type="EMBL" id="FJ542508">
    <property type="protein sequence ID" value="ACL81706.1"/>
    <property type="molecule type" value="Genomic_DNA"/>
</dbReference>
<dbReference type="EMBL" id="FJ542509">
    <property type="protein sequence ID" value="ACL81707.1"/>
    <property type="molecule type" value="Genomic_DNA"/>
</dbReference>
<dbReference type="EMBL" id="FJ542510">
    <property type="protein sequence ID" value="ACL81708.1"/>
    <property type="molecule type" value="Genomic_DNA"/>
</dbReference>
<dbReference type="EMBL" id="FJ542511">
    <property type="protein sequence ID" value="ACL81709.1"/>
    <property type="molecule type" value="Genomic_DNA"/>
</dbReference>
<dbReference type="EMBL" id="FJ542512">
    <property type="protein sequence ID" value="ACL81710.1"/>
    <property type="molecule type" value="Genomic_DNA"/>
</dbReference>
<dbReference type="EMBL" id="FJ542513">
    <property type="protein sequence ID" value="ACL81711.1"/>
    <property type="molecule type" value="Genomic_DNA"/>
</dbReference>
<dbReference type="EMBL" id="FJ542514">
    <property type="protein sequence ID" value="ACL81712.1"/>
    <property type="molecule type" value="Genomic_DNA"/>
</dbReference>
<dbReference type="EMBL" id="FJ542515">
    <property type="protein sequence ID" value="ACL81713.1"/>
    <property type="molecule type" value="Genomic_DNA"/>
</dbReference>
<dbReference type="EMBL" id="FJ542516">
    <property type="protein sequence ID" value="ACL81714.1"/>
    <property type="molecule type" value="Genomic_DNA"/>
</dbReference>
<dbReference type="EMBL" id="FJ542517">
    <property type="protein sequence ID" value="ACL81715.1"/>
    <property type="molecule type" value="Genomic_DNA"/>
</dbReference>
<dbReference type="EMBL" id="FJ542518">
    <property type="protein sequence ID" value="ACL81716.1"/>
    <property type="molecule type" value="Genomic_DNA"/>
</dbReference>
<dbReference type="EMBL" id="FJ542519">
    <property type="protein sequence ID" value="ACL81717.1"/>
    <property type="molecule type" value="Genomic_DNA"/>
</dbReference>
<dbReference type="EMBL" id="FJ542520">
    <property type="protein sequence ID" value="ACL81718.1"/>
    <property type="molecule type" value="Genomic_DNA"/>
</dbReference>
<dbReference type="EMBL" id="FJ542521">
    <property type="protein sequence ID" value="ACL81719.1"/>
    <property type="molecule type" value="Genomic_DNA"/>
</dbReference>
<dbReference type="EMBL" id="FJ542522">
    <property type="protein sequence ID" value="ACL81720.1"/>
    <property type="molecule type" value="Genomic_DNA"/>
</dbReference>
<dbReference type="EMBL" id="FJ542523">
    <property type="protein sequence ID" value="ACL81721.1"/>
    <property type="molecule type" value="Genomic_DNA"/>
</dbReference>
<dbReference type="EMBL" id="FJ542524">
    <property type="protein sequence ID" value="ACL81722.1"/>
    <property type="molecule type" value="Genomic_DNA"/>
</dbReference>
<dbReference type="EMBL" id="FJ542525">
    <property type="protein sequence ID" value="ACL81723.1"/>
    <property type="molecule type" value="Genomic_DNA"/>
</dbReference>
<dbReference type="EMBL" id="FJ542526">
    <property type="protein sequence ID" value="ACL81724.1"/>
    <property type="molecule type" value="Genomic_DNA"/>
</dbReference>
<dbReference type="EMBL" id="FJ542527">
    <property type="protein sequence ID" value="ACL81725.1"/>
    <property type="molecule type" value="Genomic_DNA"/>
</dbReference>
<dbReference type="EMBL" id="FJ542528">
    <property type="protein sequence ID" value="ACL81726.1"/>
    <property type="molecule type" value="Genomic_DNA"/>
</dbReference>
<dbReference type="EMBL" id="FJ542529">
    <property type="protein sequence ID" value="ACL81727.1"/>
    <property type="molecule type" value="Genomic_DNA"/>
</dbReference>
<dbReference type="EMBL" id="FJ542530">
    <property type="protein sequence ID" value="ACL81728.1"/>
    <property type="molecule type" value="Genomic_DNA"/>
</dbReference>
<dbReference type="EMBL" id="FJ542531">
    <property type="protein sequence ID" value="ACL81729.1"/>
    <property type="molecule type" value="Genomic_DNA"/>
</dbReference>
<dbReference type="EMBL" id="FJ542532">
    <property type="protein sequence ID" value="ACL81730.1"/>
    <property type="molecule type" value="Genomic_DNA"/>
</dbReference>
<dbReference type="EMBL" id="FJ542533">
    <property type="protein sequence ID" value="ACL81731.1"/>
    <property type="molecule type" value="Genomic_DNA"/>
</dbReference>
<dbReference type="EMBL" id="FJ542534">
    <property type="protein sequence ID" value="ACL81732.1"/>
    <property type="molecule type" value="Genomic_DNA"/>
</dbReference>
<dbReference type="EMBL" id="FJ542535">
    <property type="protein sequence ID" value="ACL81733.1"/>
    <property type="molecule type" value="Genomic_DNA"/>
</dbReference>
<dbReference type="EMBL" id="FJ542536">
    <property type="protein sequence ID" value="ACL81734.1"/>
    <property type="molecule type" value="Genomic_DNA"/>
</dbReference>
<dbReference type="EMBL" id="FJ542537">
    <property type="protein sequence ID" value="ACL81735.1"/>
    <property type="molecule type" value="Genomic_DNA"/>
</dbReference>
<dbReference type="EMBL" id="FJ542538">
    <property type="protein sequence ID" value="ACL81736.1"/>
    <property type="molecule type" value="Genomic_DNA"/>
</dbReference>
<dbReference type="EMBL" id="FJ542539">
    <property type="protein sequence ID" value="ACL81737.1"/>
    <property type="molecule type" value="Genomic_DNA"/>
</dbReference>
<dbReference type="EMBL" id="FJ542541">
    <property type="protein sequence ID" value="ACL81739.1"/>
    <property type="molecule type" value="Genomic_DNA"/>
</dbReference>
<dbReference type="EMBL" id="FJ542540">
    <property type="protein sequence ID" value="ACL81738.1"/>
    <property type="molecule type" value="Genomic_DNA"/>
</dbReference>
<dbReference type="EMBL" id="FJ542542">
    <property type="protein sequence ID" value="ACL81740.1"/>
    <property type="molecule type" value="Genomic_DNA"/>
</dbReference>
<dbReference type="EMBL" id="FJ542543">
    <property type="protein sequence ID" value="ACL81741.1"/>
    <property type="molecule type" value="Genomic_DNA"/>
</dbReference>
<dbReference type="EMBL" id="FJ542544">
    <property type="protein sequence ID" value="ACL81742.1"/>
    <property type="molecule type" value="Genomic_DNA"/>
</dbReference>
<dbReference type="EMBL" id="FJ542545">
    <property type="protein sequence ID" value="ACL81743.1"/>
    <property type="molecule type" value="Genomic_DNA"/>
</dbReference>
<dbReference type="EMBL" id="FJ542546">
    <property type="protein sequence ID" value="ACL81744.1"/>
    <property type="molecule type" value="Genomic_DNA"/>
</dbReference>
<dbReference type="EMBL" id="FJ542547">
    <property type="protein sequence ID" value="ACL81745.1"/>
    <property type="molecule type" value="Genomic_DNA"/>
</dbReference>
<dbReference type="EMBL" id="FJ542548">
    <property type="protein sequence ID" value="ACL81746.1"/>
    <property type="molecule type" value="Genomic_DNA"/>
</dbReference>
<dbReference type="EMBL" id="FJ542549">
    <property type="protein sequence ID" value="ACL81747.1"/>
    <property type="molecule type" value="Genomic_DNA"/>
</dbReference>
<dbReference type="EMBL" id="FJ542550">
    <property type="protein sequence ID" value="ACL81748.1"/>
    <property type="molecule type" value="Genomic_DNA"/>
</dbReference>
<dbReference type="EMBL" id="FJ542551">
    <property type="protein sequence ID" value="ACL81749.1"/>
    <property type="molecule type" value="Genomic_DNA"/>
</dbReference>
<dbReference type="EMBL" id="FJ542552">
    <property type="protein sequence ID" value="ACL81750.1"/>
    <property type="molecule type" value="Genomic_DNA"/>
</dbReference>
<dbReference type="EMBL" id="FJ542563">
    <property type="protein sequence ID" value="ACL81761.1"/>
    <property type="molecule type" value="Genomic_DNA"/>
</dbReference>
<dbReference type="EMBL" id="FJ542564">
    <property type="protein sequence ID" value="ACL81762.1"/>
    <property type="molecule type" value="Genomic_DNA"/>
</dbReference>
<dbReference type="EMBL" id="KU933268">
    <property type="protein sequence ID" value="AOY34827.1"/>
    <property type="molecule type" value="Genomic_DNA"/>
</dbReference>
<dbReference type="EMBL" id="KU933267">
    <property type="protein sequence ID" value="AOY34826.1"/>
    <property type="molecule type" value="Genomic_DNA"/>
</dbReference>
<dbReference type="EMBL" id="AADN05000096">
    <property type="status" value="NOT_ANNOTATED_CDS"/>
    <property type="molecule type" value="Genomic_DNA"/>
</dbReference>
<dbReference type="PIR" id="A93859">
    <property type="entry name" value="LZCH"/>
</dbReference>
<dbReference type="RefSeq" id="NP_990612.2">
    <property type="nucleotide sequence ID" value="NM_205281.2"/>
</dbReference>
<dbReference type="PDB" id="132L">
    <property type="method" value="X-ray"/>
    <property type="resolution" value="1.80 A"/>
    <property type="chains" value="A=19-147"/>
</dbReference>
<dbReference type="PDB" id="193L">
    <property type="method" value="X-ray"/>
    <property type="resolution" value="1.33 A"/>
    <property type="chains" value="A=19-147"/>
</dbReference>
<dbReference type="PDB" id="194L">
    <property type="method" value="X-ray"/>
    <property type="resolution" value="1.40 A"/>
    <property type="chains" value="A=19-147"/>
</dbReference>
<dbReference type="PDB" id="1A2Y">
    <property type="method" value="X-ray"/>
    <property type="resolution" value="1.50 A"/>
    <property type="chains" value="C=19-147"/>
</dbReference>
<dbReference type="PDB" id="1AKI">
    <property type="method" value="X-ray"/>
    <property type="resolution" value="1.50 A"/>
    <property type="chains" value="A=19-147"/>
</dbReference>
<dbReference type="PDB" id="1AT5">
    <property type="method" value="X-ray"/>
    <property type="resolution" value="1.80 A"/>
    <property type="chains" value="A=19-147"/>
</dbReference>
<dbReference type="PDB" id="1AT6">
    <property type="method" value="X-ray"/>
    <property type="resolution" value="1.80 A"/>
    <property type="chains" value="A=19-147"/>
</dbReference>
<dbReference type="PDB" id="1AZF">
    <property type="method" value="X-ray"/>
    <property type="resolution" value="1.80 A"/>
    <property type="chains" value="A=19-147"/>
</dbReference>
<dbReference type="PDB" id="1B0D">
    <property type="method" value="X-ray"/>
    <property type="resolution" value="1.84 A"/>
    <property type="chains" value="A=19-147"/>
</dbReference>
<dbReference type="PDB" id="1B2K">
    <property type="method" value="X-ray"/>
    <property type="resolution" value="1.60 A"/>
    <property type="chains" value="A/B=19-147"/>
</dbReference>
<dbReference type="PDB" id="1BGI">
    <property type="method" value="X-ray"/>
    <property type="resolution" value="1.70 A"/>
    <property type="chains" value="A=19-147"/>
</dbReference>
<dbReference type="PDB" id="1BHZ">
    <property type="method" value="X-ray"/>
    <property type="resolution" value="3.90 A"/>
    <property type="chains" value="A=19-147"/>
</dbReference>
<dbReference type="PDB" id="1BVK">
    <property type="method" value="X-ray"/>
    <property type="resolution" value="2.70 A"/>
    <property type="chains" value="C/F=19-147"/>
</dbReference>
<dbReference type="PDB" id="1BVX">
    <property type="method" value="X-ray"/>
    <property type="resolution" value="1.80 A"/>
    <property type="chains" value="A=19-147"/>
</dbReference>
<dbReference type="PDB" id="1BWH">
    <property type="method" value="X-ray"/>
    <property type="resolution" value="1.80 A"/>
    <property type="chains" value="A=19-147"/>
</dbReference>
<dbReference type="PDB" id="1BWI">
    <property type="method" value="X-ray"/>
    <property type="resolution" value="1.80 A"/>
    <property type="chains" value="A=19-147"/>
</dbReference>
<dbReference type="PDB" id="1BWJ">
    <property type="method" value="X-ray"/>
    <property type="resolution" value="1.80 A"/>
    <property type="chains" value="A=19-147"/>
</dbReference>
<dbReference type="PDB" id="1C08">
    <property type="method" value="X-ray"/>
    <property type="resolution" value="2.30 A"/>
    <property type="chains" value="C=19-147"/>
</dbReference>
<dbReference type="PDB" id="1C10">
    <property type="method" value="X-ray"/>
    <property type="resolution" value="2.03 A"/>
    <property type="chains" value="A=19-147"/>
</dbReference>
<dbReference type="PDB" id="1DPW">
    <property type="method" value="X-ray"/>
    <property type="resolution" value="1.64 A"/>
    <property type="chains" value="A=19-147"/>
</dbReference>
<dbReference type="PDB" id="1DPX">
    <property type="method" value="X-ray"/>
    <property type="resolution" value="1.65 A"/>
    <property type="chains" value="A=19-147"/>
</dbReference>
<dbReference type="PDB" id="1DQJ">
    <property type="method" value="X-ray"/>
    <property type="resolution" value="2.00 A"/>
    <property type="chains" value="C=19-147"/>
</dbReference>
<dbReference type="PDB" id="1E8L">
    <property type="method" value="NMR"/>
    <property type="chains" value="A=19-147"/>
</dbReference>
<dbReference type="PDB" id="1F0W">
    <property type="method" value="X-ray"/>
    <property type="resolution" value="1.90 A"/>
    <property type="chains" value="A=19-147"/>
</dbReference>
<dbReference type="PDB" id="1F10">
    <property type="method" value="X-ray"/>
    <property type="resolution" value="1.70 A"/>
    <property type="chains" value="A=19-147"/>
</dbReference>
<dbReference type="PDB" id="1F3J">
    <property type="method" value="X-ray"/>
    <property type="resolution" value="3.10 A"/>
    <property type="chains" value="P/Q=29-42"/>
</dbReference>
<dbReference type="PDB" id="1FDL">
    <property type="method" value="X-ray"/>
    <property type="resolution" value="2.50 A"/>
    <property type="chains" value="Y=19-147"/>
</dbReference>
<dbReference type="PDB" id="1FLQ">
    <property type="method" value="X-ray"/>
    <property type="resolution" value="1.80 A"/>
    <property type="chains" value="A=19-147"/>
</dbReference>
<dbReference type="PDB" id="1FLU">
    <property type="method" value="X-ray"/>
    <property type="resolution" value="1.78 A"/>
    <property type="chains" value="A=19-147"/>
</dbReference>
<dbReference type="PDB" id="1FLW">
    <property type="method" value="X-ray"/>
    <property type="resolution" value="1.81 A"/>
    <property type="chains" value="A=19-147"/>
</dbReference>
<dbReference type="PDB" id="1FLY">
    <property type="method" value="X-ray"/>
    <property type="resolution" value="1.83 A"/>
    <property type="chains" value="A=19-147"/>
</dbReference>
<dbReference type="PDB" id="1FN5">
    <property type="method" value="X-ray"/>
    <property type="resolution" value="1.78 A"/>
    <property type="chains" value="A=19-147"/>
</dbReference>
<dbReference type="PDB" id="1G7H">
    <property type="method" value="X-ray"/>
    <property type="resolution" value="1.85 A"/>
    <property type="chains" value="C=19-147"/>
</dbReference>
<dbReference type="PDB" id="1G7I">
    <property type="method" value="X-ray"/>
    <property type="resolution" value="1.80 A"/>
    <property type="chains" value="C=19-147"/>
</dbReference>
<dbReference type="PDB" id="1G7J">
    <property type="method" value="X-ray"/>
    <property type="resolution" value="1.75 A"/>
    <property type="chains" value="C=19-147"/>
</dbReference>
<dbReference type="PDB" id="1G7L">
    <property type="method" value="X-ray"/>
    <property type="resolution" value="2.00 A"/>
    <property type="chains" value="C=19-147"/>
</dbReference>
<dbReference type="PDB" id="1G7M">
    <property type="method" value="X-ray"/>
    <property type="resolution" value="1.90 A"/>
    <property type="chains" value="C=19-147"/>
</dbReference>
<dbReference type="PDB" id="1GPQ">
    <property type="method" value="X-ray"/>
    <property type="resolution" value="1.60 A"/>
    <property type="chains" value="C/D=19-147"/>
</dbReference>
<dbReference type="PDB" id="1GWD">
    <property type="method" value="X-ray"/>
    <property type="resolution" value="1.77 A"/>
    <property type="chains" value="A=19-147"/>
</dbReference>
<dbReference type="PDB" id="1GXV">
    <property type="method" value="NMR"/>
    <property type="chains" value="2=19-147"/>
</dbReference>
<dbReference type="PDB" id="1GXX">
    <property type="method" value="NMR"/>
    <property type="chains" value="A=19-147"/>
</dbReference>
<dbReference type="PDB" id="1H6M">
    <property type="method" value="X-ray"/>
    <property type="resolution" value="1.64 A"/>
    <property type="chains" value="A=19-147"/>
</dbReference>
<dbReference type="PDB" id="1H87">
    <property type="method" value="X-ray"/>
    <property type="resolution" value="1.72 A"/>
    <property type="chains" value="A=19-147"/>
</dbReference>
<dbReference type="PDB" id="1HC0">
    <property type="method" value="X-ray"/>
    <property type="resolution" value="1.82 A"/>
    <property type="chains" value="A=19-147"/>
</dbReference>
<dbReference type="PDB" id="1HEL">
    <property type="method" value="X-ray"/>
    <property type="resolution" value="1.70 A"/>
    <property type="chains" value="A=19-147"/>
</dbReference>
<dbReference type="PDB" id="1HEM">
    <property type="method" value="X-ray"/>
    <property type="resolution" value="1.80 A"/>
    <property type="chains" value="A=19-147"/>
</dbReference>
<dbReference type="PDB" id="1HEN">
    <property type="method" value="X-ray"/>
    <property type="resolution" value="1.80 A"/>
    <property type="chains" value="A=19-147"/>
</dbReference>
<dbReference type="PDB" id="1HEO">
    <property type="method" value="X-ray"/>
    <property type="resolution" value="1.80 A"/>
    <property type="chains" value="A=19-147"/>
</dbReference>
<dbReference type="PDB" id="1HEP">
    <property type="method" value="X-ray"/>
    <property type="resolution" value="1.80 A"/>
    <property type="chains" value="A=19-147"/>
</dbReference>
<dbReference type="PDB" id="1HEQ">
    <property type="method" value="X-ray"/>
    <property type="resolution" value="1.80 A"/>
    <property type="chains" value="A=19-147"/>
</dbReference>
<dbReference type="PDB" id="1HER">
    <property type="method" value="X-ray"/>
    <property type="resolution" value="1.80 A"/>
    <property type="chains" value="A=19-147"/>
</dbReference>
<dbReference type="PDB" id="1HEW">
    <property type="method" value="X-ray"/>
    <property type="resolution" value="1.75 A"/>
    <property type="chains" value="A=19-147"/>
</dbReference>
<dbReference type="PDB" id="1HF4">
    <property type="method" value="X-ray"/>
    <property type="resolution" value="1.45 A"/>
    <property type="chains" value="A/B=19-147"/>
</dbReference>
<dbReference type="PDB" id="1HSW">
    <property type="method" value="X-ray"/>
    <property type="resolution" value="2.00 A"/>
    <property type="chains" value="A=19-147"/>
</dbReference>
<dbReference type="PDB" id="1HSX">
    <property type="method" value="X-ray"/>
    <property type="resolution" value="1.90 A"/>
    <property type="chains" value="A=19-147"/>
</dbReference>
<dbReference type="PDB" id="1IC4">
    <property type="method" value="X-ray"/>
    <property type="resolution" value="2.50 A"/>
    <property type="chains" value="Y=19-147"/>
</dbReference>
<dbReference type="PDB" id="1IC5">
    <property type="method" value="X-ray"/>
    <property type="resolution" value="2.30 A"/>
    <property type="chains" value="Y=19-147"/>
</dbReference>
<dbReference type="PDB" id="1IC7">
    <property type="method" value="X-ray"/>
    <property type="resolution" value="2.10 A"/>
    <property type="chains" value="Y=19-147"/>
</dbReference>
<dbReference type="PDB" id="1IEE">
    <property type="method" value="X-ray"/>
    <property type="resolution" value="0.94 A"/>
    <property type="chains" value="A=19-147"/>
</dbReference>
<dbReference type="PDB" id="1IO5">
    <property type="method" value="Neutron"/>
    <property type="resolution" value="2.00 A"/>
    <property type="chains" value="A=19-147"/>
</dbReference>
<dbReference type="PDB" id="1IOQ">
    <property type="method" value="X-ray"/>
    <property type="resolution" value="1.79 A"/>
    <property type="chains" value="A=19-147"/>
</dbReference>
<dbReference type="PDB" id="1IOR">
    <property type="method" value="X-ray"/>
    <property type="resolution" value="1.76 A"/>
    <property type="chains" value="A=19-147"/>
</dbReference>
<dbReference type="PDB" id="1IOS">
    <property type="method" value="X-ray"/>
    <property type="resolution" value="1.76 A"/>
    <property type="chains" value="A=19-147"/>
</dbReference>
<dbReference type="PDB" id="1IOT">
    <property type="method" value="X-ray"/>
    <property type="resolution" value="1.75 A"/>
    <property type="chains" value="A=19-147"/>
</dbReference>
<dbReference type="PDB" id="1IR7">
    <property type="method" value="X-ray"/>
    <property type="resolution" value="1.90 A"/>
    <property type="chains" value="A=19-147"/>
</dbReference>
<dbReference type="PDB" id="1IR8">
    <property type="method" value="X-ray"/>
    <property type="resolution" value="1.63 A"/>
    <property type="chains" value="A=19-147"/>
</dbReference>
<dbReference type="PDB" id="1IR9">
    <property type="method" value="X-ray"/>
    <property type="resolution" value="1.90 A"/>
    <property type="chains" value="A=19-147"/>
</dbReference>
<dbReference type="PDB" id="1J1O">
    <property type="method" value="X-ray"/>
    <property type="resolution" value="1.80 A"/>
    <property type="chains" value="Y=19-147"/>
</dbReference>
<dbReference type="PDB" id="1J1P">
    <property type="method" value="X-ray"/>
    <property type="resolution" value="1.80 A"/>
    <property type="chains" value="Y=19-147"/>
</dbReference>
<dbReference type="PDB" id="1J1X">
    <property type="method" value="X-ray"/>
    <property type="resolution" value="1.80 A"/>
    <property type="chains" value="Y=19-147"/>
</dbReference>
<dbReference type="PDB" id="1JA2">
    <property type="method" value="X-ray"/>
    <property type="resolution" value="2.87 A"/>
    <property type="chains" value="A=19-147"/>
</dbReference>
<dbReference type="PDB" id="1JA4">
    <property type="method" value="X-ray"/>
    <property type="resolution" value="2.94 A"/>
    <property type="chains" value="A=19-147"/>
</dbReference>
<dbReference type="PDB" id="1JA6">
    <property type="method" value="X-ray"/>
    <property type="resolution" value="2.96 A"/>
    <property type="chains" value="A=19-147"/>
</dbReference>
<dbReference type="PDB" id="1JA7">
    <property type="method" value="X-ray"/>
    <property type="resolution" value="2.98 A"/>
    <property type="chains" value="A=19-147"/>
</dbReference>
<dbReference type="PDB" id="1JIS">
    <property type="method" value="X-ray"/>
    <property type="resolution" value="1.90 A"/>
    <property type="chains" value="A=19-147"/>
</dbReference>
<dbReference type="PDB" id="1JIT">
    <property type="method" value="X-ray"/>
    <property type="resolution" value="1.90 A"/>
    <property type="chains" value="A=19-147"/>
</dbReference>
<dbReference type="PDB" id="1JIY">
    <property type="method" value="X-ray"/>
    <property type="resolution" value="1.90 A"/>
    <property type="chains" value="A=19-147"/>
</dbReference>
<dbReference type="PDB" id="1JJ0">
    <property type="method" value="X-ray"/>
    <property type="resolution" value="1.90 A"/>
    <property type="chains" value="A=19-147"/>
</dbReference>
<dbReference type="PDB" id="1JJ1">
    <property type="method" value="X-ray"/>
    <property type="resolution" value="1.90 A"/>
    <property type="chains" value="A=19-147"/>
</dbReference>
<dbReference type="PDB" id="1JJ3">
    <property type="method" value="X-ray"/>
    <property type="resolution" value="1.90 A"/>
    <property type="chains" value="A/B=19-147"/>
</dbReference>
<dbReference type="PDB" id="1JPO">
    <property type="method" value="X-ray"/>
    <property type="resolution" value="2.10 A"/>
    <property type="chains" value="A=19-147"/>
</dbReference>
<dbReference type="PDB" id="1JTO">
    <property type="method" value="X-ray"/>
    <property type="resolution" value="2.50 A"/>
    <property type="chains" value="L/M=19-147"/>
</dbReference>
<dbReference type="PDB" id="1JTT">
    <property type="method" value="X-ray"/>
    <property type="resolution" value="2.10 A"/>
    <property type="chains" value="L=19-147"/>
</dbReference>
<dbReference type="PDB" id="1KIP">
    <property type="method" value="X-ray"/>
    <property type="resolution" value="2.10 A"/>
    <property type="chains" value="C=19-147"/>
</dbReference>
<dbReference type="PDB" id="1KIQ">
    <property type="method" value="X-ray"/>
    <property type="resolution" value="1.85 A"/>
    <property type="chains" value="C=19-147"/>
</dbReference>
<dbReference type="PDB" id="1KIR">
    <property type="method" value="X-ray"/>
    <property type="resolution" value="2.00 A"/>
    <property type="chains" value="C=19-147"/>
</dbReference>
<dbReference type="PDB" id="1KXW">
    <property type="method" value="X-ray"/>
    <property type="resolution" value="1.96 A"/>
    <property type="chains" value="A=19-147"/>
</dbReference>
<dbReference type="PDB" id="1KXX">
    <property type="method" value="X-ray"/>
    <property type="resolution" value="1.71 A"/>
    <property type="chains" value="A=19-147"/>
</dbReference>
<dbReference type="PDB" id="1KXY">
    <property type="method" value="X-ray"/>
    <property type="resolution" value="1.79 A"/>
    <property type="chains" value="A=19-147"/>
</dbReference>
<dbReference type="PDB" id="1LCN">
    <property type="method" value="X-ray"/>
    <property type="resolution" value="1.63 A"/>
    <property type="chains" value="A/B=19-147"/>
</dbReference>
<dbReference type="PDB" id="1LJ3">
    <property type="method" value="X-ray"/>
    <property type="resolution" value="2.00 A"/>
    <property type="chains" value="A/B=19-147"/>
</dbReference>
<dbReference type="PDB" id="1LJ4">
    <property type="method" value="X-ray"/>
    <property type="resolution" value="1.95 A"/>
    <property type="chains" value="A/B=19-147"/>
</dbReference>
<dbReference type="PDB" id="1LJE">
    <property type="method" value="X-ray"/>
    <property type="resolution" value="2.00 A"/>
    <property type="chains" value="A/B=19-147"/>
</dbReference>
<dbReference type="PDB" id="1LJF">
    <property type="method" value="X-ray"/>
    <property type="resolution" value="1.80 A"/>
    <property type="chains" value="A/B=19-147"/>
</dbReference>
<dbReference type="PDB" id="1LJG">
    <property type="method" value="X-ray"/>
    <property type="resolution" value="1.90 A"/>
    <property type="chains" value="A/B=19-147"/>
</dbReference>
<dbReference type="PDB" id="1LJH">
    <property type="method" value="X-ray"/>
    <property type="resolution" value="1.80 A"/>
    <property type="chains" value="A/B=19-147"/>
</dbReference>
<dbReference type="PDB" id="1LJI">
    <property type="method" value="X-ray"/>
    <property type="resolution" value="2.00 A"/>
    <property type="chains" value="A/B=19-147"/>
</dbReference>
<dbReference type="PDB" id="1LJJ">
    <property type="method" value="X-ray"/>
    <property type="resolution" value="2.00 A"/>
    <property type="chains" value="A/B=19-147"/>
</dbReference>
<dbReference type="PDB" id="1LJK">
    <property type="method" value="X-ray"/>
    <property type="resolution" value="2.10 A"/>
    <property type="chains" value="A/B=19-147"/>
</dbReference>
<dbReference type="PDB" id="1LKR">
    <property type="method" value="X-ray"/>
    <property type="resolution" value="1.60 A"/>
    <property type="chains" value="A/B=19-147"/>
</dbReference>
<dbReference type="PDB" id="1LKS">
    <property type="method" value="X-ray"/>
    <property type="resolution" value="1.10 A"/>
    <property type="chains" value="A=19-147"/>
</dbReference>
<dbReference type="PDB" id="1LMA">
    <property type="method" value="X-ray"/>
    <property type="resolution" value="1.75 A"/>
    <property type="chains" value="A=19-147"/>
</dbReference>
<dbReference type="PDB" id="1LPI">
    <property type="method" value="X-ray"/>
    <property type="resolution" value="2.00 A"/>
    <property type="chains" value="A=19-147"/>
</dbReference>
<dbReference type="PDB" id="1LSA">
    <property type="method" value="X-ray"/>
    <property type="resolution" value="1.70 A"/>
    <property type="chains" value="A=19-147"/>
</dbReference>
<dbReference type="PDB" id="1LSB">
    <property type="method" value="X-ray"/>
    <property type="resolution" value="1.70 A"/>
    <property type="chains" value="A=19-147"/>
</dbReference>
<dbReference type="PDB" id="1LSC">
    <property type="method" value="X-ray"/>
    <property type="resolution" value="1.70 A"/>
    <property type="chains" value="A=19-147"/>
</dbReference>
<dbReference type="PDB" id="1LSD">
    <property type="method" value="X-ray"/>
    <property type="resolution" value="1.70 A"/>
    <property type="chains" value="A=19-147"/>
</dbReference>
<dbReference type="PDB" id="1LSE">
    <property type="method" value="X-ray"/>
    <property type="resolution" value="1.70 A"/>
    <property type="chains" value="A=19-147"/>
</dbReference>
<dbReference type="PDB" id="1LSF">
    <property type="method" value="X-ray"/>
    <property type="resolution" value="1.70 A"/>
    <property type="chains" value="A=19-147"/>
</dbReference>
<dbReference type="PDB" id="1LSG">
    <property type="method" value="X-ray"/>
    <property type="resolution" value="2.40 A"/>
    <property type="chains" value="A=19-147"/>
</dbReference>
<dbReference type="PDB" id="1LSM">
    <property type="method" value="X-ray"/>
    <property type="resolution" value="1.70 A"/>
    <property type="chains" value="A=19-147"/>
</dbReference>
<dbReference type="PDB" id="1LSN">
    <property type="method" value="X-ray"/>
    <property type="resolution" value="1.90 A"/>
    <property type="chains" value="A=19-147"/>
</dbReference>
<dbReference type="PDB" id="1LSY">
    <property type="method" value="X-ray"/>
    <property type="resolution" value="1.90 A"/>
    <property type="chains" value="A=1-147"/>
</dbReference>
<dbReference type="PDB" id="1LSZ">
    <property type="method" value="X-ray"/>
    <property type="resolution" value="2.00 A"/>
    <property type="chains" value="A=1-147"/>
</dbReference>
<dbReference type="PDB" id="1LYO">
    <property type="method" value="X-ray"/>
    <property type="resolution" value="1.93 A"/>
    <property type="chains" value="A=19-147"/>
</dbReference>
<dbReference type="PDB" id="1LYS">
    <property type="method" value="X-ray"/>
    <property type="resolution" value="1.72 A"/>
    <property type="chains" value="A/B=19-147"/>
</dbReference>
<dbReference type="PDB" id="1LYZ">
    <property type="method" value="X-ray"/>
    <property type="resolution" value="2.00 A"/>
    <property type="chains" value="A=19-147"/>
</dbReference>
<dbReference type="PDB" id="1LZ8">
    <property type="method" value="X-ray"/>
    <property type="resolution" value="1.53 A"/>
    <property type="chains" value="A=19-147"/>
</dbReference>
<dbReference type="PDB" id="1LZ9">
    <property type="method" value="X-ray"/>
    <property type="resolution" value="1.70 A"/>
    <property type="chains" value="A=19-147"/>
</dbReference>
<dbReference type="PDB" id="1LZA">
    <property type="method" value="X-ray"/>
    <property type="resolution" value="1.60 A"/>
    <property type="chains" value="A=19-147"/>
</dbReference>
<dbReference type="PDB" id="1LZB">
    <property type="method" value="X-ray"/>
    <property type="resolution" value="1.50 A"/>
    <property type="chains" value="A=19-147"/>
</dbReference>
<dbReference type="PDB" id="1LZC">
    <property type="method" value="X-ray"/>
    <property type="resolution" value="1.80 A"/>
    <property type="chains" value="A=19-147"/>
</dbReference>
<dbReference type="PDB" id="1LZD">
    <property type="method" value="X-ray"/>
    <property type="resolution" value="1.80 A"/>
    <property type="chains" value="A=19-147"/>
</dbReference>
<dbReference type="PDB" id="1LZE">
    <property type="method" value="X-ray"/>
    <property type="resolution" value="1.80 A"/>
    <property type="chains" value="A=19-147"/>
</dbReference>
<dbReference type="PDB" id="1LZG">
    <property type="method" value="X-ray"/>
    <property type="resolution" value="1.80 A"/>
    <property type="chains" value="A=19-147"/>
</dbReference>
<dbReference type="PDB" id="1LZH">
    <property type="method" value="X-ray"/>
    <property type="resolution" value="6.00 A"/>
    <property type="chains" value="A/B=19-147"/>
</dbReference>
<dbReference type="PDB" id="1LZN">
    <property type="method" value="Neutron"/>
    <property type="resolution" value="1.70 A"/>
    <property type="chains" value="A=19-147"/>
</dbReference>
<dbReference type="PDB" id="1LZT">
    <property type="method" value="X-ray"/>
    <property type="resolution" value="1.97 A"/>
    <property type="chains" value="A=19-147"/>
</dbReference>
<dbReference type="PDB" id="1MEL">
    <property type="method" value="X-ray"/>
    <property type="resolution" value="2.50 A"/>
    <property type="chains" value="L/M=19-147"/>
</dbReference>
<dbReference type="PDB" id="1MLC">
    <property type="method" value="X-ray"/>
    <property type="resolution" value="2.50 A"/>
    <property type="chains" value="E/F=19-147"/>
</dbReference>
<dbReference type="PDB" id="1N4F">
    <property type="method" value="X-ray"/>
    <property type="resolution" value="1.78 A"/>
    <property type="chains" value="A=19-147"/>
</dbReference>
<dbReference type="PDB" id="1NBY">
    <property type="method" value="X-ray"/>
    <property type="resolution" value="1.80 A"/>
    <property type="chains" value="C=19-147"/>
</dbReference>
<dbReference type="PDB" id="1NBZ">
    <property type="method" value="X-ray"/>
    <property type="resolution" value="1.85 A"/>
    <property type="chains" value="C=19-147"/>
</dbReference>
<dbReference type="PDB" id="1NDG">
    <property type="method" value="X-ray"/>
    <property type="resolution" value="1.90 A"/>
    <property type="chains" value="C=19-147"/>
</dbReference>
<dbReference type="PDB" id="1NDM">
    <property type="method" value="X-ray"/>
    <property type="resolution" value="2.10 A"/>
    <property type="chains" value="C=19-147"/>
</dbReference>
<dbReference type="PDB" id="1P2C">
    <property type="method" value="X-ray"/>
    <property type="resolution" value="2.00 A"/>
    <property type="chains" value="C/F=19-147"/>
</dbReference>
<dbReference type="PDB" id="1PS5">
    <property type="method" value="X-ray"/>
    <property type="resolution" value="2.00 A"/>
    <property type="chains" value="A=19-147"/>
</dbReference>
<dbReference type="PDB" id="1QIO">
    <property type="method" value="X-ray"/>
    <property type="resolution" value="1.20 A"/>
    <property type="chains" value="A=19-147"/>
</dbReference>
<dbReference type="PDB" id="1QTK">
    <property type="method" value="X-ray"/>
    <property type="resolution" value="2.03 A"/>
    <property type="chains" value="A=19-147"/>
</dbReference>
<dbReference type="PDB" id="1RCM">
    <property type="method" value="X-ray"/>
    <property type="resolution" value="1.90 A"/>
    <property type="chains" value="A/B=19-147"/>
</dbReference>
<dbReference type="PDB" id="1RFP">
    <property type="method" value="X-ray"/>
    <property type="resolution" value="1.75 A"/>
    <property type="chains" value="A=19-147"/>
</dbReference>
<dbReference type="PDB" id="1RI8">
    <property type="method" value="X-ray"/>
    <property type="resolution" value="1.85 A"/>
    <property type="chains" value="B=19-147"/>
</dbReference>
<dbReference type="PDB" id="1RJC">
    <property type="method" value="X-ray"/>
    <property type="resolution" value="1.40 A"/>
    <property type="chains" value="B=19-147"/>
</dbReference>
<dbReference type="PDB" id="1SF4">
    <property type="method" value="X-ray"/>
    <property type="resolution" value="2.98 A"/>
    <property type="chains" value="A=19-147"/>
</dbReference>
<dbReference type="PDB" id="1SF6">
    <property type="method" value="X-ray"/>
    <property type="resolution" value="3.22 A"/>
    <property type="chains" value="A=19-147"/>
</dbReference>
<dbReference type="PDB" id="1SF7">
    <property type="method" value="X-ray"/>
    <property type="resolution" value="3.22 A"/>
    <property type="chains" value="A=19-147"/>
</dbReference>
<dbReference type="PDB" id="1SFB">
    <property type="method" value="X-ray"/>
    <property type="resolution" value="3.22 A"/>
    <property type="chains" value="A=19-147"/>
</dbReference>
<dbReference type="PDB" id="1SFG">
    <property type="method" value="X-ray"/>
    <property type="resolution" value="3.22 A"/>
    <property type="chains" value="A=19-147"/>
</dbReference>
<dbReference type="PDB" id="1SQ2">
    <property type="method" value="X-ray"/>
    <property type="resolution" value="1.45 A"/>
    <property type="chains" value="L=19-147"/>
</dbReference>
<dbReference type="PDB" id="1T3P">
    <property type="method" value="X-ray"/>
    <property type="resolution" value="1.60 A"/>
    <property type="chains" value="A=19-147"/>
</dbReference>
<dbReference type="PDB" id="1T6V">
    <property type="method" value="X-ray"/>
    <property type="resolution" value="1.70 A"/>
    <property type="chains" value="L/M=19-147"/>
</dbReference>
<dbReference type="PDB" id="1UA6">
    <property type="method" value="X-ray"/>
    <property type="resolution" value="1.90 A"/>
    <property type="chains" value="Y=19-147"/>
</dbReference>
<dbReference type="PDB" id="1UC0">
    <property type="method" value="X-ray"/>
    <property type="resolution" value="1.85 A"/>
    <property type="chains" value="A=19-147"/>
</dbReference>
<dbReference type="PDB" id="1UCO">
    <property type="method" value="X-ray"/>
    <property type="resolution" value="2.00 A"/>
    <property type="chains" value="A/B=19-147"/>
</dbReference>
<dbReference type="PDB" id="1UIA">
    <property type="method" value="X-ray"/>
    <property type="resolution" value="1.76 A"/>
    <property type="chains" value="A=19-147"/>
</dbReference>
<dbReference type="PDB" id="1UIB">
    <property type="method" value="X-ray"/>
    <property type="resolution" value="1.76 A"/>
    <property type="chains" value="A=19-147"/>
</dbReference>
<dbReference type="PDB" id="1UIC">
    <property type="method" value="X-ray"/>
    <property type="resolution" value="1.95 A"/>
    <property type="chains" value="A=19-147"/>
</dbReference>
<dbReference type="PDB" id="1UID">
    <property type="method" value="X-ray"/>
    <property type="resolution" value="1.95 A"/>
    <property type="chains" value="A=19-147"/>
</dbReference>
<dbReference type="PDB" id="1UIE">
    <property type="method" value="X-ray"/>
    <property type="resolution" value="1.95 A"/>
    <property type="chains" value="A=19-147"/>
</dbReference>
<dbReference type="PDB" id="1UIF">
    <property type="method" value="X-ray"/>
    <property type="resolution" value="1.85 A"/>
    <property type="chains" value="A=19-147"/>
</dbReference>
<dbReference type="PDB" id="1UIG">
    <property type="method" value="X-ray"/>
    <property type="resolution" value="1.95 A"/>
    <property type="chains" value="A=19-147"/>
</dbReference>
<dbReference type="PDB" id="1UIH">
    <property type="method" value="X-ray"/>
    <property type="resolution" value="1.75 A"/>
    <property type="chains" value="A=19-147"/>
</dbReference>
<dbReference type="PDB" id="1UUZ">
    <property type="method" value="X-ray"/>
    <property type="resolution" value="1.80 A"/>
    <property type="chains" value="C/D=19-147"/>
</dbReference>
<dbReference type="PDB" id="1V7S">
    <property type="method" value="X-ray"/>
    <property type="resolution" value="1.14 A"/>
    <property type="chains" value="A=19-147"/>
</dbReference>
<dbReference type="PDB" id="1V7T">
    <property type="method" value="X-ray"/>
    <property type="resolution" value="1.13 A"/>
    <property type="chains" value="A/B=19-147"/>
</dbReference>
<dbReference type="PDB" id="1VAT">
    <property type="method" value="X-ray"/>
    <property type="resolution" value="1.60 A"/>
    <property type="chains" value="A=19-147"/>
</dbReference>
<dbReference type="PDB" id="1VAU">
    <property type="method" value="X-ray"/>
    <property type="resolution" value="1.50 A"/>
    <property type="chains" value="A=19-147"/>
</dbReference>
<dbReference type="PDB" id="1VDP">
    <property type="method" value="X-ray"/>
    <property type="resolution" value="1.70 A"/>
    <property type="chains" value="A/B=19-147"/>
</dbReference>
<dbReference type="PDB" id="1VDQ">
    <property type="method" value="X-ray"/>
    <property type="resolution" value="1.50 A"/>
    <property type="chains" value="A=19-147"/>
</dbReference>
<dbReference type="PDB" id="1VDS">
    <property type="method" value="X-ray"/>
    <property type="resolution" value="1.60 A"/>
    <property type="chains" value="A=19-147"/>
</dbReference>
<dbReference type="PDB" id="1VDT">
    <property type="method" value="X-ray"/>
    <property type="resolution" value="1.70 A"/>
    <property type="chains" value="A=19-147"/>
</dbReference>
<dbReference type="PDB" id="1VED">
    <property type="method" value="X-ray"/>
    <property type="resolution" value="1.90 A"/>
    <property type="chains" value="A=19-147"/>
</dbReference>
<dbReference type="PDB" id="1VFB">
    <property type="method" value="X-ray"/>
    <property type="resolution" value="1.80 A"/>
    <property type="chains" value="C=19-147"/>
</dbReference>
<dbReference type="PDB" id="1W6Z">
    <property type="method" value="X-ray"/>
    <property type="resolution" value="1.65 A"/>
    <property type="chains" value="A=19-147"/>
</dbReference>
<dbReference type="PDB" id="1WTM">
    <property type="method" value="X-ray"/>
    <property type="resolution" value="1.33 A"/>
    <property type="chains" value="A=19-147"/>
</dbReference>
<dbReference type="PDB" id="1WTN">
    <property type="method" value="X-ray"/>
    <property type="resolution" value="1.13 A"/>
    <property type="chains" value="A=19-147"/>
</dbReference>
<dbReference type="PDB" id="1XEI">
    <property type="method" value="X-ray"/>
    <property type="resolution" value="2.10 A"/>
    <property type="chains" value="A=19-147"/>
</dbReference>
<dbReference type="PDB" id="1XEJ">
    <property type="method" value="X-ray"/>
    <property type="resolution" value="2.10 A"/>
    <property type="chains" value="A=19-147"/>
</dbReference>
<dbReference type="PDB" id="1XEK">
    <property type="method" value="X-ray"/>
    <property type="resolution" value="2.30 A"/>
    <property type="chains" value="A=19-147"/>
</dbReference>
<dbReference type="PDB" id="1XFP">
    <property type="method" value="X-ray"/>
    <property type="resolution" value="1.50 A"/>
    <property type="chains" value="L=19-147"/>
</dbReference>
<dbReference type="PDB" id="1XGP">
    <property type="method" value="X-ray"/>
    <property type="resolution" value="2.10 A"/>
    <property type="chains" value="C=19-147"/>
</dbReference>
<dbReference type="PDB" id="1XGQ">
    <property type="method" value="X-ray"/>
    <property type="resolution" value="2.10 A"/>
    <property type="chains" value="C=19-147"/>
</dbReference>
<dbReference type="PDB" id="1XGR">
    <property type="method" value="X-ray"/>
    <property type="resolution" value="2.10 A"/>
    <property type="chains" value="C=19-147"/>
</dbReference>
<dbReference type="PDB" id="1XGT">
    <property type="method" value="X-ray"/>
    <property type="resolution" value="2.10 A"/>
    <property type="chains" value="C=19-147"/>
</dbReference>
<dbReference type="PDB" id="1XGU">
    <property type="method" value="X-ray"/>
    <property type="resolution" value="2.10 A"/>
    <property type="chains" value="C=19-147"/>
</dbReference>
<dbReference type="PDB" id="1YIK">
    <property type="method" value="X-ray"/>
    <property type="resolution" value="1.75 A"/>
    <property type="chains" value="A=19-147"/>
</dbReference>
<dbReference type="PDB" id="1YIL">
    <property type="method" value="X-ray"/>
    <property type="resolution" value="1.60 A"/>
    <property type="chains" value="A=19-147"/>
</dbReference>
<dbReference type="PDB" id="1YKX">
    <property type="method" value="X-ray"/>
    <property type="resolution" value="1.90 A"/>
    <property type="chains" value="X=19-147"/>
</dbReference>
<dbReference type="PDB" id="1YKY">
    <property type="method" value="X-ray"/>
    <property type="resolution" value="1.90 A"/>
    <property type="chains" value="X=19-147"/>
</dbReference>
<dbReference type="PDB" id="1YKZ">
    <property type="method" value="X-ray"/>
    <property type="resolution" value="1.80 A"/>
    <property type="chains" value="X=19-147"/>
</dbReference>
<dbReference type="PDB" id="1YL0">
    <property type="method" value="X-ray"/>
    <property type="resolution" value="1.90 A"/>
    <property type="chains" value="X=19-147"/>
</dbReference>
<dbReference type="PDB" id="1YL1">
    <property type="method" value="X-ray"/>
    <property type="resolution" value="1.90 A"/>
    <property type="chains" value="X=19-147"/>
</dbReference>
<dbReference type="PDB" id="1YQV">
    <property type="method" value="X-ray"/>
    <property type="resolution" value="1.70 A"/>
    <property type="chains" value="Y=19-147"/>
</dbReference>
<dbReference type="PDB" id="1Z55">
    <property type="method" value="X-ray"/>
    <property type="resolution" value="1.90 A"/>
    <property type="chains" value="A=19-147"/>
</dbReference>
<dbReference type="PDB" id="1ZMY">
    <property type="method" value="X-ray"/>
    <property type="resolution" value="3.00 A"/>
    <property type="chains" value="L/M=19-147"/>
</dbReference>
<dbReference type="PDB" id="1ZV5">
    <property type="method" value="X-ray"/>
    <property type="resolution" value="2.00 A"/>
    <property type="chains" value="L=19-147"/>
</dbReference>
<dbReference type="PDB" id="1ZVH">
    <property type="method" value="X-ray"/>
    <property type="resolution" value="1.50 A"/>
    <property type="chains" value="L=19-147"/>
</dbReference>
<dbReference type="PDB" id="1ZVY">
    <property type="method" value="X-ray"/>
    <property type="resolution" value="1.63 A"/>
    <property type="chains" value="B=19-147"/>
</dbReference>
<dbReference type="PDB" id="2A6U">
    <property type="method" value="X-ray"/>
    <property type="chains" value="A=19-147"/>
</dbReference>
<dbReference type="PDB" id="2A7D">
    <property type="method" value="X-ray"/>
    <property type="resolution" value="1.66 A"/>
    <property type="chains" value="A=19-147"/>
</dbReference>
<dbReference type="PDB" id="2A7F">
    <property type="method" value="X-ray"/>
    <property type="resolution" value="1.85 A"/>
    <property type="chains" value="A=19-147"/>
</dbReference>
<dbReference type="PDB" id="2AUB">
    <property type="method" value="X-ray"/>
    <property type="resolution" value="1.70 A"/>
    <property type="chains" value="A=19-147"/>
</dbReference>
<dbReference type="PDB" id="2B5Z">
    <property type="method" value="X-ray"/>
    <property type="resolution" value="1.60 A"/>
    <property type="chains" value="A=19-147"/>
</dbReference>
<dbReference type="PDB" id="2BLX">
    <property type="method" value="X-ray"/>
    <property type="resolution" value="1.40 A"/>
    <property type="chains" value="A=19-147"/>
</dbReference>
<dbReference type="PDB" id="2BLY">
    <property type="method" value="X-ray"/>
    <property type="resolution" value="1.40 A"/>
    <property type="chains" value="A=19-147"/>
</dbReference>
<dbReference type="PDB" id="2BPU">
    <property type="method" value="X-ray"/>
    <property type="resolution" value="1.35 A"/>
    <property type="chains" value="A=19-147"/>
</dbReference>
<dbReference type="PDB" id="2C8O">
    <property type="method" value="X-ray"/>
    <property type="resolution" value="1.50 A"/>
    <property type="chains" value="A=19-147"/>
</dbReference>
<dbReference type="PDB" id="2C8P">
    <property type="method" value="X-ray"/>
    <property type="resolution" value="1.50 A"/>
    <property type="chains" value="A=19-147"/>
</dbReference>
<dbReference type="PDB" id="2CDS">
    <property type="method" value="X-ray"/>
    <property type="resolution" value="2.00 A"/>
    <property type="chains" value="A=19-147"/>
</dbReference>
<dbReference type="PDB" id="2CGI">
    <property type="method" value="X-ray"/>
    <property type="resolution" value="1.35 A"/>
    <property type="chains" value="A=19-147"/>
</dbReference>
<dbReference type="PDB" id="2D4I">
    <property type="method" value="X-ray"/>
    <property type="resolution" value="1.16 A"/>
    <property type="chains" value="A/B=19-147"/>
</dbReference>
<dbReference type="PDB" id="2D4J">
    <property type="method" value="X-ray"/>
    <property type="resolution" value="1.16 A"/>
    <property type="chains" value="A=19-147"/>
</dbReference>
<dbReference type="PDB" id="2D4K">
    <property type="method" value="X-ray"/>
    <property type="resolution" value="1.15 A"/>
    <property type="chains" value="A/N=19-147"/>
</dbReference>
<dbReference type="PDB" id="2D6B">
    <property type="method" value="X-ray"/>
    <property type="resolution" value="1.25 A"/>
    <property type="chains" value="A=19-147"/>
</dbReference>
<dbReference type="PDB" id="2D91">
    <property type="method" value="X-ray"/>
    <property type="resolution" value="2.10 A"/>
    <property type="chains" value="A=19-147"/>
</dbReference>
<dbReference type="PDB" id="2DQC">
    <property type="method" value="X-ray"/>
    <property type="resolution" value="1.80 A"/>
    <property type="chains" value="Y=19-147"/>
</dbReference>
<dbReference type="PDB" id="2DQD">
    <property type="method" value="X-ray"/>
    <property type="resolution" value="1.80 A"/>
    <property type="chains" value="Y=19-147"/>
</dbReference>
<dbReference type="PDB" id="2DQE">
    <property type="method" value="X-ray"/>
    <property type="resolution" value="1.90 A"/>
    <property type="chains" value="Y=19-147"/>
</dbReference>
<dbReference type="PDB" id="2DQF">
    <property type="method" value="X-ray"/>
    <property type="resolution" value="2.50 A"/>
    <property type="chains" value="C/F=19-147"/>
</dbReference>
<dbReference type="PDB" id="2DQG">
    <property type="method" value="X-ray"/>
    <property type="resolution" value="2.30 A"/>
    <property type="chains" value="Y=19-147"/>
</dbReference>
<dbReference type="PDB" id="2DQH">
    <property type="method" value="X-ray"/>
    <property type="resolution" value="2.30 A"/>
    <property type="chains" value="Y=19-147"/>
</dbReference>
<dbReference type="PDB" id="2DQI">
    <property type="method" value="X-ray"/>
    <property type="resolution" value="2.00 A"/>
    <property type="chains" value="Y=19-147"/>
</dbReference>
<dbReference type="PDB" id="2DQJ">
    <property type="method" value="X-ray"/>
    <property type="resolution" value="1.80 A"/>
    <property type="chains" value="Y=19-147"/>
</dbReference>
<dbReference type="PDB" id="2EIZ">
    <property type="method" value="X-ray"/>
    <property type="resolution" value="1.90 A"/>
    <property type="chains" value="C=19-147"/>
</dbReference>
<dbReference type="PDB" id="2EKS">
    <property type="method" value="X-ray"/>
    <property type="resolution" value="2.00 A"/>
    <property type="chains" value="C=19-147"/>
</dbReference>
<dbReference type="PDB" id="2EPE">
    <property type="method" value="X-ray"/>
    <property type="resolution" value="2.50 A"/>
    <property type="chains" value="A=19-147"/>
</dbReference>
<dbReference type="PDB" id="2F2N">
    <property type="method" value="X-ray"/>
    <property type="resolution" value="1.60 A"/>
    <property type="chains" value="A=19-147"/>
</dbReference>
<dbReference type="PDB" id="2F30">
    <property type="method" value="X-ray"/>
    <property type="resolution" value="1.65 A"/>
    <property type="chains" value="A=19-147"/>
</dbReference>
<dbReference type="PDB" id="2F4A">
    <property type="method" value="X-ray"/>
    <property type="resolution" value="1.95 A"/>
    <property type="chains" value="A=19-147"/>
</dbReference>
<dbReference type="PDB" id="2F4G">
    <property type="method" value="X-ray"/>
    <property type="resolution" value="1.65 A"/>
    <property type="chains" value="A=19-147"/>
</dbReference>
<dbReference type="PDB" id="2FBB">
    <property type="method" value="X-ray"/>
    <property type="resolution" value="1.46 A"/>
    <property type="chains" value="A=19-147"/>
</dbReference>
<dbReference type="PDB" id="2G4P">
    <property type="method" value="X-ray"/>
    <property type="resolution" value="1.84 A"/>
    <property type="chains" value="A=19-147"/>
</dbReference>
<dbReference type="PDB" id="2G4Q">
    <property type="method" value="X-ray"/>
    <property type="resolution" value="1.84 A"/>
    <property type="chains" value="A=19-147"/>
</dbReference>
<dbReference type="PDB" id="2H9J">
    <property type="method" value="X-ray"/>
    <property type="resolution" value="1.75 A"/>
    <property type="chains" value="A=19-147"/>
</dbReference>
<dbReference type="PDB" id="2H9K">
    <property type="method" value="X-ray"/>
    <property type="resolution" value="1.75 A"/>
    <property type="chains" value="A=19-147"/>
</dbReference>
<dbReference type="PDB" id="2HS7">
    <property type="method" value="X-ray"/>
    <property type="chains" value="A=19-147"/>
</dbReference>
<dbReference type="PDB" id="2HS9">
    <property type="method" value="X-ray"/>
    <property type="chains" value="A=19-147"/>
</dbReference>
<dbReference type="PDB" id="2HSO">
    <property type="method" value="X-ray"/>
    <property type="chains" value="A=19-147"/>
</dbReference>
<dbReference type="PDB" id="2HTX">
    <property type="method" value="X-ray"/>
    <property type="resolution" value="1.56 A"/>
    <property type="chains" value="A=19-147"/>
</dbReference>
<dbReference type="PDB" id="2HU1">
    <property type="method" value="X-ray"/>
    <property type="resolution" value="1.63 A"/>
    <property type="chains" value="A=19-147"/>
</dbReference>
<dbReference type="PDB" id="2HU3">
    <property type="method" value="X-ray"/>
    <property type="resolution" value="1.30 A"/>
    <property type="chains" value="A=19-147"/>
</dbReference>
<dbReference type="PDB" id="2HUB">
    <property type="method" value="X-ray"/>
    <property type="resolution" value="1.20 A"/>
    <property type="chains" value="A=19-147"/>
</dbReference>
<dbReference type="PDB" id="2I25">
    <property type="method" value="X-ray"/>
    <property type="resolution" value="1.80 A"/>
    <property type="chains" value="L/M=19-147"/>
</dbReference>
<dbReference type="PDB" id="2I26">
    <property type="method" value="X-ray"/>
    <property type="resolution" value="2.50 A"/>
    <property type="chains" value="L/M/Q=19-147"/>
</dbReference>
<dbReference type="PDB" id="2I6Z">
    <property type="method" value="X-ray"/>
    <property type="resolution" value="1.90 A"/>
    <property type="chains" value="A=19-147"/>
</dbReference>
<dbReference type="PDB" id="2IFF">
    <property type="method" value="X-ray"/>
    <property type="resolution" value="2.65 A"/>
    <property type="chains" value="Y=19-147"/>
</dbReference>
<dbReference type="PDB" id="2LYM">
    <property type="method" value="X-ray"/>
    <property type="resolution" value="2.00 A"/>
    <property type="chains" value="A=19-147"/>
</dbReference>
<dbReference type="PDB" id="2LYO">
    <property type="method" value="X-ray"/>
    <property type="resolution" value="1.93 A"/>
    <property type="chains" value="A=19-147"/>
</dbReference>
<dbReference type="PDB" id="2LYZ">
    <property type="method" value="X-ray"/>
    <property type="resolution" value="2.00 A"/>
    <property type="chains" value="A=19-147"/>
</dbReference>
<dbReference type="PDB" id="2LZH">
    <property type="method" value="X-ray"/>
    <property type="resolution" value="6.00 A"/>
    <property type="chains" value="A=19-147"/>
</dbReference>
<dbReference type="PDB" id="2LZT">
    <property type="method" value="X-ray"/>
    <property type="resolution" value="1.97 A"/>
    <property type="chains" value="A=19-147"/>
</dbReference>
<dbReference type="PDB" id="2PC2">
    <property type="method" value="X-ray"/>
    <property type="resolution" value="1.54 A"/>
    <property type="chains" value="A=19-147"/>
</dbReference>
<dbReference type="PDB" id="2Q0M">
    <property type="method" value="X-ray"/>
    <property type="resolution" value="1.70 A"/>
    <property type="chains" value="X=19-147"/>
</dbReference>
<dbReference type="PDB" id="2VB1">
    <property type="method" value="X-ray"/>
    <property type="resolution" value="0.65 A"/>
    <property type="chains" value="A=19-147"/>
</dbReference>
<dbReference type="PDB" id="2W1L">
    <property type="method" value="X-ray"/>
    <property type="resolution" value="1.51 A"/>
    <property type="chains" value="A=19-147"/>
</dbReference>
<dbReference type="PDB" id="2W1M">
    <property type="method" value="X-ray"/>
    <property type="resolution" value="1.78 A"/>
    <property type="chains" value="A=19-147"/>
</dbReference>
<dbReference type="PDB" id="2W1X">
    <property type="method" value="X-ray"/>
    <property type="resolution" value="1.70 A"/>
    <property type="chains" value="A=19-147"/>
</dbReference>
<dbReference type="PDB" id="2W1Y">
    <property type="method" value="X-ray"/>
    <property type="resolution" value="1.73 A"/>
    <property type="chains" value="A=19-147"/>
</dbReference>
<dbReference type="PDB" id="2WAR">
    <property type="method" value="X-ray"/>
    <property type="resolution" value="1.80 A"/>
    <property type="chains" value="A=19-147"/>
</dbReference>
<dbReference type="PDB" id="2X0A">
    <property type="method" value="X-ray"/>
    <property type="resolution" value="1.52 A"/>
    <property type="chains" value="A=19-147"/>
</dbReference>
<dbReference type="PDB" id="2XBR">
    <property type="method" value="X-ray"/>
    <property type="resolution" value="1.29 A"/>
    <property type="chains" value="A=19-147"/>
</dbReference>
<dbReference type="PDB" id="2XBS">
    <property type="method" value="X-ray"/>
    <property type="resolution" value="1.37 A"/>
    <property type="chains" value="A=19-147"/>
</dbReference>
<dbReference type="PDB" id="2XJW">
    <property type="method" value="X-ray"/>
    <property type="resolution" value="1.67 A"/>
    <property type="chains" value="A=19-147"/>
</dbReference>
<dbReference type="PDB" id="2XTH">
    <property type="method" value="X-ray"/>
    <property type="resolution" value="1.80 A"/>
    <property type="chains" value="A=19-147"/>
</dbReference>
<dbReference type="PDB" id="2YBH">
    <property type="method" value="X-ray"/>
    <property type="resolution" value="2.00 A"/>
    <property type="chains" value="A=19-147"/>
</dbReference>
<dbReference type="PDB" id="2YBI">
    <property type="method" value="X-ray"/>
    <property type="resolution" value="2.00 A"/>
    <property type="chains" value="A=19-147"/>
</dbReference>
<dbReference type="PDB" id="2YBJ">
    <property type="method" value="X-ray"/>
    <property type="resolution" value="2.00 A"/>
    <property type="chains" value="A=19-147"/>
</dbReference>
<dbReference type="PDB" id="2YBL">
    <property type="method" value="X-ray"/>
    <property type="resolution" value="2.00 A"/>
    <property type="chains" value="A=19-147"/>
</dbReference>
<dbReference type="PDB" id="2YBM">
    <property type="method" value="X-ray"/>
    <property type="resolution" value="2.00 A"/>
    <property type="chains" value="A=19-147"/>
</dbReference>
<dbReference type="PDB" id="2YBN">
    <property type="method" value="X-ray"/>
    <property type="resolution" value="2.00 A"/>
    <property type="chains" value="A=19-147"/>
</dbReference>
<dbReference type="PDB" id="2YDG">
    <property type="method" value="X-ray"/>
    <property type="resolution" value="2.00 A"/>
    <property type="chains" value="A=19-147"/>
</dbReference>
<dbReference type="PDB" id="2YSS">
    <property type="method" value="X-ray"/>
    <property type="resolution" value="2.40 A"/>
    <property type="chains" value="C=19-147"/>
</dbReference>
<dbReference type="PDB" id="2YVB">
    <property type="method" value="X-ray"/>
    <property type="resolution" value="1.62 A"/>
    <property type="chains" value="A=19-147"/>
</dbReference>
<dbReference type="PDB" id="2Z12">
    <property type="method" value="X-ray"/>
    <property type="resolution" value="1.15 A"/>
    <property type="chains" value="A=19-147"/>
</dbReference>
<dbReference type="PDB" id="2Z18">
    <property type="method" value="X-ray"/>
    <property type="resolution" value="1.15 A"/>
    <property type="chains" value="A=19-147"/>
</dbReference>
<dbReference type="PDB" id="2Z19">
    <property type="method" value="X-ray"/>
    <property type="resolution" value="1.15 A"/>
    <property type="chains" value="A=19-147"/>
</dbReference>
<dbReference type="PDB" id="2ZNW">
    <property type="method" value="X-ray"/>
    <property type="resolution" value="2.71 A"/>
    <property type="chains" value="Y/Z=19-147"/>
</dbReference>
<dbReference type="PDB" id="2ZNX">
    <property type="method" value="X-ray"/>
    <property type="resolution" value="2.30 A"/>
    <property type="chains" value="Y/Z=19-147"/>
</dbReference>
<dbReference type="PDB" id="2ZQ3">
    <property type="method" value="X-ray"/>
    <property type="resolution" value="1.60 A"/>
    <property type="chains" value="A=19-147"/>
</dbReference>
<dbReference type="PDB" id="2ZQ4">
    <property type="method" value="X-ray"/>
    <property type="resolution" value="2.00 A"/>
    <property type="chains" value="A=19-147"/>
</dbReference>
<dbReference type="PDB" id="2ZYP">
    <property type="method" value="X-ray"/>
    <property type="resolution" value="1.18 A"/>
    <property type="chains" value="A=19-147"/>
</dbReference>
<dbReference type="PDB" id="3A34">
    <property type="method" value="X-ray"/>
    <property type="resolution" value="1.65 A"/>
    <property type="chains" value="A=19-147"/>
</dbReference>
<dbReference type="PDB" id="3A3Q">
    <property type="method" value="X-ray"/>
    <property type="resolution" value="2.00 A"/>
    <property type="chains" value="A=19-147"/>
</dbReference>
<dbReference type="PDB" id="3A3R">
    <property type="method" value="X-ray"/>
    <property type="resolution" value="1.90 A"/>
    <property type="chains" value="X=19-147"/>
</dbReference>
<dbReference type="PDB" id="3A67">
    <property type="method" value="X-ray"/>
    <property type="resolution" value="1.80 A"/>
    <property type="chains" value="Y=19-147"/>
</dbReference>
<dbReference type="PDB" id="3A6B">
    <property type="method" value="X-ray"/>
    <property type="resolution" value="1.80 A"/>
    <property type="chains" value="Y=19-147"/>
</dbReference>
<dbReference type="PDB" id="3A6C">
    <property type="method" value="X-ray"/>
    <property type="resolution" value="1.80 A"/>
    <property type="chains" value="Y=19-147"/>
</dbReference>
<dbReference type="PDB" id="3A8Z">
    <property type="method" value="X-ray"/>
    <property type="resolution" value="1.40 A"/>
    <property type="chains" value="A=19-147"/>
</dbReference>
<dbReference type="PDB" id="3A90">
    <property type="method" value="X-ray"/>
    <property type="resolution" value="1.45 A"/>
    <property type="chains" value="A=19-147"/>
</dbReference>
<dbReference type="PDB" id="3A91">
    <property type="method" value="X-ray"/>
    <property type="resolution" value="1.55 A"/>
    <property type="chains" value="A=19-147"/>
</dbReference>
<dbReference type="PDB" id="3A92">
    <property type="method" value="X-ray"/>
    <property type="resolution" value="1.50 A"/>
    <property type="chains" value="A=19-147"/>
</dbReference>
<dbReference type="PDB" id="3A93">
    <property type="method" value="X-ray"/>
    <property type="resolution" value="1.55 A"/>
    <property type="chains" value="A=19-147"/>
</dbReference>
<dbReference type="PDB" id="3A94">
    <property type="method" value="X-ray"/>
    <property type="resolution" value="1.55 A"/>
    <property type="chains" value="A=19-147"/>
</dbReference>
<dbReference type="PDB" id="3A95">
    <property type="method" value="X-ray"/>
    <property type="resolution" value="1.50 A"/>
    <property type="chains" value="A=19-147"/>
</dbReference>
<dbReference type="PDB" id="3A96">
    <property type="method" value="X-ray"/>
    <property type="resolution" value="1.75 A"/>
    <property type="chains" value="A=19-147"/>
</dbReference>
<dbReference type="PDB" id="3AGG">
    <property type="method" value="X-ray"/>
    <property type="resolution" value="1.60 A"/>
    <property type="chains" value="G=19-147"/>
</dbReference>
<dbReference type="PDB" id="3AGH">
    <property type="method" value="X-ray"/>
    <property type="resolution" value="1.49 A"/>
    <property type="chains" value="A=19-147"/>
</dbReference>
<dbReference type="PDB" id="3AGI">
    <property type="method" value="X-ray"/>
    <property type="resolution" value="1.20 A"/>
    <property type="chains" value="A=19-147"/>
</dbReference>
<dbReference type="PDB" id="3AJN">
    <property type="method" value="X-ray"/>
    <property type="resolution" value="1.05 A"/>
    <property type="chains" value="A=19-147"/>
</dbReference>
<dbReference type="PDB" id="3ATN">
    <property type="method" value="X-ray"/>
    <property type="resolution" value="1.17 A"/>
    <property type="chains" value="A=19-147"/>
</dbReference>
<dbReference type="PDB" id="3ATO">
    <property type="method" value="X-ray"/>
    <property type="resolution" value="1.17 A"/>
    <property type="chains" value="A=19-147"/>
</dbReference>
<dbReference type="PDB" id="3AW6">
    <property type="method" value="X-ray"/>
    <property type="resolution" value="2.10 A"/>
    <property type="chains" value="A=19-147"/>
</dbReference>
<dbReference type="PDB" id="3AW7">
    <property type="method" value="X-ray"/>
    <property type="resolution" value="2.10 A"/>
    <property type="chains" value="A=19-147"/>
</dbReference>
<dbReference type="PDB" id="3AZ4">
    <property type="method" value="X-ray"/>
    <property type="resolution" value="1.62 A"/>
    <property type="chains" value="A=19-147"/>
</dbReference>
<dbReference type="PDB" id="3AZ5">
    <property type="method" value="X-ray"/>
    <property type="resolution" value="2.34 A"/>
    <property type="chains" value="A=19-147"/>
</dbReference>
<dbReference type="PDB" id="3AZ6">
    <property type="method" value="X-ray"/>
    <property type="resolution" value="1.50 A"/>
    <property type="chains" value="A=19-147"/>
</dbReference>
<dbReference type="PDB" id="3AZ7">
    <property type="method" value="X-ray"/>
    <property type="resolution" value="2.10 A"/>
    <property type="chains" value="A=19-147"/>
</dbReference>
<dbReference type="PDB" id="3B6L">
    <property type="method" value="X-ray"/>
    <property type="resolution" value="2.30 A"/>
    <property type="chains" value="A=1-147"/>
</dbReference>
<dbReference type="PDB" id="3B72">
    <property type="method" value="X-ray"/>
    <property type="resolution" value="1.50 A"/>
    <property type="chains" value="A=1-147"/>
</dbReference>
<dbReference type="PDB" id="3D9A">
    <property type="method" value="X-ray"/>
    <property type="resolution" value="1.20 A"/>
    <property type="chains" value="C=19-147"/>
</dbReference>
<dbReference type="PDB" id="3E3D">
    <property type="method" value="X-ray"/>
    <property type="resolution" value="1.55 A"/>
    <property type="chains" value="A=19-147"/>
</dbReference>
<dbReference type="PDB" id="3EMS">
    <property type="method" value="X-ray"/>
    <property type="resolution" value="1.65 A"/>
    <property type="chains" value="A=19-147"/>
</dbReference>
<dbReference type="PDB" id="3EXD">
    <property type="method" value="X-ray"/>
    <property type="resolution" value="1.49 A"/>
    <property type="chains" value="A=19-147"/>
</dbReference>
<dbReference type="PDB" id="3F6Z">
    <property type="method" value="X-ray"/>
    <property type="resolution" value="2.50 A"/>
    <property type="chains" value="A/C=19-147"/>
</dbReference>
<dbReference type="PDB" id="3G3A">
    <property type="method" value="X-ray"/>
    <property type="resolution" value="2.20 A"/>
    <property type="chains" value="B/D/F/H=19-147"/>
</dbReference>
<dbReference type="PDB" id="3G3B">
    <property type="method" value="X-ray"/>
    <property type="resolution" value="2.40 A"/>
    <property type="chains" value="B/D/F/H=19-147"/>
</dbReference>
<dbReference type="PDB" id="3HFM">
    <property type="method" value="X-ray"/>
    <property type="resolution" value="3.00 A"/>
    <property type="chains" value="Y=19-147"/>
</dbReference>
<dbReference type="PDB" id="3IJU">
    <property type="method" value="X-ray"/>
    <property type="resolution" value="1.60 A"/>
    <property type="chains" value="A=19-147"/>
</dbReference>
<dbReference type="PDB" id="3IJV">
    <property type="method" value="X-ray"/>
    <property type="resolution" value="1.70 A"/>
    <property type="chains" value="A=19-147"/>
</dbReference>
<dbReference type="PDB" id="3J4G">
    <property type="method" value="EM"/>
    <property type="resolution" value="2.90 A"/>
    <property type="chains" value="A=19-147"/>
</dbReference>
<dbReference type="PDB" id="3J6K">
    <property type="method" value="EM"/>
    <property type="resolution" value="2.50 A"/>
    <property type="chains" value="A=19-147"/>
</dbReference>
<dbReference type="PDB" id="3KAM">
    <property type="method" value="X-ray"/>
    <property type="resolution" value="1.59 A"/>
    <property type="chains" value="A=19-147"/>
</dbReference>
<dbReference type="PDB" id="3LYM">
    <property type="method" value="X-ray"/>
    <property type="resolution" value="2.00 A"/>
    <property type="chains" value="A=19-147"/>
</dbReference>
<dbReference type="PDB" id="3LYO">
    <property type="method" value="X-ray"/>
    <property type="resolution" value="1.93 A"/>
    <property type="chains" value="A=19-147"/>
</dbReference>
<dbReference type="PDB" id="3LYT">
    <property type="method" value="X-ray"/>
    <property type="resolution" value="1.90 A"/>
    <property type="chains" value="A/B=19-147"/>
</dbReference>
<dbReference type="PDB" id="3LYZ">
    <property type="method" value="X-ray"/>
    <property type="resolution" value="2.00 A"/>
    <property type="chains" value="A=19-147"/>
</dbReference>
<dbReference type="PDB" id="3LZT">
    <property type="method" value="X-ray"/>
    <property type="resolution" value="0.93 A"/>
    <property type="chains" value="A=19-147"/>
</dbReference>
<dbReference type="PDB" id="3M18">
    <property type="method" value="X-ray"/>
    <property type="resolution" value="1.95 A"/>
    <property type="chains" value="B=19-147"/>
</dbReference>
<dbReference type="PDB" id="3M3U">
    <property type="method" value="X-ray"/>
    <property type="resolution" value="2.35 A"/>
    <property type="chains" value="A=19-147"/>
</dbReference>
<dbReference type="PDB" id="3MBE">
    <property type="method" value="X-ray"/>
    <property type="resolution" value="2.89 A"/>
    <property type="chains" value="P/Q=29-45"/>
</dbReference>
<dbReference type="PDB" id="3N9A">
    <property type="method" value="X-ray"/>
    <property type="resolution" value="1.40 A"/>
    <property type="chains" value="A=19-147"/>
</dbReference>
<dbReference type="PDB" id="3N9C">
    <property type="method" value="X-ray"/>
    <property type="resolution" value="1.50 A"/>
    <property type="chains" value="A=19-147"/>
</dbReference>
<dbReference type="PDB" id="3N9E">
    <property type="method" value="X-ray"/>
    <property type="resolution" value="1.38 A"/>
    <property type="chains" value="A=19-147"/>
</dbReference>
<dbReference type="PDB" id="3OJP">
    <property type="method" value="X-ray"/>
    <property type="resolution" value="1.81 A"/>
    <property type="chains" value="A=19-147"/>
</dbReference>
<dbReference type="PDB" id="3OK0">
    <property type="method" value="X-ray"/>
    <property type="resolution" value="1.82 A"/>
    <property type="chains" value="A=19-147"/>
</dbReference>
<dbReference type="PDB" id="3OTP">
    <property type="method" value="X-ray"/>
    <property type="resolution" value="3.76 A"/>
    <property type="chains" value="G/H/I/J/K/L=36-76"/>
</dbReference>
<dbReference type="PDB" id="3P4Z">
    <property type="method" value="X-ray"/>
    <property type="resolution" value="1.60 A"/>
    <property type="chains" value="A=19-147"/>
</dbReference>
<dbReference type="PDB" id="3P64">
    <property type="method" value="X-ray"/>
    <property type="resolution" value="1.30 A"/>
    <property type="chains" value="A=19-147"/>
</dbReference>
<dbReference type="PDB" id="3P65">
    <property type="method" value="X-ray"/>
    <property type="resolution" value="2.10 A"/>
    <property type="chains" value="A=19-147"/>
</dbReference>
<dbReference type="PDB" id="3P66">
    <property type="method" value="X-ray"/>
    <property type="resolution" value="1.36 A"/>
    <property type="chains" value="A=19-147"/>
</dbReference>
<dbReference type="PDB" id="3P68">
    <property type="method" value="X-ray"/>
    <property type="resolution" value="1.60 A"/>
    <property type="chains" value="A=19-147"/>
</dbReference>
<dbReference type="PDB" id="3QE8">
    <property type="method" value="X-ray"/>
    <property type="resolution" value="1.49 A"/>
    <property type="chains" value="A/B=19-147"/>
</dbReference>
<dbReference type="PDB" id="3QNG">
    <property type="method" value="X-ray"/>
    <property type="resolution" value="1.55 A"/>
    <property type="chains" value="A=19-147"/>
</dbReference>
<dbReference type="PDB" id="3QY4">
    <property type="method" value="X-ray"/>
    <property type="resolution" value="1.65 A"/>
    <property type="chains" value="A=19-146"/>
</dbReference>
<dbReference type="PDB" id="3RNX">
    <property type="method" value="X-ray"/>
    <property type="resolution" value="1.86 A"/>
    <property type="chains" value="A=19-147"/>
</dbReference>
<dbReference type="PDB" id="3RT5">
    <property type="method" value="X-ray"/>
    <property type="resolution" value="1.75 A"/>
    <property type="chains" value="X=19-147"/>
</dbReference>
<dbReference type="PDB" id="3RU5">
    <property type="method" value="X-ray"/>
    <property type="resolution" value="1.35 A"/>
    <property type="chains" value="A=19-147"/>
</dbReference>
<dbReference type="PDB" id="3RW8">
    <property type="method" value="X-ray"/>
    <property type="resolution" value="1.86 A"/>
    <property type="chains" value="A=19-147"/>
</dbReference>
<dbReference type="PDB" id="3RZ4">
    <property type="method" value="X-ray"/>
    <property type="resolution" value="1.80 A"/>
    <property type="chains" value="A=19-147"/>
</dbReference>
<dbReference type="PDB" id="3SP3">
    <property type="method" value="X-ray"/>
    <property type="resolution" value="1.80 A"/>
    <property type="chains" value="A=19-147"/>
</dbReference>
<dbReference type="PDB" id="3T6U">
    <property type="method" value="X-ray"/>
    <property type="resolution" value="2.21 A"/>
    <property type="chains" value="A=19-147"/>
</dbReference>
<dbReference type="PDB" id="3TMU">
    <property type="method" value="X-ray"/>
    <property type="resolution" value="1.90 A"/>
    <property type="chains" value="A=1-147"/>
</dbReference>
<dbReference type="PDB" id="3TMV">
    <property type="method" value="X-ray"/>
    <property type="resolution" value="1.90 A"/>
    <property type="chains" value="A=1-147"/>
</dbReference>
<dbReference type="PDB" id="3TMW">
    <property type="method" value="X-ray"/>
    <property type="resolution" value="1.90 A"/>
    <property type="chains" value="A=1-147"/>
</dbReference>
<dbReference type="PDB" id="3TMX">
    <property type="method" value="X-ray"/>
    <property type="resolution" value="1.90 A"/>
    <property type="chains" value="A=1-147"/>
</dbReference>
<dbReference type="PDB" id="3TXB">
    <property type="method" value="X-ray"/>
    <property type="resolution" value="1.59 A"/>
    <property type="chains" value="A=19-147"/>
</dbReference>
<dbReference type="PDB" id="3TXD">
    <property type="method" value="X-ray"/>
    <property type="resolution" value="1.53 A"/>
    <property type="chains" value="A=19-147"/>
</dbReference>
<dbReference type="PDB" id="3TXE">
    <property type="method" value="X-ray"/>
    <property type="resolution" value="1.70 A"/>
    <property type="chains" value="A=19-147"/>
</dbReference>
<dbReference type="PDB" id="3TXF">
    <property type="method" value="X-ray"/>
    <property type="resolution" value="1.69 A"/>
    <property type="chains" value="A=19-147"/>
</dbReference>
<dbReference type="PDB" id="3TXG">
    <property type="method" value="X-ray"/>
    <property type="resolution" value="1.70 A"/>
    <property type="chains" value="A=19-147"/>
</dbReference>
<dbReference type="PDB" id="3TXH">
    <property type="method" value="X-ray"/>
    <property type="resolution" value="1.69 A"/>
    <property type="chains" value="A=19-147"/>
</dbReference>
<dbReference type="PDB" id="3TXI">
    <property type="method" value="X-ray"/>
    <property type="resolution" value="1.60 A"/>
    <property type="chains" value="A=19-147"/>
</dbReference>
<dbReference type="PDB" id="3TXJ">
    <property type="method" value="X-ray"/>
    <property type="resolution" value="2.48 A"/>
    <property type="chains" value="A=19-147"/>
</dbReference>
<dbReference type="PDB" id="3TXK">
    <property type="method" value="X-ray"/>
    <property type="resolution" value="3.00 A"/>
    <property type="chains" value="A=19-147"/>
</dbReference>
<dbReference type="PDB" id="3ULR">
    <property type="method" value="X-ray"/>
    <property type="resolution" value="1.65 A"/>
    <property type="chains" value="A=19-147"/>
</dbReference>
<dbReference type="PDB" id="3W6A">
    <property type="method" value="X-ray"/>
    <property type="resolution" value="1.77 A"/>
    <property type="chains" value="A=19-147"/>
</dbReference>
<dbReference type="PDB" id="3WL2">
    <property type="method" value="X-ray"/>
    <property type="resolution" value="0.96 A"/>
    <property type="chains" value="A/B=19-147"/>
</dbReference>
<dbReference type="PDB" id="3WMK">
    <property type="method" value="X-ray"/>
    <property type="resolution" value="1.46 A"/>
    <property type="chains" value="A=19-147"/>
</dbReference>
<dbReference type="PDB" id="3WPJ">
    <property type="method" value="X-ray"/>
    <property type="resolution" value="2.00 A"/>
    <property type="chains" value="A=19-147"/>
</dbReference>
<dbReference type="PDB" id="3WPK">
    <property type="method" value="X-ray"/>
    <property type="resolution" value="2.00 A"/>
    <property type="chains" value="A=19-147"/>
</dbReference>
<dbReference type="PDB" id="3WPL">
    <property type="method" value="X-ray"/>
    <property type="resolution" value="2.00 A"/>
    <property type="chains" value="A=19-147"/>
</dbReference>
<dbReference type="PDB" id="3WU7">
    <property type="method" value="X-ray"/>
    <property type="resolution" value="2.00 A"/>
    <property type="chains" value="A=19-147"/>
</dbReference>
<dbReference type="PDB" id="3WU8">
    <property type="method" value="X-ray"/>
    <property type="resolution" value="2.00 A"/>
    <property type="chains" value="A=19-147"/>
</dbReference>
<dbReference type="PDB" id="3WU9">
    <property type="method" value="X-ray"/>
    <property type="resolution" value="2.00 A"/>
    <property type="chains" value="A=19-147"/>
</dbReference>
<dbReference type="PDB" id="3WUA">
    <property type="method" value="X-ray"/>
    <property type="resolution" value="2.00 A"/>
    <property type="chains" value="A=19-147"/>
</dbReference>
<dbReference type="PDB" id="3WUL">
    <property type="method" value="X-ray"/>
    <property type="resolution" value="2.00 A"/>
    <property type="chains" value="A=19-147"/>
</dbReference>
<dbReference type="PDB" id="3WUM">
    <property type="method" value="X-ray"/>
    <property type="resolution" value="2.00 A"/>
    <property type="chains" value="A=19-147"/>
</dbReference>
<dbReference type="PDB" id="3WUN">
    <property type="method" value="X-ray"/>
    <property type="resolution" value="2.40 A"/>
    <property type="chains" value="A=19-147"/>
</dbReference>
<dbReference type="PDB" id="3WVX">
    <property type="method" value="X-ray"/>
    <property type="resolution" value="1.58 A"/>
    <property type="chains" value="A=19-147"/>
</dbReference>
<dbReference type="PDB" id="3WVY">
    <property type="method" value="X-ray"/>
    <property type="resolution" value="1.56 A"/>
    <property type="chains" value="A=19-147"/>
</dbReference>
<dbReference type="PDB" id="3WW5">
    <property type="method" value="X-ray"/>
    <property type="resolution" value="1.53 A"/>
    <property type="chains" value="A=19-147"/>
</dbReference>
<dbReference type="PDB" id="3WW6">
    <property type="method" value="X-ray"/>
    <property type="resolution" value="1.53 A"/>
    <property type="chains" value="A=19-147"/>
</dbReference>
<dbReference type="PDB" id="3WXT">
    <property type="method" value="X-ray"/>
    <property type="resolution" value="2.00 A"/>
    <property type="chains" value="A=19-147"/>
</dbReference>
<dbReference type="PDB" id="3WXU">
    <property type="method" value="X-ray"/>
    <property type="resolution" value="2.00 A"/>
    <property type="chains" value="A=19-147"/>
</dbReference>
<dbReference type="PDB" id="3ZEK">
    <property type="method" value="X-ray"/>
    <property type="resolution" value="1.43 A"/>
    <property type="chains" value="A=19-147"/>
</dbReference>
<dbReference type="PDB" id="3ZVQ">
    <property type="method" value="X-ray"/>
    <property type="resolution" value="2.00 A"/>
    <property type="chains" value="A=19-88, B=90-147"/>
</dbReference>
<dbReference type="PDB" id="4A7D">
    <property type="method" value="X-ray"/>
    <property type="resolution" value="1.50 A"/>
    <property type="chains" value="A=19-147"/>
</dbReference>
<dbReference type="PDB" id="4A8A">
    <property type="method" value="EM"/>
    <property type="resolution" value="14.20 A"/>
    <property type="chains" value="M=19-147"/>
</dbReference>
<dbReference type="PDB" id="4A8B">
    <property type="method" value="EM"/>
    <property type="resolution" value="13.00 A"/>
    <property type="chains" value="M/N/O/P/Q/R=19-147"/>
</dbReference>
<dbReference type="PDB" id="4AGA">
    <property type="method" value="X-ray"/>
    <property type="resolution" value="1.50 A"/>
    <property type="chains" value="A=19-147"/>
</dbReference>
<dbReference type="PDB" id="4AXT">
    <property type="method" value="X-ray"/>
    <property type="resolution" value="1.10 A"/>
    <property type="chains" value="A=19-147"/>
</dbReference>
<dbReference type="PDB" id="4B0D">
    <property type="method" value="X-ray"/>
    <property type="resolution" value="1.10 A"/>
    <property type="chains" value="A=19-147"/>
</dbReference>
<dbReference type="PDB" id="4B1A">
    <property type="method" value="X-ray"/>
    <property type="resolution" value="1.67 A"/>
    <property type="chains" value="A=19-147"/>
</dbReference>
<dbReference type="PDB" id="4B49">
    <property type="method" value="X-ray"/>
    <property type="resolution" value="1.15 A"/>
    <property type="chains" value="A=19-147"/>
</dbReference>
<dbReference type="PDB" id="4B4E">
    <property type="method" value="X-ray"/>
    <property type="resolution" value="1.00 A"/>
    <property type="chains" value="A=19-147"/>
</dbReference>
<dbReference type="PDB" id="4B4I">
    <property type="method" value="X-ray"/>
    <property type="resolution" value="1.20 A"/>
    <property type="chains" value="A=19-147"/>
</dbReference>
<dbReference type="PDB" id="4B4J">
    <property type="method" value="X-ray"/>
    <property type="resolution" value="1.25 A"/>
    <property type="chains" value="A=19-147"/>
</dbReference>
<dbReference type="PDB" id="4BAD">
    <property type="method" value="X-ray"/>
    <property type="resolution" value="1.35 A"/>
    <property type="chains" value="A=19-147"/>
</dbReference>
<dbReference type="PDB" id="4BAF">
    <property type="method" value="X-ray"/>
    <property type="resolution" value="1.51 A"/>
    <property type="chains" value="A=19-147"/>
</dbReference>
<dbReference type="PDB" id="4BAP">
    <property type="method" value="X-ray"/>
    <property type="resolution" value="1.21 A"/>
    <property type="chains" value="A=19-147"/>
</dbReference>
<dbReference type="PDB" id="4BS7">
    <property type="method" value="X-ray"/>
    <property type="resolution" value="1.70 A"/>
    <property type="chains" value="A=19-147"/>
</dbReference>
<dbReference type="PDB" id="4C3W">
    <property type="method" value="X-ray"/>
    <property type="resolution" value="1.28 A"/>
    <property type="chains" value="A=19-147"/>
</dbReference>
<dbReference type="PDB" id="4CJ2">
    <property type="method" value="X-ray"/>
    <property type="resolution" value="1.50 A"/>
    <property type="chains" value="A/B=1-147"/>
</dbReference>
<dbReference type="PDB" id="4D9Z">
    <property type="method" value="X-ray"/>
    <property type="resolution" value="1.71 A"/>
    <property type="chains" value="A=19-147"/>
</dbReference>
<dbReference type="PDB" id="4DC4">
    <property type="method" value="X-ray"/>
    <property type="resolution" value="2.65 A"/>
    <property type="chains" value="A/B/C=19-147"/>
</dbReference>
<dbReference type="PDB" id="4DD0">
    <property type="method" value="X-ray"/>
    <property type="resolution" value="1.70 A"/>
    <property type="chains" value="A=19-147"/>
</dbReference>
<dbReference type="PDB" id="4DD1">
    <property type="method" value="X-ray"/>
    <property type="resolution" value="1.70 A"/>
    <property type="chains" value="A/B=19-147"/>
</dbReference>
<dbReference type="PDB" id="4DD2">
    <property type="method" value="X-ray"/>
    <property type="resolution" value="1.55 A"/>
    <property type="chains" value="A=19-147"/>
</dbReference>
<dbReference type="PDB" id="4DD3">
    <property type="method" value="X-ray"/>
    <property type="resolution" value="1.70 A"/>
    <property type="chains" value="A=19-147"/>
</dbReference>
<dbReference type="PDB" id="4DD7">
    <property type="method" value="X-ray"/>
    <property type="resolution" value="1.60 A"/>
    <property type="chains" value="A=19-147"/>
</dbReference>
<dbReference type="PDB" id="4DD9">
    <property type="method" value="X-ray"/>
    <property type="resolution" value="1.60 A"/>
    <property type="chains" value="A=19-147"/>
</dbReference>
<dbReference type="PDB" id="4DDA">
    <property type="method" value="X-ray"/>
    <property type="resolution" value="2.48 A"/>
    <property type="chains" value="A=19-147"/>
</dbReference>
<dbReference type="PDB" id="4DDB">
    <property type="method" value="X-ray"/>
    <property type="resolution" value="3.00 A"/>
    <property type="chains" value="A=19-147"/>
</dbReference>
<dbReference type="PDB" id="4DDC">
    <property type="method" value="X-ray"/>
    <property type="resolution" value="1.80 A"/>
    <property type="chains" value="A/B=19-147"/>
</dbReference>
<dbReference type="PDB" id="4DT3">
    <property type="method" value="X-ray"/>
    <property type="resolution" value="1.80 A"/>
    <property type="chains" value="A=19-147"/>
</dbReference>
<dbReference type="PDB" id="4E3U">
    <property type="method" value="X-ray"/>
    <property type="resolution" value="1.50 A"/>
    <property type="chains" value="A=19-147"/>
</dbReference>
<dbReference type="PDB" id="4EOF">
    <property type="method" value="X-ray"/>
    <property type="resolution" value="1.83 A"/>
    <property type="chains" value="A=19-147"/>
</dbReference>
<dbReference type="PDB" id="4ET8">
    <property type="method" value="X-ray"/>
    <property type="resolution" value="1.90 A"/>
    <property type="chains" value="A=19-147"/>
</dbReference>
<dbReference type="PDB" id="4ET9">
    <property type="method" value="X-ray"/>
    <property type="resolution" value="1.90 A"/>
    <property type="chains" value="A=19-147"/>
</dbReference>
<dbReference type="PDB" id="4ETA">
    <property type="method" value="X-ray"/>
    <property type="resolution" value="1.91 A"/>
    <property type="chains" value="A=19-147"/>
</dbReference>
<dbReference type="PDB" id="4ETB">
    <property type="method" value="X-ray"/>
    <property type="resolution" value="1.91 A"/>
    <property type="chains" value="A=19-147"/>
</dbReference>
<dbReference type="PDB" id="4ETC">
    <property type="method" value="X-ray"/>
    <property type="resolution" value="1.91 A"/>
    <property type="chains" value="A=19-147"/>
</dbReference>
<dbReference type="PDB" id="4ETD">
    <property type="method" value="X-ray"/>
    <property type="resolution" value="1.90 A"/>
    <property type="chains" value="A=19-147"/>
</dbReference>
<dbReference type="PDB" id="4ETE">
    <property type="method" value="X-ray"/>
    <property type="resolution" value="1.90 A"/>
    <property type="chains" value="A=19-147"/>
</dbReference>
<dbReference type="PDB" id="4FJR">
    <property type="method" value="X-ray"/>
    <property type="resolution" value="1.86 A"/>
    <property type="chains" value="A=19-147"/>
</dbReference>
<dbReference type="PDB" id="4G49">
    <property type="method" value="X-ray"/>
    <property type="resolution" value="2.40 A"/>
    <property type="chains" value="A=19-147"/>
</dbReference>
<dbReference type="PDB" id="4G4B">
    <property type="method" value="X-ray"/>
    <property type="resolution" value="2.10 A"/>
    <property type="chains" value="A=19-147"/>
</dbReference>
<dbReference type="PDB" id="4G4C">
    <property type="method" value="X-ray"/>
    <property type="resolution" value="2.00 A"/>
    <property type="chains" value="A=19-147"/>
</dbReference>
<dbReference type="PDB" id="4G4H">
    <property type="method" value="X-ray"/>
    <property type="resolution" value="2.00 A"/>
    <property type="chains" value="A=19-147"/>
</dbReference>
<dbReference type="PDB" id="4GCB">
    <property type="method" value="X-ray"/>
    <property type="resolution" value="1.80 A"/>
    <property type="chains" value="A=19-147"/>
</dbReference>
<dbReference type="PDB" id="4GCC">
    <property type="method" value="X-ray"/>
    <property type="resolution" value="2.00 A"/>
    <property type="chains" value="A=19-147"/>
</dbReference>
<dbReference type="PDB" id="4GCD">
    <property type="method" value="X-ray"/>
    <property type="resolution" value="2.80 A"/>
    <property type="chains" value="A=19-147"/>
</dbReference>
<dbReference type="PDB" id="4GCE">
    <property type="method" value="X-ray"/>
    <property type="resolution" value="2.90 A"/>
    <property type="chains" value="A=19-147"/>
</dbReference>
<dbReference type="PDB" id="4GCF">
    <property type="method" value="X-ray"/>
    <property type="resolution" value="3.50 A"/>
    <property type="chains" value="A=19-147"/>
</dbReference>
<dbReference type="PDB" id="4GLA">
    <property type="method" value="X-ray"/>
    <property type="resolution" value="2.75 A"/>
    <property type="chains" value="A/B=19-147"/>
</dbReference>
<dbReference type="PDB" id="4GLV">
    <property type="method" value="X-ray"/>
    <property type="resolution" value="2.57 A"/>
    <property type="chains" value="A/C/E/G=19-147"/>
</dbReference>
<dbReference type="PDB" id="4GN3">
    <property type="method" value="X-ray"/>
    <property type="resolution" value="1.95 A"/>
    <property type="chains" value="A/C/E/G/I/K/M/O/Q=19-147"/>
</dbReference>
<dbReference type="PDB" id="4GN4">
    <property type="method" value="X-ray"/>
    <property type="resolution" value="1.86 A"/>
    <property type="chains" value="A=19-147"/>
</dbReference>
<dbReference type="PDB" id="4GN5">
    <property type="method" value="X-ray"/>
    <property type="resolution" value="1.86 A"/>
    <property type="chains" value="C/D=19-147"/>
</dbReference>
<dbReference type="PDB" id="4H1P">
    <property type="method" value="X-ray"/>
    <property type="resolution" value="2.30 A"/>
    <property type="chains" value="A=19-147"/>
</dbReference>
<dbReference type="PDB" id="4H8X">
    <property type="method" value="X-ray"/>
    <property type="resolution" value="1.20 A"/>
    <property type="chains" value="A=19-147"/>
</dbReference>
<dbReference type="PDB" id="4H8Y">
    <property type="method" value="X-ray"/>
    <property type="resolution" value="1.20 A"/>
    <property type="chains" value="A=19-147"/>
</dbReference>
<dbReference type="PDB" id="4H8Z">
    <property type="method" value="X-ray"/>
    <property type="resolution" value="1.20 A"/>
    <property type="chains" value="A=19-147"/>
</dbReference>
<dbReference type="PDB" id="4H90">
    <property type="method" value="X-ray"/>
    <property type="resolution" value="1.20 A"/>
    <property type="chains" value="A=19-147"/>
</dbReference>
<dbReference type="PDB" id="4H91">
    <property type="method" value="X-ray"/>
    <property type="resolution" value="1.20 A"/>
    <property type="chains" value="A=19-147"/>
</dbReference>
<dbReference type="PDB" id="4H92">
    <property type="method" value="X-ray"/>
    <property type="resolution" value="1.20 A"/>
    <property type="chains" value="A=19-147"/>
</dbReference>
<dbReference type="PDB" id="4H93">
    <property type="method" value="X-ray"/>
    <property type="resolution" value="1.20 A"/>
    <property type="chains" value="A=19-147"/>
</dbReference>
<dbReference type="PDB" id="4H94">
    <property type="method" value="X-ray"/>
    <property type="resolution" value="1.20 A"/>
    <property type="chains" value="A=19-147"/>
</dbReference>
<dbReference type="PDB" id="4H9A">
    <property type="method" value="X-ray"/>
    <property type="resolution" value="1.20 A"/>
    <property type="chains" value="A=19-147"/>
</dbReference>
<dbReference type="PDB" id="4H9B">
    <property type="method" value="X-ray"/>
    <property type="resolution" value="1.20 A"/>
    <property type="chains" value="A=19-147"/>
</dbReference>
<dbReference type="PDB" id="4H9C">
    <property type="method" value="X-ray"/>
    <property type="resolution" value="1.20 A"/>
    <property type="chains" value="A=19-147"/>
</dbReference>
<dbReference type="PDB" id="4H9E">
    <property type="method" value="X-ray"/>
    <property type="resolution" value="1.20 A"/>
    <property type="chains" value="A=19-147"/>
</dbReference>
<dbReference type="PDB" id="4H9F">
    <property type="method" value="X-ray"/>
    <property type="resolution" value="1.20 A"/>
    <property type="chains" value="A=19-147"/>
</dbReference>
<dbReference type="PDB" id="4H9H">
    <property type="method" value="X-ray"/>
    <property type="resolution" value="1.20 A"/>
    <property type="chains" value="A=19-147"/>
</dbReference>
<dbReference type="PDB" id="4H9I">
    <property type="method" value="X-ray"/>
    <property type="resolution" value="1.20 A"/>
    <property type="chains" value="A=19-147"/>
</dbReference>
<dbReference type="PDB" id="4HP0">
    <property type="method" value="X-ray"/>
    <property type="resolution" value="1.19 A"/>
    <property type="chains" value="A=19-147"/>
</dbReference>
<dbReference type="PDB" id="4HPI">
    <property type="method" value="X-ray"/>
    <property type="resolution" value="1.19 A"/>
    <property type="chains" value="A=19-147"/>
</dbReference>
<dbReference type="PDB" id="4HSF">
    <property type="method" value="X-ray"/>
    <property type="resolution" value="1.82 A"/>
    <property type="chains" value="A=19-147"/>
</dbReference>
<dbReference type="PDB" id="4HTK">
    <property type="method" value="X-ray"/>
    <property type="resolution" value="1.20 A"/>
    <property type="chains" value="A=19-147"/>
</dbReference>
<dbReference type="PDB" id="4HTN">
    <property type="method" value="X-ray"/>
    <property type="resolution" value="1.30 A"/>
    <property type="chains" value="A=19-147"/>
</dbReference>
<dbReference type="PDB" id="4HTQ">
    <property type="method" value="X-ray"/>
    <property type="resolution" value="1.40 A"/>
    <property type="chains" value="A=19-147"/>
</dbReference>
<dbReference type="PDB" id="4HV1">
    <property type="method" value="X-ray"/>
    <property type="resolution" value="2.30 A"/>
    <property type="chains" value="A=19-147"/>
</dbReference>
<dbReference type="PDB" id="4HV2">
    <property type="method" value="X-ray"/>
    <property type="resolution" value="2.50 A"/>
    <property type="chains" value="A=19-147"/>
</dbReference>
<dbReference type="PDB" id="4I8S">
    <property type="method" value="X-ray"/>
    <property type="resolution" value="2.00 A"/>
    <property type="chains" value="A=19-147"/>
</dbReference>
<dbReference type="PDB" id="4IAS">
    <property type="method" value="X-ray"/>
    <property type="resolution" value="2.60 A"/>
    <property type="chains" value="A=19-147"/>
</dbReference>
<dbReference type="PDB" id="4IAT">
    <property type="method" value="X-ray"/>
    <property type="resolution" value="2.00 A"/>
    <property type="chains" value="A=19-147"/>
</dbReference>
<dbReference type="PDB" id="4II8">
    <property type="method" value="X-ray"/>
    <property type="resolution" value="1.88 A"/>
    <property type="chains" value="A=19-147"/>
</dbReference>
<dbReference type="PDB" id="4J1A">
    <property type="method" value="X-ray"/>
    <property type="resolution" value="1.79 A"/>
    <property type="chains" value="A=19-147"/>
</dbReference>
<dbReference type="PDB" id="4J1B">
    <property type="method" value="X-ray"/>
    <property type="resolution" value="1.66 A"/>
    <property type="chains" value="A=19-147"/>
</dbReference>
<dbReference type="PDB" id="4J7V">
    <property type="method" value="X-ray"/>
    <property type="resolution" value="1.54 A"/>
    <property type="chains" value="A=19-147"/>
</dbReference>
<dbReference type="PDB" id="4KXI">
    <property type="method" value="X-ray"/>
    <property type="resolution" value="2.00 A"/>
    <property type="chains" value="A=19-147"/>
</dbReference>
<dbReference type="PDB" id="4LFP">
    <property type="method" value="X-ray"/>
    <property type="resolution" value="1.72 A"/>
    <property type="chains" value="A=19-147"/>
</dbReference>
<dbReference type="PDB" id="4LFX">
    <property type="method" value="X-ray"/>
    <property type="resolution" value="2.10 A"/>
    <property type="chains" value="A=19-147"/>
</dbReference>
<dbReference type="PDB" id="4LGK">
    <property type="method" value="X-ray"/>
    <property type="resolution" value="1.96 A"/>
    <property type="chains" value="A=19-147"/>
</dbReference>
<dbReference type="PDB" id="4LT0">
    <property type="method" value="X-ray"/>
    <property type="resolution" value="2.10 A"/>
    <property type="chains" value="A=19-147"/>
</dbReference>
<dbReference type="PDB" id="4LT1">
    <property type="method" value="X-ray"/>
    <property type="resolution" value="2.30 A"/>
    <property type="chains" value="A=19-147"/>
</dbReference>
<dbReference type="PDB" id="4LT2">
    <property type="method" value="X-ray"/>
    <property type="resolution" value="2.00 A"/>
    <property type="chains" value="A=19-147"/>
</dbReference>
<dbReference type="PDB" id="4LT3">
    <property type="method" value="X-ray"/>
    <property type="resolution" value="2.00 A"/>
    <property type="chains" value="A=19-147"/>
</dbReference>
<dbReference type="PDB" id="4LYB">
    <property type="method" value="X-ray"/>
    <property type="resolution" value="1.21 A"/>
    <property type="chains" value="A=19-147"/>
</dbReference>
<dbReference type="PDB" id="4LYC">
    <property type="method" value="X-ray"/>
    <property type="resolution" value="1.35 A"/>
    <property type="chains" value="A=19-147"/>
</dbReference>
<dbReference type="PDB" id="4LYM">
    <property type="method" value="X-ray"/>
    <property type="resolution" value="2.10 A"/>
    <property type="chains" value="A=19-147"/>
</dbReference>
<dbReference type="PDB" id="4LYO">
    <property type="method" value="X-ray"/>
    <property type="resolution" value="2.05 A"/>
    <property type="chains" value="A=19-147"/>
</dbReference>
<dbReference type="PDB" id="4LYT">
    <property type="method" value="X-ray"/>
    <property type="resolution" value="1.90 A"/>
    <property type="chains" value="A/B=19-147"/>
</dbReference>
<dbReference type="PDB" id="4LYZ">
    <property type="method" value="X-ray"/>
    <property type="resolution" value="2.00 A"/>
    <property type="chains" value="A=19-147"/>
</dbReference>
<dbReference type="PDB" id="4LZT">
    <property type="method" value="X-ray"/>
    <property type="resolution" value="0.95 A"/>
    <property type="chains" value="A=19-147"/>
</dbReference>
<dbReference type="PDB" id="4M4O">
    <property type="method" value="X-ray"/>
    <property type="resolution" value="2.00 A"/>
    <property type="chains" value="A=19-147"/>
</dbReference>
<dbReference type="PDB" id="4M6D">
    <property type="method" value="X-ray"/>
    <property type="resolution" value="2.68 A"/>
    <property type="chains" value="A/C/E/G/I/K=19-147"/>
</dbReference>
<dbReference type="PDB" id="4MR1">
    <property type="method" value="X-ray"/>
    <property type="resolution" value="1.99 A"/>
    <property type="chains" value="A=19-147"/>
</dbReference>
<dbReference type="PDB" id="4N0J">
    <property type="method" value="X-ray"/>
    <property type="resolution" value="1.90 A"/>
    <property type="chains" value="A/B=20-147"/>
</dbReference>
<dbReference type="PDB" id="4N1C">
    <property type="method" value="X-ray"/>
    <property type="resolution" value="1.70 A"/>
    <property type="chains" value="C=19-147"/>
</dbReference>
<dbReference type="PDB" id="4N1E">
    <property type="method" value="X-ray"/>
    <property type="resolution" value="2.23 A"/>
    <property type="chains" value="I/J/K/L=19-147"/>
</dbReference>
<dbReference type="PDB" id="4N5R">
    <property type="method" value="X-ray"/>
    <property type="resolution" value="2.10 A"/>
    <property type="chains" value="A=19-147"/>
</dbReference>
<dbReference type="PDB" id="4N8Z">
    <property type="method" value="X-ray"/>
    <property type="resolution" value="1.20 A"/>
    <property type="chains" value="A=19-147"/>
</dbReference>
<dbReference type="PDB" id="4N9R">
    <property type="method" value="X-ray"/>
    <property type="resolution" value="1.55 A"/>
    <property type="chains" value="A=19-147"/>
</dbReference>
<dbReference type="PDB" id="4NEB">
    <property type="method" value="X-ray"/>
    <property type="resolution" value="1.48 A"/>
    <property type="chains" value="A=19-147"/>
</dbReference>
<dbReference type="PDB" id="4NFV">
    <property type="method" value="X-ray"/>
    <property type="resolution" value="1.63 A"/>
    <property type="chains" value="A=19-147"/>
</dbReference>
<dbReference type="PDB" id="4NG1">
    <property type="method" value="X-ray"/>
    <property type="resolution" value="1.82 A"/>
    <property type="chains" value="A=19-147"/>
</dbReference>
<dbReference type="PDB" id="4NG8">
    <property type="method" value="X-ray"/>
    <property type="resolution" value="1.09 A"/>
    <property type="chains" value="A=19-147"/>
</dbReference>
<dbReference type="PDB" id="4NGI">
    <property type="method" value="X-ray"/>
    <property type="resolution" value="1.70 A"/>
    <property type="chains" value="A=19-147"/>
</dbReference>
<dbReference type="PDB" id="4NGJ">
    <property type="method" value="X-ray"/>
    <property type="resolution" value="1.10 A"/>
    <property type="chains" value="A=19-147"/>
</dbReference>
<dbReference type="PDB" id="4NGK">
    <property type="method" value="X-ray"/>
    <property type="resolution" value="1.50 A"/>
    <property type="chains" value="A=19-147"/>
</dbReference>
<dbReference type="PDB" id="4NGL">
    <property type="method" value="X-ray"/>
    <property type="resolution" value="1.52 A"/>
    <property type="chains" value="A=19-147"/>
</dbReference>
<dbReference type="PDB" id="4NGO">
    <property type="method" value="X-ray"/>
    <property type="resolution" value="1.58 A"/>
    <property type="chains" value="A=19-147"/>
</dbReference>
<dbReference type="PDB" id="4NGV">
    <property type="method" value="X-ray"/>
    <property type="resolution" value="1.64 A"/>
    <property type="chains" value="A=19-147"/>
</dbReference>
<dbReference type="PDB" id="4NGW">
    <property type="method" value="X-ray"/>
    <property type="resolution" value="1.37 A"/>
    <property type="chains" value="A=19-147"/>
</dbReference>
<dbReference type="PDB" id="4NGY">
    <property type="method" value="X-ray"/>
    <property type="resolution" value="1.35 A"/>
    <property type="chains" value="A=19-147"/>
</dbReference>
<dbReference type="PDB" id="4NGZ">
    <property type="method" value="X-ray"/>
    <property type="resolution" value="1.70 A"/>
    <property type="chains" value="A=19-147"/>
</dbReference>
<dbReference type="PDB" id="4NHI">
    <property type="method" value="X-ray"/>
    <property type="resolution" value="1.34 A"/>
    <property type="chains" value="A=19-147"/>
</dbReference>
<dbReference type="PDB" id="4NHP">
    <property type="method" value="X-ray"/>
    <property type="resolution" value="1.42 A"/>
    <property type="chains" value="A=19-147"/>
</dbReference>
<dbReference type="PDB" id="4NHQ">
    <property type="method" value="X-ray"/>
    <property type="resolution" value="1.92 A"/>
    <property type="chains" value="A=19-147"/>
</dbReference>
<dbReference type="PDB" id="4NHS">
    <property type="method" value="X-ray"/>
    <property type="resolution" value="1.99 A"/>
    <property type="chains" value="A=19-147"/>
</dbReference>
<dbReference type="PDB" id="4NHT">
    <property type="method" value="X-ray"/>
    <property type="resolution" value="1.65 A"/>
    <property type="chains" value="A=19-147"/>
</dbReference>
<dbReference type="PDB" id="4NIJ">
    <property type="method" value="X-ray"/>
    <property type="resolution" value="1.86 A"/>
    <property type="chains" value="A=19-147"/>
</dbReference>
<dbReference type="PDB" id="4NSG">
    <property type="method" value="X-ray"/>
    <property type="resolution" value="2.00 A"/>
    <property type="chains" value="A=19-147"/>
</dbReference>
<dbReference type="PDB" id="4NSH">
    <property type="method" value="X-ray"/>
    <property type="resolution" value="2.10 A"/>
    <property type="chains" value="A=19-147"/>
</dbReference>
<dbReference type="PDB" id="4NSI">
    <property type="method" value="X-ray"/>
    <property type="resolution" value="2.30 A"/>
    <property type="chains" value="A=19-147"/>
</dbReference>
<dbReference type="PDB" id="4NSJ">
    <property type="method" value="X-ray"/>
    <property type="resolution" value="1.70 A"/>
    <property type="chains" value="A=19-147"/>
</dbReference>
<dbReference type="PDB" id="4NWE">
    <property type="method" value="X-ray"/>
    <property type="resolution" value="1.58 A"/>
    <property type="chains" value="A=19-147"/>
</dbReference>
<dbReference type="PDB" id="4NWH">
    <property type="method" value="X-ray"/>
    <property type="resolution" value="1.65 A"/>
    <property type="chains" value="A=19-147"/>
</dbReference>
<dbReference type="PDB" id="4NY5">
    <property type="method" value="X-ray"/>
    <property type="resolution" value="1.85 A"/>
    <property type="chains" value="A=19-147"/>
</dbReference>
<dbReference type="PDB" id="4O34">
    <property type="method" value="X-ray"/>
    <property type="resolution" value="2.09 A"/>
    <property type="chains" value="A=19-147"/>
</dbReference>
<dbReference type="PDB" id="4OOO">
    <property type="method" value="X-ray"/>
    <property type="resolution" value="2.15 A"/>
    <property type="chains" value="A=19-147"/>
</dbReference>
<dbReference type="PDB" id="4OOT">
    <property type="method" value="X-ray"/>
    <property type="resolution" value="1.80 A"/>
    <property type="chains" value="A=19-147"/>
</dbReference>
<dbReference type="PDB" id="4OWA">
    <property type="method" value="X-ray"/>
    <property type="resolution" value="1.80 A"/>
    <property type="chains" value="A/B=19-147"/>
</dbReference>
<dbReference type="PDB" id="4OWB">
    <property type="method" value="X-ray"/>
    <property type="resolution" value="1.69 A"/>
    <property type="chains" value="A=19-147"/>
</dbReference>
<dbReference type="PDB" id="4OWC">
    <property type="method" value="X-ray"/>
    <property type="resolution" value="1.62 A"/>
    <property type="chains" value="A=19-147"/>
</dbReference>
<dbReference type="PDB" id="4OWE">
    <property type="method" value="X-ray"/>
    <property type="resolution" value="1.41 A"/>
    <property type="chains" value="A=19-147"/>
</dbReference>
<dbReference type="PDB" id="4OWH">
    <property type="method" value="X-ray"/>
    <property type="resolution" value="1.48 A"/>
    <property type="chains" value="A=19-147"/>
</dbReference>
<dbReference type="PDB" id="4P2E">
    <property type="method" value="X-ray"/>
    <property type="resolution" value="1.60 A"/>
    <property type="chains" value="A=19-147"/>
</dbReference>
<dbReference type="PDB" id="4PGJ">
    <property type="method" value="X-ray"/>
    <property type="resolution" value="2.60 A"/>
    <property type="chains" value="B/D=19-147"/>
</dbReference>
<dbReference type="PDB" id="4PHI">
    <property type="method" value="X-ray"/>
    <property type="resolution" value="1.81 A"/>
    <property type="chains" value="A/B/C/D=19-147"/>
</dbReference>
<dbReference type="PDB" id="4PPO">
    <property type="method" value="X-ray"/>
    <property type="resolution" value="1.73 A"/>
    <property type="chains" value="A=19-147"/>
</dbReference>
<dbReference type="PDB" id="4PRQ">
    <property type="method" value="X-ray"/>
    <property type="resolution" value="1.72 A"/>
    <property type="chains" value="A/B/C/D=19-147"/>
</dbReference>
<dbReference type="PDB" id="4PRU">
    <property type="method" value="X-ray"/>
    <property type="resolution" value="2.20 A"/>
    <property type="chains" value="A/B=19-147"/>
</dbReference>
<dbReference type="PDB" id="4QEQ">
    <property type="method" value="X-ray"/>
    <property type="resolution" value="1.38 A"/>
    <property type="chains" value="A=19-147"/>
</dbReference>
<dbReference type="PDB" id="4QGZ">
    <property type="method" value="X-ray"/>
    <property type="resolution" value="2.51 A"/>
    <property type="chains" value="A=19-147"/>
</dbReference>
<dbReference type="PDB" id="4QY9">
    <property type="method" value="X-ray"/>
    <property type="resolution" value="2.05 A"/>
    <property type="chains" value="A=19-147"/>
</dbReference>
<dbReference type="PDB" id="4R0F">
    <property type="method" value="X-ray"/>
    <property type="resolution" value="1.94 A"/>
    <property type="chains" value="A/B=19-147"/>
</dbReference>
<dbReference type="PDB" id="4R6C">
    <property type="method" value="X-ray"/>
    <property type="resolution" value="1.70 A"/>
    <property type="chains" value="A=19-147"/>
</dbReference>
<dbReference type="PDB" id="4RDS">
    <property type="method" value="X-ray"/>
    <property type="resolution" value="1.23 A"/>
    <property type="chains" value="A=19-147"/>
</dbReference>
<dbReference type="PDB" id="4RLM">
    <property type="method" value="X-ray"/>
    <property type="resolution" value="1.90 A"/>
    <property type="chains" value="A=19-147"/>
</dbReference>
<dbReference type="PDB" id="4RLN">
    <property type="method" value="X-ray"/>
    <property type="resolution" value="2.17 A"/>
    <property type="chains" value="A=19-147"/>
</dbReference>
<dbReference type="PDB" id="4RW1">
    <property type="method" value="X-ray"/>
    <property type="resolution" value="1.90 A"/>
    <property type="chains" value="A=19-147"/>
</dbReference>
<dbReference type="PDB" id="4RW2">
    <property type="method" value="X-ray"/>
    <property type="resolution" value="2.30 A"/>
    <property type="chains" value="A=19-147"/>
</dbReference>
<dbReference type="PDB" id="4TSA">
    <property type="method" value="X-ray"/>
    <property type="resolution" value="2.27 A"/>
    <property type="chains" value="A=19-147"/>
</dbReference>
<dbReference type="PDB" id="4TSB">
    <property type="method" value="X-ray"/>
    <property type="resolution" value="1.95 A"/>
    <property type="chains" value="A=19-147"/>
</dbReference>
<dbReference type="PDB" id="4TSC">
    <property type="method" value="X-ray"/>
    <property type="resolution" value="1.92 A"/>
    <property type="chains" value="A=19-147"/>
</dbReference>
<dbReference type="PDB" id="4TTD">
    <property type="method" value="X-ray"/>
    <property type="resolution" value="2.15 A"/>
    <property type="chains" value="A/B=19-147"/>
</dbReference>
<dbReference type="PDB" id="4TUN">
    <property type="method" value="X-ray"/>
    <property type="resolution" value="1.92 A"/>
    <property type="chains" value="A/B=19-147"/>
</dbReference>
<dbReference type="PDB" id="4TWS">
    <property type="method" value="X-ray"/>
    <property type="resolution" value="1.45 A"/>
    <property type="chains" value="A=19-147"/>
</dbReference>
<dbReference type="PDB" id="4U3X">
    <property type="method" value="X-ray"/>
    <property type="resolution" value="2.26 A"/>
    <property type="chains" value="B/D=19-147"/>
</dbReference>
<dbReference type="PDB" id="4UWN">
    <property type="method" value="X-ray"/>
    <property type="resolution" value="1.67 A"/>
    <property type="chains" value="A=19-147"/>
</dbReference>
<dbReference type="PDB" id="4UWU">
    <property type="method" value="X-ray"/>
    <property type="resolution" value="1.78 A"/>
    <property type="chains" value="A=19-147"/>
</dbReference>
<dbReference type="PDB" id="4UWV">
    <property type="method" value="X-ray"/>
    <property type="resolution" value="1.77 A"/>
    <property type="chains" value="A=19-147"/>
</dbReference>
<dbReference type="PDB" id="4W94">
    <property type="method" value="X-ray"/>
    <property type="resolution" value="1.55 A"/>
    <property type="chains" value="A=19-147"/>
</dbReference>
<dbReference type="PDB" id="4W96">
    <property type="method" value="X-ray"/>
    <property type="resolution" value="1.50 A"/>
    <property type="chains" value="A=19-147"/>
</dbReference>
<dbReference type="PDB" id="4WG1">
    <property type="method" value="X-ray"/>
    <property type="resolution" value="1.70 A"/>
    <property type="chains" value="A=1-147"/>
</dbReference>
<dbReference type="PDB" id="4WG7">
    <property type="method" value="X-ray"/>
    <property type="resolution" value="1.70 A"/>
    <property type="chains" value="A=1-147"/>
</dbReference>
<dbReference type="PDB" id="4WL6">
    <property type="method" value="X-ray"/>
    <property type="resolution" value="1.85 A"/>
    <property type="chains" value="A=1-147"/>
</dbReference>
<dbReference type="PDB" id="4WL7">
    <property type="method" value="X-ray"/>
    <property type="resolution" value="1.95 A"/>
    <property type="chains" value="A=1-147"/>
</dbReference>
<dbReference type="PDB" id="4WLD">
    <property type="method" value="X-ray"/>
    <property type="resolution" value="1.54 A"/>
    <property type="chains" value="A=19-147"/>
</dbReference>
<dbReference type="PDB" id="4WLT">
    <property type="method" value="X-ray"/>
    <property type="resolution" value="1.60 A"/>
    <property type="chains" value="A=19-147"/>
</dbReference>
<dbReference type="PDB" id="4WLX">
    <property type="method" value="X-ray"/>
    <property type="resolution" value="1.60 A"/>
    <property type="chains" value="A=19-147"/>
</dbReference>
<dbReference type="PDB" id="4WLY">
    <property type="method" value="X-ray"/>
    <property type="resolution" value="1.62 A"/>
    <property type="chains" value="A=19-147"/>
</dbReference>
<dbReference type="PDB" id="4WM1">
    <property type="method" value="X-ray"/>
    <property type="resolution" value="1.60 A"/>
    <property type="chains" value="A=19-147"/>
</dbReference>
<dbReference type="PDB" id="4WM2">
    <property type="method" value="X-ray"/>
    <property type="resolution" value="1.60 A"/>
    <property type="chains" value="A=19-147"/>
</dbReference>
<dbReference type="PDB" id="4WM3">
    <property type="method" value="X-ray"/>
    <property type="resolution" value="1.55 A"/>
    <property type="chains" value="A=19-147"/>
</dbReference>
<dbReference type="PDB" id="4WM4">
    <property type="method" value="X-ray"/>
    <property type="resolution" value="1.60 A"/>
    <property type="chains" value="A=19-147"/>
</dbReference>
<dbReference type="PDB" id="4WM5">
    <property type="method" value="X-ray"/>
    <property type="resolution" value="1.60 A"/>
    <property type="chains" value="A=19-147"/>
</dbReference>
<dbReference type="PDB" id="4WM6">
    <property type="method" value="X-ray"/>
    <property type="resolution" value="1.85 A"/>
    <property type="chains" value="A/B/C/D=19-147"/>
</dbReference>
<dbReference type="PDB" id="4WMG">
    <property type="method" value="X-ray"/>
    <property type="resolution" value="2.50 A"/>
    <property type="chains" value="A=19-147"/>
</dbReference>
<dbReference type="PDB" id="4WO6">
    <property type="method" value="X-ray"/>
    <property type="resolution" value="2.00 A"/>
    <property type="chains" value="A=19-147"/>
</dbReference>
<dbReference type="PDB" id="4WO9">
    <property type="method" value="X-ray"/>
    <property type="resolution" value="1.99 A"/>
    <property type="chains" value="A=19-147"/>
</dbReference>
<dbReference type="PDB" id="4WOA">
    <property type="method" value="X-ray"/>
    <property type="resolution" value="1.80 A"/>
    <property type="chains" value="A=19-147"/>
</dbReference>
<dbReference type="PDB" id="4X3B">
    <property type="method" value="X-ray"/>
    <property type="resolution" value="2.10 A"/>
    <property type="chains" value="A=19-147"/>
</dbReference>
<dbReference type="PDB" id="4XAD">
    <property type="method" value="X-ray"/>
    <property type="resolution" value="1.25 A"/>
    <property type="chains" value="A=19-147"/>
</dbReference>
<dbReference type="PDB" id="4XEN">
    <property type="method" value="X-ray"/>
    <property type="resolution" value="1.55 A"/>
    <property type="chains" value="A=19-147"/>
</dbReference>
<dbReference type="PDB" id="4XJB">
    <property type="method" value="X-ray"/>
    <property type="resolution" value="1.80 A"/>
    <property type="chains" value="A=19-147"/>
</dbReference>
<dbReference type="PDB" id="4XJD">
    <property type="method" value="X-ray"/>
    <property type="resolution" value="1.80 A"/>
    <property type="chains" value="A=19-147"/>
</dbReference>
<dbReference type="PDB" id="4XJF">
    <property type="method" value="X-ray"/>
    <property type="resolution" value="1.80 A"/>
    <property type="chains" value="A=19-147"/>
</dbReference>
<dbReference type="PDB" id="4XJG">
    <property type="method" value="X-ray"/>
    <property type="resolution" value="1.80 A"/>
    <property type="chains" value="A=19-147"/>
</dbReference>
<dbReference type="PDB" id="4XJH">
    <property type="method" value="X-ray"/>
    <property type="resolution" value="2.00 A"/>
    <property type="chains" value="A=19-147"/>
</dbReference>
<dbReference type="PDB" id="4XJI">
    <property type="method" value="X-ray"/>
    <property type="resolution" value="2.00 A"/>
    <property type="chains" value="A=19-147"/>
</dbReference>
<dbReference type="PDB" id="4XN6">
    <property type="method" value="X-ray"/>
    <property type="resolution" value="1.35 A"/>
    <property type="chains" value="A=19-147"/>
</dbReference>
<dbReference type="PDB" id="4XYY">
    <property type="method" value="X-ray"/>
    <property type="resolution" value="1.38 A"/>
    <property type="chains" value="A=19-147"/>
</dbReference>
<dbReference type="PDB" id="4YEM">
    <property type="method" value="X-ray"/>
    <property type="resolution" value="1.47 A"/>
    <property type="chains" value="A=19-147"/>
</dbReference>
<dbReference type="PDB" id="4YEN">
    <property type="method" value="X-ray"/>
    <property type="resolution" value="2.00 A"/>
    <property type="chains" value="A=19-147"/>
</dbReference>
<dbReference type="PDB" id="4YEO">
    <property type="method" value="X-ray"/>
    <property type="resolution" value="0.98 A"/>
    <property type="chains" value="A=19-146"/>
</dbReference>
<dbReference type="PDB" id="4YM8">
    <property type="method" value="X-ray"/>
    <property type="resolution" value="2.10 A"/>
    <property type="chains" value="A=19-147"/>
</dbReference>
<dbReference type="PDB" id="4YOP">
    <property type="method" value="X-ray"/>
    <property type="resolution" value="2.10 A"/>
    <property type="chains" value="A=19-147"/>
</dbReference>
<dbReference type="PDB" id="4Z3M">
    <property type="method" value="X-ray"/>
    <property type="resolution" value="2.15 A"/>
    <property type="chains" value="A=19-147"/>
</dbReference>
<dbReference type="PDB" id="4Z41">
    <property type="method" value="X-ray"/>
    <property type="resolution" value="1.89 A"/>
    <property type="chains" value="A=19-147"/>
</dbReference>
<dbReference type="PDB" id="4Z46">
    <property type="method" value="X-ray"/>
    <property type="resolution" value="1.85 A"/>
    <property type="chains" value="A=19-147"/>
</dbReference>
<dbReference type="PDB" id="4Z98">
    <property type="method" value="X-ray"/>
    <property type="resolution" value="1.55 A"/>
    <property type="chains" value="A=19-147"/>
</dbReference>
<dbReference type="PDB" id="4ZEE">
    <property type="method" value="X-ray"/>
    <property type="resolution" value="1.95 A"/>
    <property type="chains" value="A=19-147"/>
</dbReference>
<dbReference type="PDB" id="4ZFP">
    <property type="method" value="X-ray"/>
    <property type="resolution" value="1.96 A"/>
    <property type="chains" value="A=19-147"/>
</dbReference>
<dbReference type="PDB" id="4ZIX">
    <property type="method" value="X-ray"/>
    <property type="resolution" value="1.89 A"/>
    <property type="chains" value="A=19-147"/>
</dbReference>
<dbReference type="PDB" id="5A3E">
    <property type="method" value="EM"/>
    <property type="resolution" value="2.50 A"/>
    <property type="chains" value="A=19-147"/>
</dbReference>
<dbReference type="PDB" id="5A3Z">
    <property type="method" value="X-ray"/>
    <property type="resolution" value="1.59 A"/>
    <property type="chains" value="A/B=1-147"/>
</dbReference>
<dbReference type="PDB" id="5AMY">
    <property type="method" value="X-ray"/>
    <property type="resolution" value="1.80 A"/>
    <property type="chains" value="A=19-147"/>
</dbReference>
<dbReference type="PDB" id="5APC">
    <property type="method" value="X-ray"/>
    <property type="resolution" value="1.70 A"/>
    <property type="chains" value="A=19-147"/>
</dbReference>
<dbReference type="PDB" id="5APD">
    <property type="method" value="X-ray"/>
    <property type="resolution" value="1.70 A"/>
    <property type="chains" value="A=19-147"/>
</dbReference>
<dbReference type="PDB" id="5APE">
    <property type="method" value="X-ray"/>
    <property type="resolution" value="1.70 A"/>
    <property type="chains" value="A=19-147"/>
</dbReference>
<dbReference type="PDB" id="5APF">
    <property type="method" value="X-ray"/>
    <property type="resolution" value="1.70 A"/>
    <property type="chains" value="A=19-147"/>
</dbReference>
<dbReference type="PDB" id="5B05">
    <property type="method" value="X-ray"/>
    <property type="resolution" value="1.80 A"/>
    <property type="chains" value="A=19-147"/>
</dbReference>
<dbReference type="PDB" id="5B06">
    <property type="method" value="X-ray"/>
    <property type="resolution" value="1.80 A"/>
    <property type="chains" value="A=19-147"/>
</dbReference>
<dbReference type="PDB" id="5B07">
    <property type="method" value="X-ray"/>
    <property type="resolution" value="1.80 A"/>
    <property type="chains" value="A=19-147"/>
</dbReference>
<dbReference type="PDB" id="5B1F">
    <property type="method" value="X-ray"/>
    <property type="resolution" value="2.30 A"/>
    <property type="chains" value="A=19-147"/>
</dbReference>
<dbReference type="PDB" id="5B1G">
    <property type="method" value="X-ray"/>
    <property type="resolution" value="2.30 A"/>
    <property type="chains" value="A=19-147"/>
</dbReference>
<dbReference type="PDB" id="5B59">
    <property type="method" value="X-ray"/>
    <property type="resolution" value="2.00 A"/>
    <property type="chains" value="A=19-147"/>
</dbReference>
<dbReference type="PDB" id="5B5J">
    <property type="method" value="X-ray"/>
    <property type="resolution" value="1.26 A"/>
    <property type="chains" value="A=19-147"/>
</dbReference>
<dbReference type="PDB" id="5C6I">
    <property type="method" value="X-ray"/>
    <property type="resolution" value="1.90 A"/>
    <property type="chains" value="A=19-147"/>
</dbReference>
<dbReference type="PDB" id="5C6J">
    <property type="method" value="X-ray"/>
    <property type="resolution" value="2.10 A"/>
    <property type="chains" value="A=19-147"/>
</dbReference>
<dbReference type="PDB" id="5C6L">
    <property type="method" value="X-ray"/>
    <property type="resolution" value="2.10 A"/>
    <property type="chains" value="A=19-147"/>
</dbReference>
<dbReference type="PDB" id="5D5C">
    <property type="method" value="X-ray"/>
    <property type="resolution" value="1.70 A"/>
    <property type="chains" value="A=19-147"/>
</dbReference>
<dbReference type="PDB" id="5D5F">
    <property type="method" value="X-ray"/>
    <property type="resolution" value="1.50 A"/>
    <property type="chains" value="A=19-147"/>
</dbReference>
<dbReference type="PDB" id="5DL9">
    <property type="method" value="X-ray"/>
    <property type="resolution" value="1.38 A"/>
    <property type="chains" value="A=19-147"/>
</dbReference>
<dbReference type="PDB" id="5DLA">
    <property type="method" value="X-ray"/>
    <property type="resolution" value="1.22 A"/>
    <property type="chains" value="A=19-147"/>
</dbReference>
<dbReference type="PDB" id="5DM9">
    <property type="method" value="X-ray"/>
    <property type="resolution" value="2.30 A"/>
    <property type="chains" value="A=19-147"/>
</dbReference>
<dbReference type="PDB" id="5E4P">
    <property type="method" value="X-ray"/>
    <property type="resolution" value="1.79 A"/>
    <property type="chains" value="A=19-147"/>
</dbReference>
<dbReference type="PDB" id="5E9R">
    <property type="method" value="X-ray"/>
    <property type="resolution" value="2.25 A"/>
    <property type="chains" value="A=19-147"/>
</dbReference>
<dbReference type="PDB" id="5EBH">
    <property type="method" value="X-ray"/>
    <property type="resolution" value="1.20 A"/>
    <property type="chains" value="A=19-147"/>
</dbReference>
<dbReference type="PDB" id="5F14">
    <property type="method" value="X-ray"/>
    <property type="resolution" value="1.15 A"/>
    <property type="chains" value="A=19-147"/>
</dbReference>
<dbReference type="PDB" id="5F16">
    <property type="method" value="X-ray"/>
    <property type="resolution" value="1.20 A"/>
    <property type="chains" value="A=19-147"/>
</dbReference>
<dbReference type="PDB" id="5F81">
    <property type="method" value="X-ray"/>
    <property type="resolution" value="2.13 A"/>
    <property type="chains" value="A=19-147"/>
</dbReference>
<dbReference type="PDB" id="5F9U">
    <property type="method" value="X-ray"/>
    <property type="resolution" value="1.85 A"/>
    <property type="chains" value="A=19-147"/>
</dbReference>
<dbReference type="PDB" id="5F9X">
    <property type="method" value="X-ray"/>
    <property type="resolution" value="1.94 A"/>
    <property type="chains" value="A=19-147"/>
</dbReference>
<dbReference type="PDB" id="5FCP">
    <property type="method" value="X-ray"/>
    <property type="resolution" value="1.55 A"/>
    <property type="chains" value="A=19-147"/>
</dbReference>
<dbReference type="PDB" id="5FDJ">
    <property type="method" value="X-ray"/>
    <property type="resolution" value="1.80 A"/>
    <property type="chains" value="A=19-147"/>
</dbReference>
<dbReference type="PDB" id="5FEK">
    <property type="method" value="X-ray"/>
    <property type="resolution" value="1.80 A"/>
    <property type="chains" value="A=19-147"/>
</dbReference>
<dbReference type="PDB" id="5FEL">
    <property type="method" value="X-ray"/>
    <property type="resolution" value="1.80 A"/>
    <property type="chains" value="A=19-147"/>
</dbReference>
<dbReference type="PDB" id="5FHW">
    <property type="method" value="X-ray"/>
    <property type="resolution" value="1.52 A"/>
    <property type="chains" value="A=19-147"/>
</dbReference>
<dbReference type="PDB" id="5FST">
    <property type="method" value="X-ray"/>
    <property type="resolution" value="1.20 A"/>
    <property type="chains" value="A=19-147"/>
</dbReference>
<dbReference type="PDB" id="5GWB">
    <property type="method" value="X-ray"/>
    <property type="resolution" value="2.00 A"/>
    <property type="chains" value="A=19-147"/>
</dbReference>
<dbReference type="PDB" id="5HLL">
    <property type="method" value="X-ray"/>
    <property type="resolution" value="1.70 A"/>
    <property type="chains" value="A=19-147"/>
</dbReference>
<dbReference type="PDB" id="5HMJ">
    <property type="method" value="X-ray"/>
    <property type="resolution" value="1.30 A"/>
    <property type="chains" value="A=19-147"/>
</dbReference>
<dbReference type="PDB" id="5HMV">
    <property type="method" value="X-ray"/>
    <property type="resolution" value="0.98 A"/>
    <property type="chains" value="A=19-146"/>
</dbReference>
<dbReference type="PDB" id="5HNC">
    <property type="method" value="X-ray"/>
    <property type="resolution" value="1.76 A"/>
    <property type="chains" value="A=19-147"/>
</dbReference>
<dbReference type="PDB" id="5HNL">
    <property type="method" value="X-ray"/>
    <property type="resolution" value="2.42 A"/>
    <property type="chains" value="A=19-147"/>
</dbReference>
<dbReference type="PDB" id="5HQ1">
    <property type="method" value="X-ray"/>
    <property type="resolution" value="1.00 A"/>
    <property type="chains" value="A=19-146"/>
</dbReference>
<dbReference type="PDB" id="5I4W">
    <property type="method" value="X-ray"/>
    <property type="resolution" value="1.60 A"/>
    <property type="chains" value="A=19-147"/>
</dbReference>
<dbReference type="PDB" id="5I4X">
    <property type="method" value="X-ray"/>
    <property type="resolution" value="1.61 A"/>
    <property type="chains" value="A=19-147"/>
</dbReference>
<dbReference type="PDB" id="5I4Y">
    <property type="method" value="X-ray"/>
    <property type="resolution" value="1.61 A"/>
    <property type="chains" value="A=19-147"/>
</dbReference>
<dbReference type="PDB" id="5I53">
    <property type="method" value="X-ray"/>
    <property type="resolution" value="1.61 A"/>
    <property type="chains" value="A=19-147"/>
</dbReference>
<dbReference type="PDB" id="5I54">
    <property type="method" value="X-ray"/>
    <property type="resolution" value="1.61 A"/>
    <property type="chains" value="A=19-147"/>
</dbReference>
<dbReference type="PDB" id="5I5Q">
    <property type="method" value="X-ray"/>
    <property type="resolution" value="1.42 A"/>
    <property type="chains" value="A=19-147"/>
</dbReference>
<dbReference type="PDB" id="5IDD">
    <property type="method" value="X-ray"/>
    <property type="resolution" value="1.13 A"/>
    <property type="chains" value="A=19-147"/>
</dbReference>
<dbReference type="PDB" id="5IEL">
    <property type="method" value="X-ray"/>
    <property type="resolution" value="1.15 A"/>
    <property type="chains" value="A=19-147"/>
</dbReference>
<dbReference type="PDB" id="5IHG">
    <property type="method" value="X-ray"/>
    <property type="resolution" value="1.75 A"/>
    <property type="chains" value="A=19-147"/>
</dbReference>
<dbReference type="PDB" id="5II3">
    <property type="method" value="X-ray"/>
    <property type="resolution" value="1.78 A"/>
    <property type="chains" value="A=19-147"/>
</dbReference>
<dbReference type="PDB" id="5ILC">
    <property type="method" value="X-ray"/>
    <property type="resolution" value="1.75 A"/>
    <property type="chains" value="A=19-147"/>
</dbReference>
<dbReference type="PDB" id="5ILF">
    <property type="method" value="X-ray"/>
    <property type="resolution" value="1.85 A"/>
    <property type="chains" value="A=19-147"/>
</dbReference>
<dbReference type="PDB" id="5J7C">
    <property type="method" value="X-ray"/>
    <property type="resolution" value="2.54 A"/>
    <property type="chains" value="A/B=19-147"/>
</dbReference>
<dbReference type="PDB" id="5JEN">
    <property type="method" value="X-ray"/>
    <property type="resolution" value="2.30 A"/>
    <property type="chains" value="B/D=19-147"/>
</dbReference>
<dbReference type="PDB" id="5K2K">
    <property type="method" value="X-ray"/>
    <property type="resolution" value="1.65 A"/>
    <property type="chains" value="A=19-147"/>
</dbReference>
<dbReference type="PDB" id="5K2N">
    <property type="method" value="X-ray"/>
    <property type="resolution" value="1.40 A"/>
    <property type="chains" value="A=19-147"/>
</dbReference>
<dbReference type="PDB" id="5K2P">
    <property type="method" value="X-ray"/>
    <property type="resolution" value="1.24 A"/>
    <property type="chains" value="A=19-147"/>
</dbReference>
<dbReference type="PDB" id="5K2Q">
    <property type="method" value="X-ray"/>
    <property type="resolution" value="1.10 A"/>
    <property type="chains" value="A=19-147"/>
</dbReference>
<dbReference type="PDB" id="5K2R">
    <property type="method" value="X-ray"/>
    <property type="resolution" value="1.60 A"/>
    <property type="chains" value="A=19-147"/>
</dbReference>
<dbReference type="PDB" id="5K2S">
    <property type="method" value="X-ray"/>
    <property type="resolution" value="1.55 A"/>
    <property type="chains" value="A=19-147"/>
</dbReference>
<dbReference type="PDB" id="5K7O">
    <property type="method" value="EM"/>
    <property type="resolution" value="1.80 A"/>
    <property type="chains" value="A=19-147"/>
</dbReference>
<dbReference type="PDB" id="5KJ9">
    <property type="method" value="X-ray"/>
    <property type="resolution" value="1.20 A"/>
    <property type="chains" value="A=19-147"/>
</dbReference>
<dbReference type="PDB" id="5KKI">
    <property type="method" value="X-ray"/>
    <property type="resolution" value="1.70 A"/>
    <property type="chains" value="A=19-147"/>
</dbReference>
<dbReference type="PDB" id="5KKJ">
    <property type="method" value="X-ray"/>
    <property type="resolution" value="2.00 A"/>
    <property type="chains" value="A=19-147"/>
</dbReference>
<dbReference type="PDB" id="5KXK">
    <property type="method" value="X-ray"/>
    <property type="resolution" value="1.20 A"/>
    <property type="chains" value="A=19-147"/>
</dbReference>
<dbReference type="PDB" id="5KXL">
    <property type="method" value="X-ray"/>
    <property type="resolution" value="1.20 A"/>
    <property type="chains" value="A=19-147"/>
</dbReference>
<dbReference type="PDB" id="5KXM">
    <property type="method" value="X-ray"/>
    <property type="resolution" value="1.20 A"/>
    <property type="chains" value="A=19-147"/>
</dbReference>
<dbReference type="PDB" id="5KXN">
    <property type="method" value="X-ray"/>
    <property type="resolution" value="1.20 A"/>
    <property type="chains" value="A=19-147"/>
</dbReference>
<dbReference type="PDB" id="5KXO">
    <property type="method" value="X-ray"/>
    <property type="resolution" value="1.20 A"/>
    <property type="chains" value="A=19-147"/>
</dbReference>
<dbReference type="PDB" id="5KXP">
    <property type="method" value="X-ray"/>
    <property type="resolution" value="1.20 A"/>
    <property type="chains" value="A=19-147"/>
</dbReference>
<dbReference type="PDB" id="5KXR">
    <property type="method" value="X-ray"/>
    <property type="resolution" value="1.20 A"/>
    <property type="chains" value="A=19-147"/>
</dbReference>
<dbReference type="PDB" id="5KXS">
    <property type="method" value="X-ray"/>
    <property type="resolution" value="1.20 A"/>
    <property type="chains" value="A=19-147"/>
</dbReference>
<dbReference type="PDB" id="5KXT">
    <property type="method" value="X-ray"/>
    <property type="resolution" value="1.20 A"/>
    <property type="chains" value="A=19-147"/>
</dbReference>
<dbReference type="PDB" id="5KXW">
    <property type="method" value="X-ray"/>
    <property type="resolution" value="1.20 A"/>
    <property type="chains" value="A=19-147"/>
</dbReference>
<dbReference type="PDB" id="5KXX">
    <property type="method" value="X-ray"/>
    <property type="resolution" value="1.20 A"/>
    <property type="chains" value="A=19-147"/>
</dbReference>
<dbReference type="PDB" id="5KXY">
    <property type="method" value="X-ray"/>
    <property type="resolution" value="1.20 A"/>
    <property type="chains" value="A=19-147"/>
</dbReference>
<dbReference type="PDB" id="5KXZ">
    <property type="method" value="X-ray"/>
    <property type="resolution" value="1.20 A"/>
    <property type="chains" value="A=19-147"/>
</dbReference>
<dbReference type="PDB" id="5KY1">
    <property type="method" value="X-ray"/>
    <property type="resolution" value="1.20 A"/>
    <property type="chains" value="A=19-147"/>
</dbReference>
<dbReference type="PDB" id="5L3H">
    <property type="method" value="X-ray"/>
    <property type="resolution" value="1.70 A"/>
    <property type="chains" value="A=19-147"/>
</dbReference>
<dbReference type="PDB" id="5L3I">
    <property type="method" value="X-ray"/>
    <property type="resolution" value="1.70 A"/>
    <property type="chains" value="A=19-147"/>
</dbReference>
<dbReference type="PDB" id="5L9J">
    <property type="method" value="X-ray"/>
    <property type="resolution" value="1.50 A"/>
    <property type="chains" value="A=19-147"/>
</dbReference>
<dbReference type="PDB" id="5LA5">
    <property type="method" value="X-ray"/>
    <property type="resolution" value="1.70 A"/>
    <property type="chains" value="A=19-147"/>
</dbReference>
<dbReference type="PDB" id="5LA8">
    <property type="method" value="X-ray"/>
    <property type="resolution" value="2.00 A"/>
    <property type="chains" value="A=19-147"/>
</dbReference>
<dbReference type="PDB" id="5LAF">
    <property type="method" value="X-ray"/>
    <property type="resolution" value="1.50 A"/>
    <property type="chains" value="A=19-147"/>
</dbReference>
<dbReference type="PDB" id="5LAG">
    <property type="method" value="X-ray"/>
    <property type="resolution" value="1.60 A"/>
    <property type="chains" value="A=19-147"/>
</dbReference>
<dbReference type="PDB" id="5LAN">
    <property type="method" value="X-ray"/>
    <property type="resolution" value="1.65 A"/>
    <property type="chains" value="A=19-147"/>
</dbReference>
<dbReference type="PDB" id="5LIN">
    <property type="method" value="X-ray"/>
    <property type="resolution" value="1.50 A"/>
    <property type="chains" value="A=19-147"/>
</dbReference>
<dbReference type="PDB" id="5LIO">
    <property type="method" value="X-ray"/>
    <property type="resolution" value="1.50 A"/>
    <property type="chains" value="A=19-147"/>
</dbReference>
<dbReference type="PDB" id="5LVG">
    <property type="method" value="X-ray"/>
    <property type="resolution" value="2.00 A"/>
    <property type="chains" value="A=19-147"/>
</dbReference>
<dbReference type="PDB" id="5LVH">
    <property type="method" value="X-ray"/>
    <property type="resolution" value="1.55 A"/>
    <property type="chains" value="A=19-147"/>
</dbReference>
<dbReference type="PDB" id="5LVI">
    <property type="method" value="X-ray"/>
    <property type="resolution" value="1.70 A"/>
    <property type="chains" value="A=19-147"/>
</dbReference>
<dbReference type="PDB" id="5LVJ">
    <property type="method" value="X-ray"/>
    <property type="resolution" value="1.60 A"/>
    <property type="chains" value="A=19-147"/>
</dbReference>
<dbReference type="PDB" id="5LXW">
    <property type="method" value="X-ray"/>
    <property type="resolution" value="1.00 A"/>
    <property type="chains" value="A=19-147"/>
</dbReference>
<dbReference type="PDB" id="5LYM">
    <property type="method" value="X-ray"/>
    <property type="resolution" value="1.80 A"/>
    <property type="chains" value="A/B=19-147"/>
</dbReference>
<dbReference type="PDB" id="5LYT">
    <property type="method" value="X-ray"/>
    <property type="resolution" value="1.90 A"/>
    <property type="chains" value="A=19-147"/>
</dbReference>
<dbReference type="PDB" id="5LYZ">
    <property type="method" value="X-ray"/>
    <property type="resolution" value="2.00 A"/>
    <property type="chains" value="A=19-147"/>
</dbReference>
<dbReference type="PDB" id="5M1Y">
    <property type="method" value="X-ray"/>
    <property type="resolution" value="1.90 A"/>
    <property type="chains" value="A/B=19-147"/>
</dbReference>
<dbReference type="PDB" id="5MJJ">
    <property type="method" value="X-ray"/>
    <property type="resolution" value="1.75 A"/>
    <property type="chains" value="A=19-147"/>
</dbReference>
<dbReference type="PDB" id="5MYY">
    <property type="method" value="X-ray"/>
    <property type="resolution" value="1.10 A"/>
    <property type="chains" value="A=19-147"/>
</dbReference>
<dbReference type="PDB" id="5NBJ">
    <property type="method" value="X-ray"/>
    <property type="resolution" value="1.27 A"/>
    <property type="chains" value="A=19-147"/>
</dbReference>
<dbReference type="PDB" id="5NE0">
    <property type="method" value="X-ray"/>
    <property type="resolution" value="1.57 A"/>
    <property type="chains" value="A=19-147"/>
</dbReference>
<dbReference type="PDB" id="5NJ1">
    <property type="method" value="X-ray"/>
    <property type="resolution" value="1.85 A"/>
    <property type="chains" value="A=19-147"/>
</dbReference>
<dbReference type="PDB" id="5NJM">
    <property type="method" value="X-ray"/>
    <property type="resolution" value="1.50 A"/>
    <property type="chains" value="A=19-147"/>
</dbReference>
<dbReference type="PDB" id="5NJP">
    <property type="method" value="X-ray"/>
    <property type="resolution" value="1.70 A"/>
    <property type="chains" value="A=19-147"/>
</dbReference>
<dbReference type="PDB" id="5NJQ">
    <property type="method" value="X-ray"/>
    <property type="resolution" value="1.70 A"/>
    <property type="chains" value="A=19-147"/>
</dbReference>
<dbReference type="PDB" id="5NJR">
    <property type="method" value="X-ray"/>
    <property type="resolution" value="1.70 A"/>
    <property type="chains" value="A=19-147"/>
</dbReference>
<dbReference type="PDB" id="5NJS">
    <property type="method" value="X-ray"/>
    <property type="resolution" value="1.70 A"/>
    <property type="chains" value="A=19-147"/>
</dbReference>
<dbReference type="PDB" id="5O4W">
    <property type="method" value="EM"/>
    <property type="resolution" value="2.11 A"/>
    <property type="chains" value="A/B=19-147"/>
</dbReference>
<dbReference type="PDB" id="5O4X">
    <property type="method" value="EM"/>
    <property type="resolution" value="2.11 A"/>
    <property type="chains" value="A/B=19-147"/>
</dbReference>
<dbReference type="PDB" id="5O6Q">
    <property type="method" value="X-ray"/>
    <property type="resolution" value="1.45 A"/>
    <property type="chains" value="A=19-147"/>
</dbReference>
<dbReference type="PDB" id="5OB6">
    <property type="method" value="X-ray"/>
    <property type="resolution" value="1.88 A"/>
    <property type="chains" value="A=19-147"/>
</dbReference>
<dbReference type="PDB" id="5OB7">
    <property type="method" value="X-ray"/>
    <property type="resolution" value="2.10 A"/>
    <property type="chains" value="A=19-147"/>
</dbReference>
<dbReference type="PDB" id="5OB8">
    <property type="method" value="X-ray"/>
    <property type="resolution" value="1.85 A"/>
    <property type="chains" value="A=19-147"/>
</dbReference>
<dbReference type="PDB" id="5OB9">
    <property type="method" value="X-ray"/>
    <property type="resolution" value="2.38 A"/>
    <property type="chains" value="A=19-147"/>
</dbReference>
<dbReference type="PDB" id="5OCV">
    <property type="method" value="EM"/>
    <property type="resolution" value="2.20 A"/>
    <property type="chains" value="A/B=19-147"/>
</dbReference>
<dbReference type="PDB" id="5OER">
    <property type="method" value="X-ray"/>
    <property type="resolution" value="1.90 A"/>
    <property type="chains" value="A=19-147"/>
</dbReference>
<dbReference type="PDB" id="5OLE">
    <property type="method" value="X-ray"/>
    <property type="resolution" value="1.78 A"/>
    <property type="chains" value="A=19-147"/>
</dbReference>
<dbReference type="PDB" id="5OOV">
    <property type="method" value="X-ray"/>
    <property type="resolution" value="1.36 A"/>
    <property type="chains" value="B=19-147"/>
</dbReference>
<dbReference type="PDB" id="5OOY">
    <property type="method" value="X-ray"/>
    <property type="resolution" value="1.72 A"/>
    <property type="chains" value="B/F=19-147"/>
</dbReference>
<dbReference type="PDB" id="5OP1">
    <property type="method" value="X-ray"/>
    <property type="resolution" value="2.28 A"/>
    <property type="chains" value="B=19-147"/>
</dbReference>
<dbReference type="PDB" id="5T3F">
    <property type="method" value="X-ray"/>
    <property type="resolution" value="1.45 A"/>
    <property type="chains" value="A=19-147"/>
</dbReference>
<dbReference type="PDB" id="5TK0">
    <property type="method" value="X-ray"/>
    <property type="resolution" value="1.79 A"/>
    <property type="chains" value="A=19-146"/>
</dbReference>
<dbReference type="PDB" id="5UVJ">
    <property type="method" value="X-ray"/>
    <property type="resolution" value="2.05 A"/>
    <property type="chains" value="A=19-147"/>
</dbReference>
<dbReference type="PDB" id="5V4G">
    <property type="method" value="X-ray"/>
    <property type="resolution" value="1.20 A"/>
    <property type="chains" value="A=19-147"/>
</dbReference>
<dbReference type="PDB" id="5V4H">
    <property type="method" value="X-ray"/>
    <property type="resolution" value="1.22 A"/>
    <property type="chains" value="A=19-147"/>
</dbReference>
<dbReference type="PDB" id="5V4I">
    <property type="method" value="X-ray"/>
    <property type="resolution" value="1.50 A"/>
    <property type="chains" value="A=19-147"/>
</dbReference>
<dbReference type="PDB" id="5WR9">
    <property type="method" value="X-ray"/>
    <property type="resolution" value="1.80 A"/>
    <property type="chains" value="A=19-147"/>
</dbReference>
<dbReference type="PDB" id="5WRA">
    <property type="method" value="X-ray"/>
    <property type="resolution" value="1.45 A"/>
    <property type="chains" value="A=19-147"/>
</dbReference>
<dbReference type="PDB" id="5WRB">
    <property type="method" value="X-ray"/>
    <property type="resolution" value="2.01 A"/>
    <property type="chains" value="A=19-147"/>
</dbReference>
<dbReference type="PDB" id="5YIN">
    <property type="method" value="X-ray"/>
    <property type="resolution" value="1.66 A"/>
    <property type="chains" value="A=19-147"/>
</dbReference>
<dbReference type="PDB" id="5YKY">
    <property type="method" value="X-ray"/>
    <property type="resolution" value="1.88 A"/>
    <property type="chains" value="A=19-147"/>
</dbReference>
<dbReference type="PDB" id="6A10">
    <property type="method" value="X-ray"/>
    <property type="resolution" value="1.13 A"/>
    <property type="chains" value="A/B/C=19-147"/>
</dbReference>
<dbReference type="PDB" id="6A4N">
    <property type="method" value="X-ray"/>
    <property type="resolution" value="1.75 A"/>
    <property type="chains" value="A=19-147"/>
</dbReference>
<dbReference type="PDB" id="6A4O">
    <property type="method" value="X-ray"/>
    <property type="resolution" value="1.75 A"/>
    <property type="chains" value="A=19-147"/>
</dbReference>
<dbReference type="PDB" id="6A4P">
    <property type="method" value="X-ray"/>
    <property type="resolution" value="1.76 A"/>
    <property type="chains" value="A=19-147"/>
</dbReference>
<dbReference type="PDB" id="6A4Q">
    <property type="method" value="X-ray"/>
    <property type="resolution" value="1.75 A"/>
    <property type="chains" value="A=19-147"/>
</dbReference>
<dbReference type="PDB" id="6ABN">
    <property type="method" value="X-ray"/>
    <property type="resolution" value="1.17 A"/>
    <property type="chains" value="A=19-147"/>
</dbReference>
<dbReference type="PDB" id="6ABZ">
    <property type="method" value="X-ray"/>
    <property type="resolution" value="1.70 A"/>
    <property type="chains" value="A=19-147"/>
</dbReference>
<dbReference type="PDB" id="6AC2">
    <property type="method" value="X-ray"/>
    <property type="resolution" value="1.23 A"/>
    <property type="chains" value="A=19-147"/>
</dbReference>
<dbReference type="PDB" id="6AD5">
    <property type="method" value="X-ray"/>
    <property type="resolution" value="1.75 A"/>
    <property type="chains" value="A=19-147"/>
</dbReference>
<dbReference type="PDB" id="6ADF">
    <property type="method" value="X-ray"/>
    <property type="resolution" value="1.08 A"/>
    <property type="chains" value="A=19-147"/>
</dbReference>
<dbReference type="PDB" id="6AEA">
    <property type="method" value="X-ray"/>
    <property type="resolution" value="1.40 A"/>
    <property type="chains" value="A=19-147"/>
</dbReference>
<dbReference type="PDB" id="6AGN">
    <property type="method" value="X-ray"/>
    <property type="resolution" value="1.08 A"/>
    <property type="chains" value="A=19-147"/>
</dbReference>
<dbReference type="PDB" id="6AGR">
    <property type="method" value="X-ray"/>
    <property type="resolution" value="1.22 A"/>
    <property type="chains" value="A=19-147"/>
</dbReference>
<dbReference type="PDB" id="6AHH">
    <property type="method" value="X-ray"/>
    <property type="resolution" value="2.10 A"/>
    <property type="chains" value="A=19-147"/>
</dbReference>
<dbReference type="PDB" id="6AHL">
    <property type="method" value="X-ray"/>
    <property type="resolution" value="1.80 A"/>
    <property type="chains" value="A=19-147"/>
</dbReference>
<dbReference type="PDB" id="6APM">
    <property type="method" value="X-ray"/>
    <property type="resolution" value="2.05 A"/>
    <property type="chains" value="A=19-147"/>
</dbReference>
<dbReference type="PDB" id="6B7U">
    <property type="method" value="X-ray"/>
    <property type="resolution" value="1.58 A"/>
    <property type="chains" value="A=19-147"/>
</dbReference>
<dbReference type="PDB" id="6B7V">
    <property type="method" value="X-ray"/>
    <property type="resolution" value="1.48 A"/>
    <property type="chains" value="A=19-147"/>
</dbReference>
<dbReference type="PDB" id="6B7W">
    <property type="method" value="X-ray"/>
    <property type="resolution" value="1.48 A"/>
    <property type="chains" value="A=19-147"/>
</dbReference>
<dbReference type="PDB" id="6BO1">
    <property type="method" value="X-ray"/>
    <property type="resolution" value="1.24 A"/>
    <property type="chains" value="A=19-147"/>
</dbReference>
<dbReference type="PDB" id="6BO2">
    <property type="method" value="X-ray"/>
    <property type="resolution" value="1.48 A"/>
    <property type="chains" value="A=19-147"/>
</dbReference>
<dbReference type="PDB" id="6BRE">
    <property type="method" value="X-ray"/>
    <property type="resolution" value="1.86 A"/>
    <property type="chains" value="A=19-147"/>
</dbReference>
<dbReference type="PDB" id="6CIW">
    <property type="method" value="X-ray"/>
    <property type="resolution" value="1.42 A"/>
    <property type="chains" value="A=19-147"/>
</dbReference>
<dbReference type="PDB" id="6D6E">
    <property type="method" value="X-ray"/>
    <property type="resolution" value="2.00 A"/>
    <property type="chains" value="A=19-147"/>
</dbReference>
<dbReference type="PDB" id="6D6F">
    <property type="method" value="X-ray"/>
    <property type="resolution" value="2.00 A"/>
    <property type="chains" value="A=19-147"/>
</dbReference>
<dbReference type="PDB" id="6D6G">
    <property type="method" value="X-ray"/>
    <property type="resolution" value="2.00 A"/>
    <property type="chains" value="A=19-147"/>
</dbReference>
<dbReference type="PDB" id="6D6H">
    <property type="method" value="X-ray"/>
    <property type="resolution" value="2.00 A"/>
    <property type="chains" value="A=19-147"/>
</dbReference>
<dbReference type="PDB" id="6F1L">
    <property type="method" value="X-ray"/>
    <property type="resolution" value="1.30 A"/>
    <property type="chains" value="A=19-145"/>
</dbReference>
<dbReference type="PDB" id="6F1M">
    <property type="method" value="X-ray"/>
    <property type="resolution" value="1.48 A"/>
    <property type="chains" value="A=19-147"/>
</dbReference>
<dbReference type="PDB" id="6F1O">
    <property type="method" value="X-ray"/>
    <property type="resolution" value="0.96 A"/>
    <property type="chains" value="A=19-147"/>
</dbReference>
<dbReference type="PDB" id="6F1P">
    <property type="method" value="X-ray"/>
    <property type="resolution" value="1.12 A"/>
    <property type="chains" value="A=19-147"/>
</dbReference>
<dbReference type="PDB" id="6F1R">
    <property type="method" value="X-ray"/>
    <property type="resolution" value="1.10 A"/>
    <property type="chains" value="A=19-147"/>
</dbReference>
<dbReference type="PDB" id="6F2I">
    <property type="method" value="X-ray"/>
    <property type="resolution" value="1.20 A"/>
    <property type="chains" value="A=19-147"/>
</dbReference>
<dbReference type="PDB" id="6F2J">
    <property type="method" value="X-ray"/>
    <property type="resolution" value="1.30 A"/>
    <property type="chains" value="A=19-147"/>
</dbReference>
<dbReference type="PDB" id="6F2K">
    <property type="method" value="X-ray"/>
    <property type="resolution" value="1.50 A"/>
    <property type="chains" value="A=19-147"/>
</dbReference>
<dbReference type="PDB" id="6F9X">
    <property type="method" value="X-ray"/>
    <property type="resolution" value="1.25 A"/>
    <property type="chains" value="A=19-145"/>
</dbReference>
<dbReference type="PDB" id="6F9Y">
    <property type="method" value="X-ray"/>
    <property type="resolution" value="1.20 A"/>
    <property type="chains" value="A=19-145"/>
</dbReference>
<dbReference type="PDB" id="6F9Z">
    <property type="method" value="X-ray"/>
    <property type="resolution" value="1.20 A"/>
    <property type="chains" value="A=19-145"/>
</dbReference>
<dbReference type="PDB" id="6FA0">
    <property type="method" value="X-ray"/>
    <property type="resolution" value="1.30 A"/>
    <property type="chains" value="A=19-145"/>
</dbReference>
<dbReference type="PDB" id="6FRO">
    <property type="method" value="X-ray"/>
    <property type="resolution" value="1.42 A"/>
    <property type="chains" value="A=19-147"/>
</dbReference>
<dbReference type="PDB" id="6FRQ">
    <property type="method" value="X-ray"/>
    <property type="resolution" value="1.69 A"/>
    <property type="chains" value="A=19-147"/>
</dbReference>
<dbReference type="PDB" id="6FSJ">
    <property type="method" value="X-ray"/>
    <property type="resolution" value="1.20 A"/>
    <property type="chains" value="A=19-147"/>
</dbReference>
<dbReference type="PDB" id="6FTR">
    <property type="method" value="X-ray"/>
    <property type="resolution" value="1.76 A"/>
    <property type="chains" value="A=19-147"/>
</dbReference>
<dbReference type="PDB" id="6G5C">
    <property type="method" value="X-ray"/>
    <property type="resolution" value="1.80 A"/>
    <property type="chains" value="A=19-147"/>
</dbReference>
<dbReference type="PDB" id="6G5V">
    <property type="method" value="X-ray"/>
    <property type="resolution" value="1.96 A"/>
    <property type="chains" value="A=19-147"/>
</dbReference>
<dbReference type="PDB" id="6G5Y">
    <property type="method" value="X-ray"/>
    <property type="resolution" value="1.49 A"/>
    <property type="chains" value="A=19-147"/>
</dbReference>
<dbReference type="PDB" id="6G8A">
    <property type="method" value="X-ray"/>
    <property type="resolution" value="1.14 A"/>
    <property type="chains" value="C=19-147"/>
</dbReference>
<dbReference type="PDB" id="6GF0">
    <property type="method" value="X-ray"/>
    <property type="resolution" value="2.07 A"/>
    <property type="chains" value="A=19-147"/>
</dbReference>
<dbReference type="PDB" id="6GNL">
    <property type="method" value="X-ray"/>
    <property type="resolution" value="1.23 A"/>
    <property type="chains" value="A=19-147"/>
</dbReference>
<dbReference type="PDB" id="6GOB">
    <property type="method" value="X-ray"/>
    <property type="resolution" value="1.96 A"/>
    <property type="chains" value="A=19-147"/>
</dbReference>
<dbReference type="PDB" id="6GOH">
    <property type="method" value="X-ray"/>
    <property type="resolution" value="2.43 A"/>
    <property type="chains" value="A=19-147"/>
</dbReference>
<dbReference type="PDB" id="6GOI">
    <property type="method" value="X-ray"/>
    <property type="resolution" value="1.99 A"/>
    <property type="chains" value="A=19-147"/>
</dbReference>
<dbReference type="PDB" id="6GOJ">
    <property type="method" value="X-ray"/>
    <property type="resolution" value="2.25 A"/>
    <property type="chains" value="A=19-147"/>
</dbReference>
<dbReference type="PDB" id="6H0K">
    <property type="method" value="X-ray"/>
    <property type="resolution" value="2.20 A"/>
    <property type="chains" value="A=19-147"/>
</dbReference>
<dbReference type="PDB" id="6H0L">
    <property type="method" value="X-ray"/>
    <property type="resolution" value="1.90 A"/>
    <property type="chains" value="A=19-147"/>
</dbReference>
<dbReference type="PDB" id="6H3B">
    <property type="method" value="EM"/>
    <property type="resolution" value="1.90 A"/>
    <property type="chains" value="A=19-147"/>
</dbReference>
<dbReference type="PDB" id="6H79">
    <property type="method" value="X-ray"/>
    <property type="resolution" value="2.10 A"/>
    <property type="chains" value="A=19-147"/>
</dbReference>
<dbReference type="PDB" id="6HT2">
    <property type="method" value="X-ray"/>
    <property type="resolution" value="2.60 A"/>
    <property type="chains" value="A/B=19-147"/>
</dbReference>
<dbReference type="PDB" id="6HU5">
    <property type="method" value="EM"/>
    <property type="resolution" value="2.80 A"/>
    <property type="chains" value="A/B=19-147"/>
</dbReference>
<dbReference type="PDB" id="6HY4">
    <property type="method" value="X-ray"/>
    <property type="resolution" value="1.83 A"/>
    <property type="chains" value="A=19-146"/>
</dbReference>
<dbReference type="PDB" id="6HY6">
    <property type="method" value="X-ray"/>
    <property type="resolution" value="1.87 A"/>
    <property type="chains" value="B=19-146"/>
</dbReference>
<dbReference type="PDB" id="6HY8">
    <property type="method" value="X-ray"/>
    <property type="resolution" value="1.22 A"/>
    <property type="chains" value="A=19-147"/>
</dbReference>
<dbReference type="PDB" id="6HYB">
    <property type="method" value="X-ray"/>
    <property type="resolution" value="1.96 A"/>
    <property type="chains" value="A=19-146"/>
</dbReference>
<dbReference type="PDB" id="6IG6">
    <property type="method" value="X-ray"/>
    <property type="resolution" value="1.70 A"/>
    <property type="chains" value="A=19-147"/>
</dbReference>
<dbReference type="PDB" id="6IRJ">
    <property type="method" value="X-ray"/>
    <property type="resolution" value="1.65 A"/>
    <property type="chains" value="A=19-147"/>
</dbReference>
<dbReference type="PDB" id="6JB2">
    <property type="method" value="X-ray"/>
    <property type="resolution" value="1.50 A"/>
    <property type="chains" value="B=19-147"/>
</dbReference>
<dbReference type="PDB" id="6JB5">
    <property type="method" value="X-ray"/>
    <property type="resolution" value="1.55 A"/>
    <property type="chains" value="B=19-147"/>
</dbReference>
<dbReference type="PDB" id="6JB8">
    <property type="method" value="X-ray"/>
    <property type="resolution" value="1.65 A"/>
    <property type="chains" value="B=19-147"/>
</dbReference>
<dbReference type="PDB" id="6JXP">
    <property type="method" value="X-ray"/>
    <property type="resolution" value="1.56 A"/>
    <property type="chains" value="A=1-147"/>
</dbReference>
<dbReference type="PDB" id="6JXQ">
    <property type="method" value="X-ray"/>
    <property type="resolution" value="1.76 A"/>
    <property type="chains" value="A=1-147"/>
</dbReference>
<dbReference type="PDB" id="6JZI">
    <property type="method" value="X-ray"/>
    <property type="resolution" value="2.00 A"/>
    <property type="chains" value="A=19-147"/>
</dbReference>
<dbReference type="PDB" id="6K5Q">
    <property type="method" value="X-ray"/>
    <property type="resolution" value="1.18 A"/>
    <property type="chains" value="A=19-147"/>
</dbReference>
<dbReference type="PDB" id="6K8G">
    <property type="method" value="Other"/>
    <property type="resolution" value="2.00 A"/>
    <property type="chains" value="A=19-147"/>
</dbReference>
<dbReference type="PDB" id="6KCB">
    <property type="method" value="X-ray"/>
    <property type="resolution" value="1.80 A"/>
    <property type="chains" value="A=1-147"/>
</dbReference>
<dbReference type="PDB" id="6KCD">
    <property type="method" value="X-ray"/>
    <property type="resolution" value="1.50 A"/>
    <property type="chains" value="A=1-147"/>
</dbReference>
<dbReference type="PDB" id="6KD1">
    <property type="method" value="X-ray"/>
    <property type="resolution" value="1.85 A"/>
    <property type="chains" value="A=1-147"/>
</dbReference>
<dbReference type="PDB" id="6LAV">
    <property type="method" value="EM"/>
    <property type="resolution" value="1.73 A"/>
    <property type="chains" value="A=19-147"/>
</dbReference>
<dbReference type="PDB" id="6LL3">
    <property type="method" value="X-ray"/>
    <property type="resolution" value="1.85 A"/>
    <property type="chains" value="A=1-147"/>
</dbReference>
<dbReference type="PDB" id="6LT5">
    <property type="method" value="X-ray"/>
    <property type="resolution" value="1.32 A"/>
    <property type="chains" value="A=19-147"/>
</dbReference>
<dbReference type="PDB" id="6LYT">
    <property type="method" value="X-ray"/>
    <property type="resolution" value="1.90 A"/>
    <property type="chains" value="A=19-147"/>
</dbReference>
<dbReference type="PDB" id="6LYZ">
    <property type="method" value="X-ray"/>
    <property type="resolution" value="2.00 A"/>
    <property type="chains" value="A=19-147"/>
</dbReference>
<dbReference type="PDB" id="6MQV">
    <property type="method" value="X-ray"/>
    <property type="resolution" value="2.00 A"/>
    <property type="chains" value="A=19-147"/>
</dbReference>
<dbReference type="PDB" id="6MUZ">
    <property type="method" value="X-ray"/>
    <property type="resolution" value="1.84 A"/>
    <property type="chains" value="A=19-147"/>
</dbReference>
<dbReference type="PDB" id="6MX9">
    <property type="method" value="X-ray"/>
    <property type="resolution" value="1.35 A"/>
    <property type="chains" value="A=19-147"/>
</dbReference>
<dbReference type="PDB" id="6O2H">
    <property type="method" value="X-ray"/>
    <property type="resolution" value="1.21 A"/>
    <property type="chains" value="A=19-147"/>
</dbReference>
<dbReference type="PDB" id="6P4A">
    <property type="method" value="X-ray"/>
    <property type="resolution" value="2.20 A"/>
    <property type="chains" value="C=19-147"/>
</dbReference>
<dbReference type="PDB" id="6P4B">
    <property type="method" value="X-ray"/>
    <property type="resolution" value="1.90 A"/>
    <property type="chains" value="C/D=19-147"/>
</dbReference>
<dbReference type="PDB" id="6P4D">
    <property type="method" value="X-ray"/>
    <property type="resolution" value="1.05 A"/>
    <property type="chains" value="A=19-147"/>
</dbReference>
<dbReference type="PDB" id="6PBB">
    <property type="method" value="X-ray"/>
    <property type="resolution" value="1.89 A"/>
    <property type="chains" value="A=19-147"/>
</dbReference>
<dbReference type="PDB" id="6PL9">
    <property type="method" value="X-ray"/>
    <property type="resolution" value="1.20 A"/>
    <property type="chains" value="A=19-147"/>
</dbReference>
<dbReference type="PDB" id="6PLA">
    <property type="method" value="X-ray"/>
    <property type="resolution" value="1.25 A"/>
    <property type="chains" value="A=19-147"/>
</dbReference>
<dbReference type="PDB" id="6PLB">
    <property type="method" value="X-ray"/>
    <property type="resolution" value="1.30 A"/>
    <property type="chains" value="A=19-147"/>
</dbReference>
<dbReference type="PDB" id="6Q88">
    <property type="method" value="X-ray"/>
    <property type="resolution" value="1.74 A"/>
    <property type="chains" value="A=19-147"/>
</dbReference>
<dbReference type="PDB" id="6Q8R">
    <property type="method" value="X-ray"/>
    <property type="resolution" value="1.70 A"/>
    <property type="chains" value="A=19-147"/>
</dbReference>
<dbReference type="PDB" id="6Q8T">
    <property type="method" value="X-ray"/>
    <property type="resolution" value="1.74 A"/>
    <property type="chains" value="A=19-147"/>
</dbReference>
<dbReference type="PDB" id="6QEA">
    <property type="method" value="X-ray"/>
    <property type="resolution" value="1.96 A"/>
    <property type="chains" value="A=19-147"/>
</dbReference>
<dbReference type="PDB" id="6QNB">
    <property type="method" value="X-ray"/>
    <property type="resolution" value="1.70 A"/>
    <property type="chains" value="A=19-147"/>
</dbReference>
<dbReference type="PDB" id="6QQ3">
    <property type="method" value="X-ray"/>
    <property type="resolution" value="1.53 A"/>
    <property type="chains" value="B=19-147"/>
</dbReference>
<dbReference type="PDB" id="6QQC">
    <property type="method" value="X-ray"/>
    <property type="resolution" value="1.42 A"/>
    <property type="chains" value="A=19-147"/>
</dbReference>
<dbReference type="PDB" id="6QQD">
    <property type="method" value="X-ray"/>
    <property type="resolution" value="1.92 A"/>
    <property type="chains" value="A=19-147"/>
</dbReference>
<dbReference type="PDB" id="6QQE">
    <property type="method" value="X-ray"/>
    <property type="resolution" value="1.37 A"/>
    <property type="chains" value="A=19-147"/>
</dbReference>
<dbReference type="PDB" id="6QQF">
    <property type="method" value="X-ray"/>
    <property type="resolution" value="1.95 A"/>
    <property type="chains" value="A=19-147"/>
</dbReference>
<dbReference type="PDB" id="6QWW">
    <property type="method" value="X-ray"/>
    <property type="resolution" value="1.35 A"/>
    <property type="chains" value="A=19-147"/>
</dbReference>
<dbReference type="PDB" id="6QWX">
    <property type="method" value="X-ray"/>
    <property type="resolution" value="1.35 A"/>
    <property type="chains" value="A=19-147"/>
</dbReference>
<dbReference type="PDB" id="6QWY">
    <property type="method" value="X-ray"/>
    <property type="resolution" value="1.35 A"/>
    <property type="chains" value="A=19-147"/>
</dbReference>
<dbReference type="PDB" id="6QWZ">
    <property type="method" value="X-ray"/>
    <property type="resolution" value="1.35 A"/>
    <property type="chains" value="A=19-147"/>
</dbReference>
<dbReference type="PDB" id="6QX0">
    <property type="method" value="X-ray"/>
    <property type="resolution" value="1.35 A"/>
    <property type="chains" value="A=19-147"/>
</dbReference>
<dbReference type="PDB" id="6QXW">
    <property type="method" value="X-ray"/>
    <property type="resolution" value="1.70 A"/>
    <property type="chains" value="A=19-147"/>
</dbReference>
<dbReference type="PDB" id="6QXX">
    <property type="method" value="X-ray"/>
    <property type="resolution" value="1.70 A"/>
    <property type="chains" value="A=19-147"/>
</dbReference>
<dbReference type="PDB" id="6QXY">
    <property type="method" value="X-ray"/>
    <property type="resolution" value="1.70 A"/>
    <property type="chains" value="A=19-147"/>
</dbReference>
<dbReference type="PDB" id="6QY0">
    <property type="method" value="X-ray"/>
    <property type="resolution" value="1.70 A"/>
    <property type="chains" value="A=19-147"/>
</dbReference>
<dbReference type="PDB" id="6QY1">
    <property type="method" value="X-ray"/>
    <property type="resolution" value="1.70 A"/>
    <property type="chains" value="A=19-147"/>
</dbReference>
<dbReference type="PDB" id="6QY2">
    <property type="method" value="X-ray"/>
    <property type="resolution" value="1.70 A"/>
    <property type="chains" value="A=19-147"/>
</dbReference>
<dbReference type="PDB" id="6QY4">
    <property type="method" value="X-ray"/>
    <property type="resolution" value="1.84 A"/>
    <property type="chains" value="A=19-147"/>
</dbReference>
<dbReference type="PDB" id="6QY5">
    <property type="method" value="X-ray"/>
    <property type="resolution" value="1.84 A"/>
    <property type="chains" value="A=19-147"/>
</dbReference>
<dbReference type="PDB" id="6RNB">
    <property type="method" value="X-ray"/>
    <property type="resolution" value="1.70 A"/>
    <property type="chains" value="A=19-147"/>
</dbReference>
<dbReference type="PDB" id="6RNC">
    <property type="method" value="X-ray"/>
    <property type="resolution" value="1.80 A"/>
    <property type="chains" value="A=19-147"/>
</dbReference>
<dbReference type="PDB" id="6RO3">
    <property type="method" value="X-ray"/>
    <property type="resolution" value="1.03 A"/>
    <property type="chains" value="A=19-147"/>
</dbReference>
<dbReference type="PDB" id="6RO5">
    <property type="method" value="X-ray"/>
    <property type="resolution" value="1.68 A"/>
    <property type="chains" value="A/B=19-147"/>
</dbReference>
<dbReference type="PDB" id="6RT1">
    <property type="method" value="X-ray"/>
    <property type="resolution" value="1.34 A"/>
    <property type="chains" value="A=19-147"/>
</dbReference>
<dbReference type="PDB" id="6RT3">
    <property type="method" value="X-ray"/>
    <property type="resolution" value="1.05 A"/>
    <property type="chains" value="A=19-147"/>
</dbReference>
<dbReference type="PDB" id="6RT9">
    <property type="method" value="X-ray"/>
    <property type="resolution" value="1.55 A"/>
    <property type="chains" value="A=19-147"/>
</dbReference>
<dbReference type="PDB" id="6RTA">
    <property type="method" value="X-ray"/>
    <property type="resolution" value="1.80 A"/>
    <property type="chains" value="A=19-147"/>
</dbReference>
<dbReference type="PDB" id="6RXI">
    <property type="method" value="X-ray"/>
    <property type="resolution" value="2.00 A"/>
    <property type="chains" value="A=19-147"/>
</dbReference>
<dbReference type="PDB" id="6S2N">
    <property type="method" value="EM"/>
    <property type="resolution" value="1.80 A"/>
    <property type="chains" value="A=19-147"/>
</dbReference>
<dbReference type="PDB" id="6S7N">
    <property type="method" value="X-ray"/>
    <property type="resolution" value="1.20 A"/>
    <property type="chains" value="A=19-147"/>
</dbReference>
<dbReference type="PDB" id="6SET">
    <property type="method" value="X-ray"/>
    <property type="resolution" value="1.90 A"/>
    <property type="chains" value="A=19-147"/>
</dbReference>
<dbReference type="PDB" id="6SEU">
    <property type="method" value="X-ray"/>
    <property type="resolution" value="1.95 A"/>
    <property type="chains" value="A=19-147"/>
</dbReference>
<dbReference type="PDB" id="6SEW">
    <property type="method" value="X-ray"/>
    <property type="resolution" value="2.12 A"/>
    <property type="chains" value="A=19-147"/>
</dbReference>
<dbReference type="PDB" id="6SEX">
    <property type="method" value="X-ray"/>
    <property type="resolution" value="1.78 A"/>
    <property type="chains" value="A=19-147"/>
</dbReference>
<dbReference type="PDB" id="6SEZ">
    <property type="method" value="X-ray"/>
    <property type="resolution" value="2.22 A"/>
    <property type="chains" value="A=19-147"/>
</dbReference>
<dbReference type="PDB" id="6SIJ">
    <property type="method" value="X-ray"/>
    <property type="resolution" value="1.61 A"/>
    <property type="chains" value="A=1-147"/>
</dbReference>
<dbReference type="PDB" id="6SIK">
    <property type="method" value="X-ray"/>
    <property type="resolution" value="1.61 A"/>
    <property type="chains" value="A=1-147"/>
</dbReference>
<dbReference type="PDB" id="6SIL">
    <property type="method" value="X-ray"/>
    <property type="resolution" value="1.61 A"/>
    <property type="chains" value="A=1-147"/>
</dbReference>
<dbReference type="PDB" id="6SIM">
    <property type="method" value="X-ray"/>
    <property type="resolution" value="1.61 A"/>
    <property type="chains" value="A=1-147"/>
</dbReference>
<dbReference type="PDB" id="6SR0">
    <property type="method" value="X-ray"/>
    <property type="resolution" value="2.30 A"/>
    <property type="chains" value="A=1-147"/>
</dbReference>
<dbReference type="PDB" id="6SR1">
    <property type="method" value="X-ray"/>
    <property type="resolution" value="2.30 A"/>
    <property type="chains" value="A=1-147"/>
</dbReference>
<dbReference type="PDB" id="6SR2">
    <property type="method" value="X-ray"/>
    <property type="resolution" value="2.30 A"/>
    <property type="chains" value="A=1-147"/>
</dbReference>
<dbReference type="PDB" id="6SR3">
    <property type="method" value="X-ray"/>
    <property type="resolution" value="2.30 A"/>
    <property type="chains" value="A=1-147"/>
</dbReference>
<dbReference type="PDB" id="6SR4">
    <property type="method" value="X-ray"/>
    <property type="resolution" value="2.30 A"/>
    <property type="chains" value="A=1-147"/>
</dbReference>
<dbReference type="PDB" id="6SR5">
    <property type="method" value="X-ray"/>
    <property type="resolution" value="2.30 A"/>
    <property type="chains" value="A=1-147"/>
</dbReference>
<dbReference type="PDB" id="6SYC">
    <property type="method" value="X-ray"/>
    <property type="resolution" value="1.38 A"/>
    <property type="chains" value="A/B=19-147"/>
</dbReference>
<dbReference type="PDB" id="6SYD">
    <property type="method" value="X-ray"/>
    <property type="resolution" value="1.10 A"/>
    <property type="chains" value="A=19-147"/>
</dbReference>
<dbReference type="PDB" id="6SYE">
    <property type="method" value="X-ray"/>
    <property type="resolution" value="0.97 A"/>
    <property type="chains" value="A=19-147"/>
</dbReference>
<dbReference type="PDB" id="6TVL">
    <property type="method" value="X-ray"/>
    <property type="resolution" value="1.40 A"/>
    <property type="chains" value="A=19-147"/>
</dbReference>
<dbReference type="PDB" id="6TVY">
    <property type="method" value="X-ray"/>
    <property type="resolution" value="1.51 A"/>
    <property type="chains" value="A=19-147"/>
</dbReference>
<dbReference type="PDB" id="6W7P">
    <property type="method" value="X-ray"/>
    <property type="resolution" value="1.60 A"/>
    <property type="chains" value="A=19-147"/>
</dbReference>
<dbReference type="PDB" id="6W8E">
    <property type="method" value="X-ray"/>
    <property type="resolution" value="2.68 A"/>
    <property type="chains" value="A=19-147"/>
</dbReference>
<dbReference type="PDB" id="6WEB">
    <property type="method" value="X-ray"/>
    <property type="resolution" value="2.10 A"/>
    <property type="chains" value="A=19-147"/>
</dbReference>
<dbReference type="PDB" id="6WEC">
    <property type="method" value="X-ray"/>
    <property type="resolution" value="2.10 A"/>
    <property type="chains" value="A=19-147"/>
</dbReference>
<dbReference type="PDB" id="6WGO">
    <property type="method" value="X-ray"/>
    <property type="resolution" value="1.30 A"/>
    <property type="chains" value="A=19-147"/>
</dbReference>
<dbReference type="PDB" id="6WRL">
    <property type="method" value="X-ray"/>
    <property type="resolution" value="1.35 A"/>
    <property type="chains" value="A=19-147"/>
</dbReference>
<dbReference type="PDB" id="6WRM">
    <property type="method" value="X-ray"/>
    <property type="resolution" value="1.55 A"/>
    <property type="chains" value="A=19-147"/>
</dbReference>
<dbReference type="PDB" id="6WX5">
    <property type="method" value="X-ray"/>
    <property type="resolution" value="1.30 A"/>
    <property type="chains" value="A=19-147"/>
</dbReference>
<dbReference type="PDB" id="6YBF">
    <property type="method" value="X-ray"/>
    <property type="resolution" value="1.13 A"/>
    <property type="chains" value="A=19-147"/>
</dbReference>
<dbReference type="PDB" id="6YBI">
    <property type="method" value="X-ray"/>
    <property type="resolution" value="1.12 A"/>
    <property type="chains" value="A=19-147"/>
</dbReference>
<dbReference type="PDB" id="6YJX">
    <property type="method" value="X-ray"/>
    <property type="resolution" value="1.20 A"/>
    <property type="chains" value="A=19-147"/>
</dbReference>
<dbReference type="PDB" id="6YOB">
    <property type="method" value="X-ray"/>
    <property type="resolution" value="1.85 A"/>
    <property type="chains" value="A=19-147"/>
</dbReference>
<dbReference type="PDB" id="6YOC">
    <property type="method" value="X-ray"/>
    <property type="resolution" value="1.86 A"/>
    <property type="chains" value="A=19-147"/>
</dbReference>
<dbReference type="PDB" id="6YOD">
    <property type="method" value="X-ray"/>
    <property type="resolution" value="1.60 A"/>
    <property type="chains" value="A=19-147"/>
</dbReference>
<dbReference type="PDB" id="6YOE">
    <property type="method" value="X-ray"/>
    <property type="resolution" value="1.85 A"/>
    <property type="chains" value="A=19-147"/>
</dbReference>
<dbReference type="PDB" id="6ZS8">
    <property type="method" value="X-ray"/>
    <property type="resolution" value="2.15 A"/>
    <property type="chains" value="AAA=19-147"/>
</dbReference>
<dbReference type="PDB" id="7A70">
    <property type="method" value="X-ray"/>
    <property type="resolution" value="1.80 A"/>
    <property type="chains" value="A=19-147"/>
</dbReference>
<dbReference type="PDB" id="7AC2">
    <property type="method" value="X-ray"/>
    <property type="resolution" value="1.51 A"/>
    <property type="chains" value="A=19-147"/>
</dbReference>
<dbReference type="PDB" id="7AVE">
    <property type="method" value="X-ray"/>
    <property type="resolution" value="0.98 A"/>
    <property type="chains" value="A=18-147"/>
</dbReference>
<dbReference type="PDB" id="7AVF">
    <property type="method" value="X-ray"/>
    <property type="resolution" value="1.00 A"/>
    <property type="chains" value="A=19-147"/>
</dbReference>
<dbReference type="PDB" id="7AVG">
    <property type="method" value="X-ray"/>
    <property type="resolution" value="1.00 A"/>
    <property type="chains" value="A=19-147"/>
</dbReference>
<dbReference type="PDB" id="7B9J">
    <property type="method" value="X-ray"/>
    <property type="resolution" value="2.20 A"/>
    <property type="chains" value="A=19-147"/>
</dbReference>
<dbReference type="PDB" id="7BAZ">
    <property type="method" value="X-ray"/>
    <property type="resolution" value="1.30 A"/>
    <property type="chains" value="A=19-147"/>
</dbReference>
<dbReference type="PDB" id="7BB1">
    <property type="method" value="X-ray"/>
    <property type="resolution" value="1.30 A"/>
    <property type="chains" value="A=19-147"/>
</dbReference>
<dbReference type="PDB" id="7BCU">
    <property type="method" value="X-ray"/>
    <property type="resolution" value="0.98 A"/>
    <property type="chains" value="A=19-147"/>
</dbReference>
<dbReference type="PDB" id="7BCX">
    <property type="method" value="X-ray"/>
    <property type="resolution" value="1.06 A"/>
    <property type="chains" value="A=19-147"/>
</dbReference>
<dbReference type="PDB" id="7BD0">
    <property type="method" value="X-ray"/>
    <property type="resolution" value="1.06 A"/>
    <property type="chains" value="A=19-147"/>
</dbReference>
<dbReference type="PDB" id="7BDM">
    <property type="method" value="X-ray"/>
    <property type="resolution" value="1.07 A"/>
    <property type="chains" value="A=19-147"/>
</dbReference>
<dbReference type="PDB" id="7BDZ">
    <property type="method" value="X-ray"/>
    <property type="resolution" value="1.94 A"/>
    <property type="chains" value="AAA=19-147"/>
</dbReference>
<dbReference type="PDB" id="7BE0">
    <property type="method" value="X-ray"/>
    <property type="resolution" value="1.62 A"/>
    <property type="chains" value="AAA=19-147"/>
</dbReference>
<dbReference type="PDB" id="7BE1">
    <property type="method" value="X-ray"/>
    <property type="resolution" value="1.40 A"/>
    <property type="chains" value="AAA=19-147"/>
</dbReference>
<dbReference type="PDB" id="7BE2">
    <property type="method" value="X-ray"/>
    <property type="resolution" value="1.65 A"/>
    <property type="chains" value="AAA=19-147"/>
</dbReference>
<dbReference type="PDB" id="7BEB">
    <property type="method" value="X-ray"/>
    <property type="resolution" value="1.32 A"/>
    <property type="chains" value="AAA=19-147"/>
</dbReference>
<dbReference type="PDB" id="7BEC">
    <property type="method" value="X-ray"/>
    <property type="resolution" value="1.74 A"/>
    <property type="chains" value="AAA=19-147"/>
</dbReference>
<dbReference type="PDB" id="7BHK">
    <property type="method" value="X-ray"/>
    <property type="resolution" value="1.45 A"/>
    <property type="chains" value="A=19-147"/>
</dbReference>
<dbReference type="PDB" id="7BHL">
    <property type="method" value="X-ray"/>
    <property type="resolution" value="1.45 A"/>
    <property type="chains" value="A=19-147"/>
</dbReference>
<dbReference type="PDB" id="7BHM">
    <property type="method" value="X-ray"/>
    <property type="resolution" value="1.45 A"/>
    <property type="chains" value="A=19-147"/>
</dbReference>
<dbReference type="PDB" id="7BHN">
    <property type="method" value="X-ray"/>
    <property type="resolution" value="1.45 A"/>
    <property type="chains" value="A=19-147"/>
</dbReference>
<dbReference type="PDB" id="7BMO">
    <property type="method" value="X-ray"/>
    <property type="resolution" value="1.90 A"/>
    <property type="chains" value="A=19-147"/>
</dbReference>
<dbReference type="PDB" id="7BMP">
    <property type="method" value="X-ray"/>
    <property type="resolution" value="1.90 A"/>
    <property type="chains" value="A=19-147"/>
</dbReference>
<dbReference type="PDB" id="7BMQ">
    <property type="method" value="X-ray"/>
    <property type="resolution" value="1.79 A"/>
    <property type="chains" value="A=19-147"/>
</dbReference>
<dbReference type="PDB" id="7BMR">
    <property type="method" value="X-ray"/>
    <property type="resolution" value="1.78 A"/>
    <property type="chains" value="A=19-147"/>
</dbReference>
<dbReference type="PDB" id="7BMS">
    <property type="method" value="X-ray"/>
    <property type="resolution" value="1.75 A"/>
    <property type="chains" value="A=19-147"/>
</dbReference>
<dbReference type="PDB" id="7BMT">
    <property type="method" value="X-ray"/>
    <property type="resolution" value="1.47 A"/>
    <property type="chains" value="A=19-147"/>
</dbReference>
<dbReference type="PDB" id="7BR5">
    <property type="method" value="X-ray"/>
    <property type="resolution" value="1.00 A"/>
    <property type="chains" value="A=19-147"/>
</dbReference>
<dbReference type="PDB" id="7BVM">
    <property type="method" value="X-ray"/>
    <property type="resolution" value="2.00 A"/>
    <property type="chains" value="A=1-147"/>
</dbReference>
<dbReference type="PDB" id="7BVO">
    <property type="method" value="X-ray"/>
    <property type="resolution" value="1.90 A"/>
    <property type="chains" value="A=1-147"/>
</dbReference>
<dbReference type="PDB" id="7BYO">
    <property type="method" value="X-ray"/>
    <property type="resolution" value="1.60 A"/>
    <property type="chains" value="A=1-147"/>
</dbReference>
<dbReference type="PDB" id="7BYP">
    <property type="method" value="X-ray"/>
    <property type="resolution" value="1.60 A"/>
    <property type="chains" value="A=1-147"/>
</dbReference>
<dbReference type="PDB" id="7C09">
    <property type="method" value="X-ray"/>
    <property type="resolution" value="2.20 A"/>
    <property type="chains" value="A=19-147"/>
</dbReference>
<dbReference type="PDB" id="7CDK">
    <property type="method" value="X-ray"/>
    <property type="resolution" value="1.70 A"/>
    <property type="chains" value="A=19-147"/>
</dbReference>
<dbReference type="PDB" id="7CDM">
    <property type="method" value="X-ray"/>
    <property type="resolution" value="1.70 A"/>
    <property type="chains" value="A=19-147"/>
</dbReference>
<dbReference type="PDB" id="7CDN">
    <property type="method" value="X-ray"/>
    <property type="resolution" value="1.70 A"/>
    <property type="chains" value="A=19-147"/>
</dbReference>
<dbReference type="PDB" id="7CDO">
    <property type="method" value="X-ray"/>
    <property type="resolution" value="1.80 A"/>
    <property type="chains" value="A=19-147"/>
</dbReference>
<dbReference type="PDB" id="7CDP">
    <property type="method" value="X-ray"/>
    <property type="resolution" value="1.80 A"/>
    <property type="chains" value="A=19-147"/>
</dbReference>
<dbReference type="PDB" id="7CDQ">
    <property type="method" value="X-ray"/>
    <property type="resolution" value="1.80 A"/>
    <property type="chains" value="A=19-147"/>
</dbReference>
<dbReference type="PDB" id="7CDR">
    <property type="method" value="X-ray"/>
    <property type="resolution" value="1.80 A"/>
    <property type="chains" value="A=19-147"/>
</dbReference>
<dbReference type="PDB" id="7CDS">
    <property type="method" value="X-ray"/>
    <property type="resolution" value="1.80 A"/>
    <property type="chains" value="A=19-147"/>
</dbReference>
<dbReference type="PDB" id="7CDT">
    <property type="method" value="X-ray"/>
    <property type="resolution" value="1.80 A"/>
    <property type="chains" value="A=19-147"/>
</dbReference>
<dbReference type="PDB" id="7CDU">
    <property type="method" value="X-ray"/>
    <property type="resolution" value="1.80 A"/>
    <property type="chains" value="A=19-147"/>
</dbReference>
<dbReference type="PDB" id="7CJZ">
    <property type="method" value="X-ray"/>
    <property type="resolution" value="1.75 A"/>
    <property type="chains" value="A=1-147"/>
</dbReference>
<dbReference type="PDB" id="7CQO">
    <property type="method" value="X-ray"/>
    <property type="resolution" value="1.71 A"/>
    <property type="chains" value="A=19-147"/>
</dbReference>
<dbReference type="PDB" id="7CVJ">
    <property type="method" value="X-ray"/>
    <property type="resolution" value="1.50 A"/>
    <property type="chains" value="A=1-147"/>
</dbReference>
<dbReference type="PDB" id="7CVL">
    <property type="method" value="X-ray"/>
    <property type="resolution" value="1.60 A"/>
    <property type="chains" value="A=1-147"/>
</dbReference>
<dbReference type="PDB" id="7D01">
    <property type="method" value="X-ray"/>
    <property type="resolution" value="1.65 A"/>
    <property type="chains" value="A=1-147"/>
</dbReference>
<dbReference type="PDB" id="7D02">
    <property type="method" value="X-ray"/>
    <property type="resolution" value="1.65 A"/>
    <property type="chains" value="A=1-147"/>
</dbReference>
<dbReference type="PDB" id="7D04">
    <property type="method" value="X-ray"/>
    <property type="resolution" value="1.70 A"/>
    <property type="chains" value="A=1-147"/>
</dbReference>
<dbReference type="PDB" id="7D05">
    <property type="method" value="X-ray"/>
    <property type="resolution" value="1.70 A"/>
    <property type="chains" value="A=1-147"/>
</dbReference>
<dbReference type="PDB" id="7D0W">
    <property type="method" value="X-ray"/>
    <property type="resolution" value="1.80 A"/>
    <property type="chains" value="A=19-147"/>
</dbReference>
<dbReference type="PDB" id="7DEQ">
    <property type="method" value="X-ray"/>
    <property type="resolution" value="1.03 A"/>
    <property type="chains" value="A=19-147"/>
</dbReference>
<dbReference type="PDB" id="7DER">
    <property type="method" value="X-ray"/>
    <property type="resolution" value="1.03 A"/>
    <property type="chains" value="A=19-147"/>
</dbReference>
<dbReference type="PDB" id="7DLN">
    <property type="method" value="X-ray"/>
    <property type="resolution" value="2.15 A"/>
    <property type="chains" value="A=19-147"/>
</dbReference>
<dbReference type="PDB" id="7DTB">
    <property type="method" value="X-ray"/>
    <property type="resolution" value="1.65 A"/>
    <property type="chains" value="A=1-147"/>
</dbReference>
<dbReference type="PDB" id="7DTF">
    <property type="method" value="X-ray"/>
    <property type="resolution" value="1.85 A"/>
    <property type="chains" value="A=1-147"/>
</dbReference>
<dbReference type="PDB" id="7E02">
    <property type="method" value="X-ray"/>
    <property type="resolution" value="1.55 A"/>
    <property type="chains" value="A=1-147"/>
</dbReference>
<dbReference type="PDB" id="7F26">
    <property type="method" value="X-ray"/>
    <property type="resolution" value="1.70 A"/>
    <property type="chains" value="A=19-147"/>
</dbReference>
<dbReference type="PDB" id="7FCU">
    <property type="method" value="X-ray"/>
    <property type="resolution" value="1.42 A"/>
    <property type="chains" value="A=19-147"/>
</dbReference>
<dbReference type="PDB" id="7FCW">
    <property type="method" value="X-ray"/>
    <property type="resolution" value="1.43 A"/>
    <property type="chains" value="A=19-147"/>
</dbReference>
<dbReference type="PDB" id="7FG8">
    <property type="method" value="Other"/>
    <property type="resolution" value="2.00 A"/>
    <property type="chains" value="A=19-147"/>
</dbReference>
<dbReference type="PDB" id="7FGU">
    <property type="method" value="Other"/>
    <property type="resolution" value="2.00 A"/>
    <property type="chains" value="A=19-147"/>
</dbReference>
<dbReference type="PDB" id="7FGV">
    <property type="method" value="Other"/>
    <property type="resolution" value="2.00 A"/>
    <property type="chains" value="A=19-147"/>
</dbReference>
<dbReference type="PDB" id="7JMU">
    <property type="method" value="X-ray"/>
    <property type="resolution" value="1.20 A"/>
    <property type="chains" value="A/B=19-147"/>
</dbReference>
<dbReference type="PDB" id="7KH5">
    <property type="method" value="X-ray"/>
    <property type="resolution" value="1.29 A"/>
    <property type="chains" value="A=19-147"/>
</dbReference>
<dbReference type="PDB" id="7KNK">
    <property type="method" value="X-ray"/>
    <property type="resolution" value="1.45 A"/>
    <property type="chains" value="A=19-147"/>
</dbReference>
<dbReference type="PDB" id="7L84">
    <property type="method" value="X-ray"/>
    <property type="resolution" value="1.70 A"/>
    <property type="chains" value="A=19-147"/>
</dbReference>
<dbReference type="PDB" id="7LLP">
    <property type="method" value="X-ray"/>
    <property type="resolution" value="1.13 A"/>
    <property type="chains" value="A=19-147"/>
</dbReference>
<dbReference type="PDB" id="7LN8">
    <property type="method" value="X-ray"/>
    <property type="resolution" value="1.52 A"/>
    <property type="chains" value="A=19-147"/>
</dbReference>
<dbReference type="PDB" id="7LN9">
    <property type="method" value="X-ray"/>
    <property type="resolution" value="1.13 A"/>
    <property type="chains" value="A=19-147"/>
</dbReference>
<dbReference type="PDB" id="7LOQ">
    <property type="method" value="X-ray"/>
    <property type="resolution" value="1.30 A"/>
    <property type="chains" value="A=19-147"/>
</dbReference>
<dbReference type="PDB" id="7LOR">
    <property type="method" value="X-ray"/>
    <property type="resolution" value="1.52 A"/>
    <property type="chains" value="A=19-147"/>
</dbReference>
<dbReference type="PDB" id="7LP6">
    <property type="method" value="X-ray"/>
    <property type="resolution" value="1.13 A"/>
    <property type="chains" value="A=19-147"/>
</dbReference>
<dbReference type="PDB" id="7LPL">
    <property type="method" value="X-ray"/>
    <property type="resolution" value="1.14 A"/>
    <property type="chains" value="A=19-147"/>
</dbReference>
<dbReference type="PDB" id="7LPM">
    <property type="method" value="X-ray"/>
    <property type="resolution" value="1.10 A"/>
    <property type="chains" value="A=19-147"/>
</dbReference>
<dbReference type="PDB" id="7LYZ">
    <property type="method" value="X-ray"/>
    <property type="resolution" value="2.50 A"/>
    <property type="chains" value="A=19-147"/>
</dbReference>
<dbReference type="PDB" id="7MRP">
    <property type="method" value="EM"/>
    <property type="resolution" value="1.75 A"/>
    <property type="chains" value="A=19-147"/>
</dbReference>
<dbReference type="PDB" id="7NJF">
    <property type="method" value="X-ray"/>
    <property type="resolution" value="1.70 A"/>
    <property type="chains" value="A=19-147"/>
</dbReference>
<dbReference type="PDB" id="7NKF">
    <property type="method" value="X-ray"/>
    <property type="resolution" value="1.70 A"/>
    <property type="chains" value="A=19-147"/>
</dbReference>
<dbReference type="PDB" id="7O2O">
    <property type="method" value="X-ray"/>
    <property type="resolution" value="1.83 A"/>
    <property type="chains" value="A=1-147"/>
</dbReference>
<dbReference type="PDB" id="7OL5">
    <property type="method" value="X-ray"/>
    <property type="resolution" value="0.94 A"/>
    <property type="chains" value="A=19-147"/>
</dbReference>
<dbReference type="PDB" id="7OL6">
    <property type="method" value="X-ray"/>
    <property type="resolution" value="1.10 A"/>
    <property type="chains" value="A=19-147"/>
</dbReference>
<dbReference type="PDB" id="7OL7">
    <property type="method" value="X-ray"/>
    <property type="resolution" value="1.15 A"/>
    <property type="chains" value="A=19-147"/>
</dbReference>
<dbReference type="PDB" id="7OL8">
    <property type="method" value="X-ray"/>
    <property type="resolution" value="1.15 A"/>
    <property type="chains" value="A=19-147"/>
</dbReference>
<dbReference type="PDB" id="7P6M">
    <property type="method" value="X-ray"/>
    <property type="resolution" value="0.89 A"/>
    <property type="chains" value="A=18-147"/>
</dbReference>
<dbReference type="PDB" id="7PNH">
    <property type="method" value="X-ray"/>
    <property type="resolution" value="1.22 A"/>
    <property type="chains" value="AAA=19-147"/>
</dbReference>
<dbReference type="PDB" id="7Q04">
    <property type="method" value="X-ray"/>
    <property type="resolution" value="2.28 A"/>
    <property type="chains" value="H=19-147"/>
</dbReference>
<dbReference type="PDB" id="7Q05">
    <property type="method" value="X-ray"/>
    <property type="resolution" value="2.08 A"/>
    <property type="chains" value="H=19-147"/>
</dbReference>
<dbReference type="PDB" id="7Q06">
    <property type="method" value="X-ray"/>
    <property type="resolution" value="1.95 A"/>
    <property type="chains" value="H=19-147"/>
</dbReference>
<dbReference type="PDB" id="7Q0T">
    <property type="method" value="X-ray"/>
    <property type="resolution" value="1.34 A"/>
    <property type="chains" value="A=19-147"/>
</dbReference>
<dbReference type="PDB" id="7Q0U">
    <property type="method" value="X-ray"/>
    <property type="resolution" value="1.19 A"/>
    <property type="chains" value="A=19-147"/>
</dbReference>
<dbReference type="PDB" id="7Q0V">
    <property type="method" value="X-ray"/>
    <property type="resolution" value="1.12 A"/>
    <property type="chains" value="A=19-147"/>
</dbReference>
<dbReference type="PDB" id="7QNP">
    <property type="method" value="X-ray"/>
    <property type="resolution" value="1.59 A"/>
    <property type="chains" value="BBB=19-147"/>
</dbReference>
<dbReference type="PDB" id="7QQ1">
    <property type="method" value="X-ray"/>
    <property type="resolution" value="1.48 A"/>
    <property type="chains" value="A=19-147"/>
</dbReference>
<dbReference type="PDB" id="7R1Q">
    <property type="method" value="X-ray"/>
    <property type="resolution" value="1.10 A"/>
    <property type="chains" value="AAA=19-147"/>
</dbReference>
<dbReference type="PDB" id="7RXY">
    <property type="method" value="X-ray"/>
    <property type="resolution" value="1.60 A"/>
    <property type="chains" value="AAA/BBB=19-147"/>
</dbReference>
<dbReference type="PDB" id="7RYD">
    <property type="method" value="X-ray"/>
    <property type="resolution" value="1.18 A"/>
    <property type="chains" value="AAA/BBB=19-147"/>
</dbReference>
<dbReference type="PDB" id="7RYK">
    <property type="method" value="X-ray"/>
    <property type="resolution" value="1.76 A"/>
    <property type="chains" value="AAA/BBB=19-147"/>
</dbReference>
<dbReference type="PDB" id="7RZ0">
    <property type="method" value="X-ray"/>
    <property type="resolution" value="1.38 A"/>
    <property type="chains" value="AAA=19-147"/>
</dbReference>
<dbReference type="PDB" id="7RZ1">
    <property type="method" value="X-ray"/>
    <property type="resolution" value="2.05 A"/>
    <property type="chains" value="A=19-147"/>
</dbReference>
<dbReference type="PDB" id="7RZ2">
    <property type="method" value="X-ray"/>
    <property type="resolution" value="1.07 A"/>
    <property type="chains" value="AAA=19-147"/>
</dbReference>
<dbReference type="PDB" id="7S27">
    <property type="method" value="X-ray"/>
    <property type="resolution" value="1.60 A"/>
    <property type="chains" value="A=19-147"/>
</dbReference>
<dbReference type="PDB" id="7S28">
    <property type="method" value="X-ray"/>
    <property type="resolution" value="1.60 A"/>
    <property type="chains" value="A=19-147"/>
</dbReference>
<dbReference type="PDB" id="7S29">
    <property type="method" value="X-ray"/>
    <property type="resolution" value="1.60 A"/>
    <property type="chains" value="A=19-147"/>
</dbReference>
<dbReference type="PDB" id="7S2A">
    <property type="method" value="X-ray"/>
    <property type="resolution" value="1.60 A"/>
    <property type="chains" value="A=19-147"/>
</dbReference>
<dbReference type="PDB" id="7S2B">
    <property type="method" value="X-ray"/>
    <property type="resolution" value="1.60 A"/>
    <property type="chains" value="A=19-147"/>
</dbReference>
<dbReference type="PDB" id="7S2C">
    <property type="method" value="X-ray"/>
    <property type="resolution" value="1.60 A"/>
    <property type="chains" value="A=19-147"/>
</dbReference>
<dbReference type="PDB" id="7S2D">
    <property type="method" value="X-ray"/>
    <property type="resolution" value="1.60 A"/>
    <property type="chains" value="A=19-147"/>
</dbReference>
<dbReference type="PDB" id="7S2E">
    <property type="method" value="X-ray"/>
    <property type="resolution" value="1.60 A"/>
    <property type="chains" value="A=19-147"/>
</dbReference>
<dbReference type="PDB" id="7S2F">
    <property type="method" value="X-ray"/>
    <property type="resolution" value="1.58 A"/>
    <property type="chains" value="A=19-147"/>
</dbReference>
<dbReference type="PDB" id="7S2G">
    <property type="method" value="X-ray"/>
    <property type="resolution" value="1.60 A"/>
    <property type="chains" value="A=19-147"/>
</dbReference>
<dbReference type="PDB" id="7S2Q">
    <property type="method" value="X-ray"/>
    <property type="resolution" value="1.60 A"/>
    <property type="chains" value="A=19-147"/>
</dbReference>
<dbReference type="PDB" id="7S2U">
    <property type="method" value="X-ray"/>
    <property type="resolution" value="1.60 A"/>
    <property type="chains" value="A=19-147"/>
</dbReference>
<dbReference type="PDB" id="7S2V">
    <property type="method" value="X-ray"/>
    <property type="resolution" value="1.60 A"/>
    <property type="chains" value="A=19-147"/>
</dbReference>
<dbReference type="PDB" id="7S2W">
    <property type="method" value="X-ray"/>
    <property type="resolution" value="1.60 A"/>
    <property type="chains" value="A=19-147"/>
</dbReference>
<dbReference type="PDB" id="7S30">
    <property type="method" value="X-ray"/>
    <property type="resolution" value="1.60 A"/>
    <property type="chains" value="A=19-147"/>
</dbReference>
<dbReference type="PDB" id="7S31">
    <property type="method" value="X-ray"/>
    <property type="resolution" value="1.60 A"/>
    <property type="chains" value="A=19-147"/>
</dbReference>
<dbReference type="PDB" id="7S32">
    <property type="method" value="X-ray"/>
    <property type="resolution" value="1.60 A"/>
    <property type="chains" value="A=19-147"/>
</dbReference>
<dbReference type="PDB" id="7S33">
    <property type="method" value="X-ray"/>
    <property type="resolution" value="1.60 A"/>
    <property type="chains" value="A=19-147"/>
</dbReference>
<dbReference type="PDB" id="7S34">
    <property type="method" value="X-ray"/>
    <property type="resolution" value="1.60 A"/>
    <property type="chains" value="A=19-147"/>
</dbReference>
<dbReference type="PDB" id="7S35">
    <property type="method" value="X-ray"/>
    <property type="resolution" value="1.60 A"/>
    <property type="chains" value="A=19-147"/>
</dbReference>
<dbReference type="PDB" id="7S4W">
    <property type="method" value="X-ray"/>
    <property type="resolution" value="2.10 A"/>
    <property type="chains" value="A=19-147"/>
</dbReference>
<dbReference type="PDB" id="7SKW">
    <property type="method" value="EM"/>
    <property type="resolution" value="0.87 A"/>
    <property type="chains" value="A=19-147"/>
</dbReference>
<dbReference type="PDB" id="7TUM">
    <property type="method" value="X-ray"/>
    <property type="resolution" value="3.20 A"/>
    <property type="chains" value="A=19-147"/>
</dbReference>
<dbReference type="PDB" id="7ULY">
    <property type="method" value="EM"/>
    <property type="resolution" value="0.87 A"/>
    <property type="chains" value="A=19-147"/>
</dbReference>
<dbReference type="PDB" id="7VEI">
    <property type="method" value="Neutron"/>
    <property type="resolution" value="2.00 A"/>
    <property type="chains" value="A=19-147"/>
</dbReference>
<dbReference type="PDB" id="7VGO">
    <property type="method" value="X-ray"/>
    <property type="resolution" value="1.20 A"/>
    <property type="chains" value="A=19-147"/>
</dbReference>
<dbReference type="PDB" id="7VGP">
    <property type="method" value="X-ray"/>
    <property type="resolution" value="1.91 A"/>
    <property type="chains" value="A/B=19-147"/>
</dbReference>
<dbReference type="PDB" id="7WBD">
    <property type="method" value="X-ray"/>
    <property type="resolution" value="1.90 A"/>
    <property type="chains" value="A=19-147"/>
</dbReference>
<dbReference type="PDB" id="7WBE">
    <property type="method" value="X-ray"/>
    <property type="resolution" value="1.90 A"/>
    <property type="chains" value="A=19-147"/>
</dbReference>
<dbReference type="PDB" id="7WBF">
    <property type="method" value="X-ray"/>
    <property type="resolution" value="1.60 A"/>
    <property type="chains" value="A=19-147"/>
</dbReference>
<dbReference type="PDB" id="7WKR">
    <property type="method" value="X-ray"/>
    <property type="resolution" value="1.60 A"/>
    <property type="chains" value="A=19-147"/>
</dbReference>
<dbReference type="PDB" id="7WUC">
    <property type="method" value="X-ray"/>
    <property type="resolution" value="2.10 A"/>
    <property type="chains" value="A=19-147"/>
</dbReference>
<dbReference type="PDB" id="7WXS">
    <property type="method" value="X-ray"/>
    <property type="resolution" value="1.25 A"/>
    <property type="chains" value="A=19-147"/>
</dbReference>
<dbReference type="PDB" id="7Y6A">
    <property type="method" value="X-ray"/>
    <property type="resolution" value="1.50 A"/>
    <property type="chains" value="A=1-147"/>
</dbReference>
<dbReference type="PDB" id="7YNU">
    <property type="method" value="X-ray"/>
    <property type="resolution" value="1.44 A"/>
    <property type="chains" value="A=19-147"/>
</dbReference>
<dbReference type="PDB" id="7YNV">
    <property type="method" value="X-ray"/>
    <property type="resolution" value="1.39 A"/>
    <property type="chains" value="A=19-147"/>
</dbReference>
<dbReference type="PDB" id="7YRK">
    <property type="method" value="X-ray"/>
    <property type="resolution" value="0.92 A"/>
    <property type="chains" value="A=1-147"/>
</dbReference>
<dbReference type="PDB" id="7Z6J">
    <property type="method" value="X-ray"/>
    <property type="resolution" value="1.53 A"/>
    <property type="chains" value="A=19-147"/>
</dbReference>
<dbReference type="PDB" id="7ZU6">
    <property type="method" value="X-ray"/>
    <property type="resolution" value="1.18 A"/>
    <property type="chains" value="AAA=19-147"/>
</dbReference>
<dbReference type="PDB" id="8A9D">
    <property type="method" value="X-ray"/>
    <property type="resolution" value="2.10 A"/>
    <property type="chains" value="A=19-147"/>
</dbReference>
<dbReference type="PDB" id="8A9E">
    <property type="method" value="X-ray"/>
    <property type="resolution" value="1.67 A"/>
    <property type="chains" value="AAA=19-147"/>
</dbReference>
<dbReference type="PDB" id="8A9R">
    <property type="method" value="X-ray"/>
    <property type="resolution" value="1.60 A"/>
    <property type="chains" value="A=19-147"/>
</dbReference>
<dbReference type="PDB" id="8AAZ">
    <property type="method" value="X-ray"/>
    <property type="resolution" value="1.27 A"/>
    <property type="chains" value="A=19-147"/>
</dbReference>
<dbReference type="PDB" id="8AJ3">
    <property type="method" value="X-ray"/>
    <property type="resolution" value="1.13 A"/>
    <property type="chains" value="A=19-147"/>
</dbReference>
<dbReference type="PDB" id="8AJ4">
    <property type="method" value="X-ray"/>
    <property type="resolution" value="1.22 A"/>
    <property type="chains" value="AAA=19-147"/>
</dbReference>
<dbReference type="PDB" id="8AJ5">
    <property type="method" value="X-ray"/>
    <property type="resolution" value="1.31 A"/>
    <property type="chains" value="AAA=19-147"/>
</dbReference>
<dbReference type="PDB" id="8B3L">
    <property type="method" value="X-ray"/>
    <property type="resolution" value="1.71 A"/>
    <property type="chains" value="A=19-147"/>
</dbReference>
<dbReference type="PDB" id="8B3T">
    <property type="method" value="X-ray"/>
    <property type="resolution" value="1.78 A"/>
    <property type="chains" value="A=19-147"/>
</dbReference>
<dbReference type="PDB" id="8B3U">
    <property type="method" value="X-ray"/>
    <property type="resolution" value="1.71 A"/>
    <property type="chains" value="A=19-147"/>
</dbReference>
<dbReference type="PDB" id="8B3V">
    <property type="method" value="X-ray"/>
    <property type="resolution" value="1.74 A"/>
    <property type="chains" value="A=19-147"/>
</dbReference>
<dbReference type="PDB" id="8BOV">
    <property type="method" value="X-ray"/>
    <property type="resolution" value="1.25 A"/>
    <property type="chains" value="AAA=19-147"/>
</dbReference>
<dbReference type="PDB" id="8BOY">
    <property type="method" value="X-ray"/>
    <property type="resolution" value="1.33 A"/>
    <property type="chains" value="AAA=19-147"/>
</dbReference>
<dbReference type="PDB" id="8BPH">
    <property type="method" value="X-ray"/>
    <property type="resolution" value="1.07 A"/>
    <property type="chains" value="AAA=19-147"/>
</dbReference>
<dbReference type="PDB" id="8BPJ">
    <property type="method" value="X-ray"/>
    <property type="resolution" value="1.38 A"/>
    <property type="chains" value="AAA=19-147"/>
</dbReference>
<dbReference type="PDB" id="8BPU">
    <property type="method" value="X-ray"/>
    <property type="resolution" value="1.81 A"/>
    <property type="chains" value="AAA=19-147"/>
</dbReference>
<dbReference type="PDB" id="8BQM">
    <property type="method" value="X-ray"/>
    <property type="resolution" value="1.17 A"/>
    <property type="chains" value="AAA=19-147"/>
</dbReference>
<dbReference type="PDB" id="8BQP">
    <property type="method" value="X-ray"/>
    <property type="resolution" value="1.24 A"/>
    <property type="chains" value="A=19-147"/>
</dbReference>
<dbReference type="PDB" id="8BQQ">
    <property type="method" value="X-ray"/>
    <property type="resolution" value="1.57 A"/>
    <property type="chains" value="A=19-147"/>
</dbReference>
<dbReference type="PDB" id="8BQR">
    <property type="method" value="X-ray"/>
    <property type="resolution" value="2.32 A"/>
    <property type="chains" value="A=19-147"/>
</dbReference>
<dbReference type="PDB" id="8BQT">
    <property type="method" value="X-ray"/>
    <property type="resolution" value="1.47 A"/>
    <property type="chains" value="A=19-147"/>
</dbReference>
<dbReference type="PDB" id="8C39">
    <property type="method" value="X-ray"/>
    <property type="resolution" value="1.20 A"/>
    <property type="chains" value="AAA=19-147"/>
</dbReference>
<dbReference type="PDB" id="8CL5">
    <property type="method" value="X-ray"/>
    <property type="resolution" value="1.31 A"/>
    <property type="chains" value="A=19-147"/>
</dbReference>
<dbReference type="PDB" id="8CL6">
    <property type="method" value="X-ray"/>
    <property type="resolution" value="1.32 A"/>
    <property type="chains" value="A=19-147"/>
</dbReference>
<dbReference type="PDB" id="8CPC">
    <property type="method" value="EM"/>
    <property type="resolution" value="2.91 A"/>
    <property type="chains" value="A=19-147"/>
</dbReference>
<dbReference type="PDB" id="8CVU">
    <property type="method" value="X-ray"/>
    <property type="resolution" value="1.57 A"/>
    <property type="chains" value="A=19-147"/>
</dbReference>
<dbReference type="PDB" id="8CVV">
    <property type="method" value="X-ray"/>
    <property type="resolution" value="1.57 A"/>
    <property type="chains" value="A=19-147"/>
</dbReference>
<dbReference type="PDB" id="8CVW">
    <property type="method" value="X-ray"/>
    <property type="resolution" value="1.57 A"/>
    <property type="chains" value="A=19-147"/>
</dbReference>
<dbReference type="PDB" id="8CW0">
    <property type="method" value="X-ray"/>
    <property type="resolution" value="1.57 A"/>
    <property type="chains" value="A=19-147"/>
</dbReference>
<dbReference type="PDB" id="8CW1">
    <property type="method" value="X-ray"/>
    <property type="resolution" value="1.57 A"/>
    <property type="chains" value="A=19-147"/>
</dbReference>
<dbReference type="PDB" id="8CW3">
    <property type="method" value="X-ray"/>
    <property type="resolution" value="1.57 A"/>
    <property type="chains" value="A=19-147"/>
</dbReference>
<dbReference type="PDB" id="8CW5">
    <property type="method" value="X-ray"/>
    <property type="resolution" value="1.57 A"/>
    <property type="chains" value="A=19-147"/>
</dbReference>
<dbReference type="PDB" id="8CW6">
    <property type="method" value="X-ray"/>
    <property type="resolution" value="1.65 A"/>
    <property type="chains" value="A=19-147"/>
</dbReference>
<dbReference type="PDB" id="8CW7">
    <property type="method" value="X-ray"/>
    <property type="resolution" value="1.57 A"/>
    <property type="chains" value="A=19-147"/>
</dbReference>
<dbReference type="PDB" id="8CW8">
    <property type="method" value="X-ray"/>
    <property type="resolution" value="1.57 A"/>
    <property type="chains" value="A=19-147"/>
</dbReference>
<dbReference type="PDB" id="8CWB">
    <property type="method" value="X-ray"/>
    <property type="resolution" value="1.51 A"/>
    <property type="chains" value="A=19-147"/>
</dbReference>
<dbReference type="PDB" id="8CWC">
    <property type="method" value="X-ray"/>
    <property type="resolution" value="1.48 A"/>
    <property type="chains" value="A=19-147"/>
</dbReference>
<dbReference type="PDB" id="8CWD">
    <property type="method" value="X-ray"/>
    <property type="resolution" value="1.48 A"/>
    <property type="chains" value="A=19-147"/>
</dbReference>
<dbReference type="PDB" id="8CWE">
    <property type="method" value="X-ray"/>
    <property type="resolution" value="1.48 A"/>
    <property type="chains" value="A=19-147"/>
</dbReference>
<dbReference type="PDB" id="8CWF">
    <property type="method" value="X-ray"/>
    <property type="resolution" value="1.50 A"/>
    <property type="chains" value="A=19-147"/>
</dbReference>
<dbReference type="PDB" id="8CWG">
    <property type="method" value="X-ray"/>
    <property type="resolution" value="1.50 A"/>
    <property type="chains" value="A=19-147"/>
</dbReference>
<dbReference type="PDB" id="8CWH">
    <property type="method" value="X-ray"/>
    <property type="resolution" value="1.50 A"/>
    <property type="chains" value="A=19-147"/>
</dbReference>
<dbReference type="PDB" id="8D5S">
    <property type="method" value="X-ray"/>
    <property type="resolution" value="1.50 A"/>
    <property type="chains" value="A=19-147"/>
</dbReference>
<dbReference type="PDB" id="8D5T">
    <property type="method" value="X-ray"/>
    <property type="resolution" value="1.50 A"/>
    <property type="chains" value="A=19-147"/>
</dbReference>
<dbReference type="PDB" id="8D5U">
    <property type="method" value="X-ray"/>
    <property type="resolution" value="1.50 A"/>
    <property type="chains" value="A=19-147"/>
</dbReference>
<dbReference type="PDB" id="8D5W">
    <property type="method" value="X-ray"/>
    <property type="resolution" value="1.50 A"/>
    <property type="chains" value="A=19-147"/>
</dbReference>
<dbReference type="PDB" id="8D5X">
    <property type="method" value="X-ray"/>
    <property type="resolution" value="1.50 A"/>
    <property type="chains" value="A=19-147"/>
</dbReference>
<dbReference type="PDB" id="8D5Z">
    <property type="method" value="X-ray"/>
    <property type="resolution" value="1.50 A"/>
    <property type="chains" value="A=19-147"/>
</dbReference>
<dbReference type="PDB" id="8D60">
    <property type="method" value="X-ray"/>
    <property type="resolution" value="1.50 A"/>
    <property type="chains" value="A=19-147"/>
</dbReference>
<dbReference type="PDB" id="8D61">
    <property type="method" value="X-ray"/>
    <property type="resolution" value="1.50 A"/>
    <property type="chains" value="A=19-147"/>
</dbReference>
<dbReference type="PDB" id="8D62">
    <property type="method" value="X-ray"/>
    <property type="resolution" value="1.50 A"/>
    <property type="chains" value="A=19-147"/>
</dbReference>
<dbReference type="PDB" id="8D69">
    <property type="method" value="X-ray"/>
    <property type="resolution" value="1.50 A"/>
    <property type="chains" value="A=19-147"/>
</dbReference>
<dbReference type="PDB" id="8D6B">
    <property type="method" value="X-ray"/>
    <property type="resolution" value="1.50 A"/>
    <property type="chains" value="A=19-147"/>
</dbReference>
<dbReference type="PDB" id="8D6I">
    <property type="method" value="X-ray"/>
    <property type="resolution" value="1.50 A"/>
    <property type="chains" value="A=19-147"/>
</dbReference>
<dbReference type="PDB" id="8D75">
    <property type="method" value="X-ray"/>
    <property type="resolution" value="1.50 A"/>
    <property type="chains" value="A=19-147"/>
</dbReference>
<dbReference type="PDB" id="8D77">
    <property type="method" value="X-ray"/>
    <property type="resolution" value="1.50 A"/>
    <property type="chains" value="A=19-147"/>
</dbReference>
<dbReference type="PDB" id="8D7A">
    <property type="method" value="X-ray"/>
    <property type="resolution" value="1.50 A"/>
    <property type="chains" value="A=19-147"/>
</dbReference>
<dbReference type="PDB" id="8D7B">
    <property type="method" value="X-ray"/>
    <property type="resolution" value="1.50 A"/>
    <property type="chains" value="A=19-147"/>
</dbReference>
<dbReference type="PDB" id="8D7C">
    <property type="method" value="X-ray"/>
    <property type="resolution" value="1.50 A"/>
    <property type="chains" value="A=19-147"/>
</dbReference>
<dbReference type="PDB" id="8D7D">
    <property type="method" value="X-ray"/>
    <property type="resolution" value="1.50 A"/>
    <property type="chains" value="A=19-147"/>
</dbReference>
<dbReference type="PDB" id="8D7J">
    <property type="method" value="X-ray"/>
    <property type="resolution" value="1.50 A"/>
    <property type="chains" value="A=19-147"/>
</dbReference>
<dbReference type="PDB" id="8D7L">
    <property type="method" value="X-ray"/>
    <property type="resolution" value="1.50 A"/>
    <property type="chains" value="A=19-147"/>
</dbReference>
<dbReference type="PDB" id="8D7Q">
    <property type="method" value="X-ray"/>
    <property type="resolution" value="1.50 A"/>
    <property type="chains" value="A=19-147"/>
</dbReference>
<dbReference type="PDB" id="8D7S">
    <property type="method" value="X-ray"/>
    <property type="resolution" value="1.50 A"/>
    <property type="chains" value="A=19-147"/>
</dbReference>
<dbReference type="PDB" id="8D8A">
    <property type="method" value="X-ray"/>
    <property type="resolution" value="1.50 A"/>
    <property type="chains" value="A=19-147"/>
</dbReference>
<dbReference type="PDB" id="8D8B">
    <property type="method" value="X-ray"/>
    <property type="resolution" value="1.50 A"/>
    <property type="chains" value="A=19-147"/>
</dbReference>
<dbReference type="PDB" id="8D8C">
    <property type="method" value="X-ray"/>
    <property type="resolution" value="1.50 A"/>
    <property type="chains" value="A=19-147"/>
</dbReference>
<dbReference type="PDB" id="8D8D">
    <property type="method" value="X-ray"/>
    <property type="resolution" value="1.50 A"/>
    <property type="chains" value="A=19-147"/>
</dbReference>
<dbReference type="PDB" id="8D8E">
    <property type="method" value="X-ray"/>
    <property type="resolution" value="1.50 A"/>
    <property type="chains" value="A=19-147"/>
</dbReference>
<dbReference type="PDB" id="8D8F">
    <property type="method" value="X-ray"/>
    <property type="resolution" value="1.50 A"/>
    <property type="chains" value="A=19-147"/>
</dbReference>
<dbReference type="PDB" id="8D8G">
    <property type="method" value="X-ray"/>
    <property type="resolution" value="1.50 A"/>
    <property type="chains" value="A=19-147"/>
</dbReference>
<dbReference type="PDB" id="8D8H">
    <property type="method" value="X-ray"/>
    <property type="resolution" value="1.50 A"/>
    <property type="chains" value="A=19-147"/>
</dbReference>
<dbReference type="PDB" id="8DCT">
    <property type="method" value="X-ray"/>
    <property type="resolution" value="2.00 A"/>
    <property type="chains" value="A=19-147"/>
</dbReference>
<dbReference type="PDB" id="8DCU">
    <property type="method" value="X-ray"/>
    <property type="resolution" value="2.00 A"/>
    <property type="chains" value="A=19-147"/>
</dbReference>
<dbReference type="PDB" id="8DCV">
    <property type="method" value="X-ray"/>
    <property type="resolution" value="2.00 A"/>
    <property type="chains" value="A=19-147"/>
</dbReference>
<dbReference type="PDB" id="8DCW">
    <property type="method" value="X-ray"/>
    <property type="resolution" value="2.00 A"/>
    <property type="chains" value="A=19-147"/>
</dbReference>
<dbReference type="PDB" id="8DYZ">
    <property type="method" value="X-ray"/>
    <property type="resolution" value="1.27 A"/>
    <property type="chains" value="A=19-147"/>
</dbReference>
<dbReference type="PDB" id="8DZ7">
    <property type="method" value="X-ray"/>
    <property type="resolution" value="1.34 A"/>
    <property type="chains" value="A=19-147"/>
</dbReference>
<dbReference type="PDB" id="8E54">
    <property type="method" value="EM"/>
    <property type="resolution" value="1.20 A"/>
    <property type="chains" value="AAA=1-147"/>
</dbReference>
<dbReference type="PDB" id="8EZO">
    <property type="method" value="X-ray"/>
    <property type="resolution" value="1.90 A"/>
    <property type="chains" value="A=19-147"/>
</dbReference>
<dbReference type="PDB" id="8EZP">
    <property type="method" value="X-ray"/>
    <property type="resolution" value="1.90 A"/>
    <property type="chains" value="A=19-147"/>
</dbReference>
<dbReference type="PDB" id="8EZU">
    <property type="method" value="X-ray"/>
    <property type="resolution" value="1.90 A"/>
    <property type="chains" value="A=19-147"/>
</dbReference>
<dbReference type="PDB" id="8EZX">
    <property type="method" value="X-ray"/>
    <property type="resolution" value="1.90 A"/>
    <property type="chains" value="A=19-147"/>
</dbReference>
<dbReference type="PDB" id="8F00">
    <property type="method" value="X-ray"/>
    <property type="resolution" value="1.20 A"/>
    <property type="chains" value="A=19-147"/>
</dbReference>
<dbReference type="PDB" id="8F0B">
    <property type="method" value="X-ray"/>
    <property type="resolution" value="1.90 A"/>
    <property type="chains" value="A=19-147"/>
</dbReference>
<dbReference type="PDB" id="8F28">
    <property type="method" value="X-ray"/>
    <property type="resolution" value="1.20 A"/>
    <property type="chains" value="A=19-147"/>
</dbReference>
<dbReference type="PDB" id="8F2G">
    <property type="method" value="X-ray"/>
    <property type="resolution" value="1.84 A"/>
    <property type="chains" value="A=19-147"/>
</dbReference>
<dbReference type="PDB" id="8FP6">
    <property type="method" value="X-ray"/>
    <property type="resolution" value="1.60 A"/>
    <property type="chains" value="A=19-147"/>
</dbReference>
<dbReference type="PDB" id="8FP7">
    <property type="method" value="X-ray"/>
    <property type="resolution" value="1.60 A"/>
    <property type="chains" value="A=19-147"/>
</dbReference>
<dbReference type="PDB" id="8FP8">
    <property type="method" value="X-ray"/>
    <property type="resolution" value="1.60 A"/>
    <property type="chains" value="A=19-147"/>
</dbReference>
<dbReference type="PDB" id="8FPB">
    <property type="method" value="X-ray"/>
    <property type="resolution" value="1.60 A"/>
    <property type="chains" value="A=19-147"/>
</dbReference>
<dbReference type="PDB" id="8FPD">
    <property type="method" value="X-ray"/>
    <property type="resolution" value="1.60 A"/>
    <property type="chains" value="A=19-147"/>
</dbReference>
<dbReference type="PDB" id="8FPM">
    <property type="method" value="X-ray"/>
    <property type="resolution" value="1.60 A"/>
    <property type="chains" value="A=19-147"/>
</dbReference>
<dbReference type="PDB" id="8FPN">
    <property type="method" value="X-ray"/>
    <property type="resolution" value="1.60 A"/>
    <property type="chains" value="A=19-147"/>
</dbReference>
<dbReference type="PDB" id="8FPP">
    <property type="method" value="X-ray"/>
    <property type="resolution" value="1.60 A"/>
    <property type="chains" value="A=19-147"/>
</dbReference>
<dbReference type="PDB" id="8FPR">
    <property type="method" value="X-ray"/>
    <property type="resolution" value="1.60 A"/>
    <property type="chains" value="A=19-147"/>
</dbReference>
<dbReference type="PDB" id="8FPU">
    <property type="method" value="X-ray"/>
    <property type="resolution" value="1.60 A"/>
    <property type="chains" value="A=19-147"/>
</dbReference>
<dbReference type="PDB" id="8FRY">
    <property type="method" value="X-ray"/>
    <property type="resolution" value="1.60 A"/>
    <property type="chains" value="A=19-147"/>
</dbReference>
<dbReference type="PDB" id="8FS0">
    <property type="method" value="X-ray"/>
    <property type="resolution" value="1.60 A"/>
    <property type="chains" value="A=19-147"/>
</dbReference>
<dbReference type="PDB" id="8FS9">
    <property type="method" value="X-ray"/>
    <property type="resolution" value="1.60 A"/>
    <property type="chains" value="A=19-147"/>
</dbReference>
<dbReference type="PDB" id="8FSA">
    <property type="method" value="X-ray"/>
    <property type="resolution" value="1.60 A"/>
    <property type="chains" value="A=19-147"/>
</dbReference>
<dbReference type="PDB" id="8FSC">
    <property type="method" value="X-ray"/>
    <property type="resolution" value="1.60 A"/>
    <property type="chains" value="A=19-147"/>
</dbReference>
<dbReference type="PDB" id="8FSF">
    <property type="method" value="X-ray"/>
    <property type="resolution" value="1.60 A"/>
    <property type="chains" value="A=19-147"/>
</dbReference>
<dbReference type="PDB" id="8FSG">
    <property type="method" value="X-ray"/>
    <property type="resolution" value="1.60 A"/>
    <property type="chains" value="A=19-147"/>
</dbReference>
<dbReference type="PDB" id="8FSH">
    <property type="method" value="X-ray"/>
    <property type="resolution" value="1.60 A"/>
    <property type="chains" value="A=19-147"/>
</dbReference>
<dbReference type="PDB" id="8FSM">
    <property type="method" value="X-ray"/>
    <property type="resolution" value="1.60 A"/>
    <property type="chains" value="A=19-147"/>
</dbReference>
<dbReference type="PDB" id="8FSN">
    <property type="method" value="X-ray"/>
    <property type="resolution" value="1.60 A"/>
    <property type="chains" value="A=19-147"/>
</dbReference>
<dbReference type="PDB" id="8FST">
    <property type="method" value="X-ray"/>
    <property type="resolution" value="1.60 A"/>
    <property type="chains" value="A=19-147"/>
</dbReference>
<dbReference type="PDB" id="8FSU">
    <property type="method" value="X-ray"/>
    <property type="resolution" value="1.60 A"/>
    <property type="chains" value="A=19-147"/>
</dbReference>
<dbReference type="PDB" id="8FSV">
    <property type="method" value="X-ray"/>
    <property type="resolution" value="1.60 A"/>
    <property type="chains" value="A=19-147"/>
</dbReference>
<dbReference type="PDB" id="8FSW">
    <property type="method" value="X-ray"/>
    <property type="resolution" value="1.60 A"/>
    <property type="chains" value="A=19-147"/>
</dbReference>
<dbReference type="PDB" id="8FSX">
    <property type="method" value="X-ray"/>
    <property type="resolution" value="1.60 A"/>
    <property type="chains" value="A=19-147"/>
</dbReference>
<dbReference type="PDB" id="8FSY">
    <property type="method" value="X-ray"/>
    <property type="resolution" value="1.60 A"/>
    <property type="chains" value="A=19-147"/>
</dbReference>
<dbReference type="PDB" id="8FT0">
    <property type="method" value="X-ray"/>
    <property type="resolution" value="1.60 A"/>
    <property type="chains" value="A=19-147"/>
</dbReference>
<dbReference type="PDB" id="8FT1">
    <property type="method" value="X-ray"/>
    <property type="resolution" value="1.60 A"/>
    <property type="chains" value="A=19-147"/>
</dbReference>
<dbReference type="PDB" id="8FT2">
    <property type="method" value="X-ray"/>
    <property type="resolution" value="1.60 A"/>
    <property type="chains" value="A=19-147"/>
</dbReference>
<dbReference type="PDB" id="8FT3">
    <property type="method" value="X-ray"/>
    <property type="resolution" value="1.60 A"/>
    <property type="chains" value="A=19-147"/>
</dbReference>
<dbReference type="PDB" id="8GMV">
    <property type="method" value="X-ray"/>
    <property type="resolution" value="2.20 A"/>
    <property type="chains" value="A=19-147"/>
</dbReference>
<dbReference type="PDB" id="8GMW">
    <property type="method" value="X-ray"/>
    <property type="resolution" value="1.35 A"/>
    <property type="chains" value="A=19-147"/>
</dbReference>
<dbReference type="PDB" id="8GQ1">
    <property type="method" value="X-ray"/>
    <property type="resolution" value="3.13 A"/>
    <property type="chains" value="C=19-147"/>
</dbReference>
<dbReference type="PDB" id="8H3W">
    <property type="method" value="X-ray"/>
    <property type="resolution" value="2.39 A"/>
    <property type="chains" value="A=19-147"/>
</dbReference>
<dbReference type="PDB" id="8H8T">
    <property type="method" value="X-ray"/>
    <property type="resolution" value="1.70 A"/>
    <property type="chains" value="A=19-147"/>
</dbReference>
<dbReference type="PDB" id="8H8U">
    <property type="method" value="X-ray"/>
    <property type="resolution" value="1.70 A"/>
    <property type="chains" value="A=19-147"/>
</dbReference>
<dbReference type="PDB" id="8H8V">
    <property type="method" value="X-ray"/>
    <property type="resolution" value="1.70 A"/>
    <property type="chains" value="A=19-147"/>
</dbReference>
<dbReference type="PDB" id="8H8W">
    <property type="method" value="X-ray"/>
    <property type="resolution" value="1.70 A"/>
    <property type="chains" value="A=19-147"/>
</dbReference>
<dbReference type="PDB" id="8JQV">
    <property type="method" value="X-ray"/>
    <property type="resolution" value="1.83 A"/>
    <property type="chains" value="A=19-147"/>
</dbReference>
<dbReference type="PDB" id="8K8M">
    <property type="method" value="X-ray"/>
    <property type="resolution" value="1.60 A"/>
    <property type="chains" value="A=19-147"/>
</dbReference>
<dbReference type="PDB" id="8LYZ">
    <property type="method" value="X-ray"/>
    <property type="resolution" value="2.50 A"/>
    <property type="chains" value="A=19-147"/>
</dbReference>
<dbReference type="PDB" id="8OM8">
    <property type="method" value="X-ray"/>
    <property type="resolution" value="1.08 A"/>
    <property type="chains" value="AAA=19-147"/>
</dbReference>
<dbReference type="PDB" id="8OMS">
    <property type="method" value="X-ray"/>
    <property type="resolution" value="1.10 A"/>
    <property type="chains" value="AAA=19-147"/>
</dbReference>
<dbReference type="PDB" id="8OMT">
    <property type="method" value="X-ray"/>
    <property type="resolution" value="1.10 A"/>
    <property type="chains" value="AAA=19-147"/>
</dbReference>
<dbReference type="PDB" id="8OWC">
    <property type="method" value="X-ray"/>
    <property type="resolution" value="1.70 A"/>
    <property type="chains" value="A=1-147"/>
</dbReference>
<dbReference type="PDB" id="8P1A">
    <property type="method" value="X-ray"/>
    <property type="resolution" value="2.05 A"/>
    <property type="chains" value="A=19-147"/>
</dbReference>
<dbReference type="PDB" id="8P1B">
    <property type="method" value="X-ray"/>
    <property type="resolution" value="1.70 A"/>
    <property type="chains" value="A=19-147"/>
</dbReference>
<dbReference type="PDB" id="8P1C">
    <property type="method" value="X-ray"/>
    <property type="resolution" value="1.58 A"/>
    <property type="chains" value="A=19-147"/>
</dbReference>
<dbReference type="PDB" id="8P1D">
    <property type="method" value="X-ray"/>
    <property type="resolution" value="1.60 A"/>
    <property type="chains" value="A=19-147"/>
</dbReference>
<dbReference type="PDB" id="8P2Q">
    <property type="method" value="X-ray"/>
    <property type="resolution" value="1.69 A"/>
    <property type="chains" value="A=1-147"/>
</dbReference>
<dbReference type="PDB" id="8PFT">
    <property type="method" value="X-ray"/>
    <property type="resolution" value="1.30 A"/>
    <property type="chains" value="A=19-147"/>
</dbReference>
<dbReference type="PDB" id="8PFU">
    <property type="method" value="X-ray"/>
    <property type="resolution" value="1.18 A"/>
    <property type="chains" value="A=19-147"/>
</dbReference>
<dbReference type="PDB" id="8PFV">
    <property type="method" value="X-ray"/>
    <property type="resolution" value="1.46 A"/>
    <property type="chains" value="AAA=19-147"/>
</dbReference>
<dbReference type="PDB" id="8PFW">
    <property type="method" value="X-ray"/>
    <property type="resolution" value="1.12 A"/>
    <property type="chains" value="A=19-147"/>
</dbReference>
<dbReference type="PDB" id="8PFX">
    <property type="method" value="X-ray"/>
    <property type="resolution" value="1.03 A"/>
    <property type="chains" value="A=19-147"/>
</dbReference>
<dbReference type="PDB" id="8PFY">
    <property type="method" value="X-ray"/>
    <property type="resolution" value="1.19 A"/>
    <property type="chains" value="A=19-147"/>
</dbReference>
<dbReference type="PDB" id="8PH5">
    <property type="method" value="X-ray"/>
    <property type="resolution" value="1.29 A"/>
    <property type="chains" value="AAA=19-147"/>
</dbReference>
<dbReference type="PDB" id="8PH6">
    <property type="method" value="X-ray"/>
    <property type="resolution" value="1.07 A"/>
    <property type="chains" value="A=19-147"/>
</dbReference>
<dbReference type="PDB" id="8PH7">
    <property type="method" value="X-ray"/>
    <property type="resolution" value="1.41 A"/>
    <property type="chains" value="A=19-147"/>
</dbReference>
<dbReference type="PDB" id="8PH8">
    <property type="method" value="X-ray"/>
    <property type="resolution" value="1.29 A"/>
    <property type="chains" value="AAA=19-147"/>
</dbReference>
<dbReference type="PDB" id="8PIW">
    <property type="method" value="X-ray"/>
    <property type="resolution" value="1.72 A"/>
    <property type="chains" value="A=1-147"/>
</dbReference>
<dbReference type="PDB" id="8POB">
    <property type="method" value="X-ray"/>
    <property type="resolution" value="1.74 A"/>
    <property type="chains" value="A=1-147"/>
</dbReference>
<dbReference type="PDB" id="8PTE">
    <property type="method" value="X-ray"/>
    <property type="resolution" value="1.80 A"/>
    <property type="chains" value="AAA=19-147"/>
</dbReference>
<dbReference type="PDB" id="8PYO">
    <property type="method" value="X-ray"/>
    <property type="resolution" value="1.54 A"/>
    <property type="chains" value="A=19-147"/>
</dbReference>
<dbReference type="PDB" id="8PYP">
    <property type="method" value="X-ray"/>
    <property type="resolution" value="1.40 A"/>
    <property type="chains" value="A=19-147"/>
</dbReference>
<dbReference type="PDB" id="8PYQ">
    <property type="method" value="X-ray"/>
    <property type="resolution" value="1.40 A"/>
    <property type="chains" value="A=19-147"/>
</dbReference>
<dbReference type="PDB" id="8QCU">
    <property type="method" value="X-ray"/>
    <property type="resolution" value="1.15 A"/>
    <property type="chains" value="A=19-147"/>
</dbReference>
<dbReference type="PDB" id="8QV8">
    <property type="method" value="EM"/>
    <property type="resolution" value="3.26 A"/>
    <property type="chains" value="A/C/E/G/I=19-147"/>
</dbReference>
<dbReference type="PDB" id="8REG">
    <property type="method" value="X-ray"/>
    <property type="resolution" value="1.70 A"/>
    <property type="chains" value="A=19-147"/>
</dbReference>
<dbReference type="PDB" id="8REH">
    <property type="method" value="X-ray"/>
    <property type="resolution" value="1.70 A"/>
    <property type="chains" value="A=19-147"/>
</dbReference>
<dbReference type="PDB" id="8RGE">
    <property type="method" value="X-ray"/>
    <property type="resolution" value="1.88 A"/>
    <property type="chains" value="A=19-147"/>
</dbReference>
<dbReference type="PDB" id="8RLF">
    <property type="method" value="X-ray"/>
    <property type="resolution" value="0.96 A"/>
    <property type="chains" value="A=19-147"/>
</dbReference>
<dbReference type="PDB" id="8RLG">
    <property type="method" value="X-ray"/>
    <property type="resolution" value="1.07 A"/>
    <property type="chains" value="A=18-147"/>
</dbReference>
<dbReference type="PDB" id="8RLH">
    <property type="method" value="Neutron"/>
    <property type="resolution" value="1.10 A"/>
    <property type="chains" value="A=19-147"/>
</dbReference>
<dbReference type="PDB" id="8RLI">
    <property type="method" value="Neutron"/>
    <property type="resolution" value="0.91 A"/>
    <property type="chains" value="A=18-147"/>
</dbReference>
<dbReference type="PDB" id="8RNV">
    <property type="method" value="X-ray"/>
    <property type="resolution" value="1.08 A"/>
    <property type="chains" value="A=19-147"/>
</dbReference>
<dbReference type="PDB" id="8RNW">
    <property type="method" value="X-ray"/>
    <property type="resolution" value="1.12 A"/>
    <property type="chains" value="A=19-147"/>
</dbReference>
<dbReference type="PDB" id="8RNX">
    <property type="method" value="X-ray"/>
    <property type="resolution" value="1.25 A"/>
    <property type="chains" value="A=19-147"/>
</dbReference>
<dbReference type="PDB" id="8RNY">
    <property type="method" value="X-ray"/>
    <property type="resolution" value="1.02 A"/>
    <property type="chains" value="A=19-147"/>
</dbReference>
<dbReference type="PDB" id="8RPM">
    <property type="method" value="X-ray"/>
    <property type="resolution" value="1.80 A"/>
    <property type="chains" value="A=19-147"/>
</dbReference>
<dbReference type="PDB" id="8RSH">
    <property type="method" value="X-ray"/>
    <property type="resolution" value="1.70 A"/>
    <property type="chains" value="A=19-147"/>
</dbReference>
<dbReference type="PDB" id="8RT2">
    <property type="method" value="X-ray"/>
    <property type="resolution" value="0.80 A"/>
    <property type="chains" value="A=19-147"/>
</dbReference>
<dbReference type="PDB" id="8RT3">
    <property type="method" value="X-ray"/>
    <property type="resolution" value="1.09 A"/>
    <property type="chains" value="A=19-147"/>
</dbReference>
<dbReference type="PDB" id="8RTJ">
    <property type="method" value="X-ray"/>
    <property type="resolution" value="1.27 A"/>
    <property type="chains" value="AAA=19-147"/>
</dbReference>
<dbReference type="PDB" id="8RTK">
    <property type="method" value="X-ray"/>
    <property type="resolution" value="1.21 A"/>
    <property type="chains" value="AAA=19-147"/>
</dbReference>
<dbReference type="PDB" id="8RUS">
    <property type="method" value="X-ray"/>
    <property type="resolution" value="1.38 A"/>
    <property type="chains" value="A=19-147"/>
</dbReference>
<dbReference type="PDB" id="8S2U">
    <property type="method" value="X-ray"/>
    <property type="resolution" value="1.80 A"/>
    <property type="chains" value="A=1-147"/>
</dbReference>
<dbReference type="PDB" id="8S2V">
    <property type="method" value="X-ray"/>
    <property type="resolution" value="1.80 A"/>
    <property type="chains" value="A=19-147"/>
</dbReference>
<dbReference type="PDB" id="8SCY">
    <property type="method" value="X-ray"/>
    <property type="resolution" value="1.45 A"/>
    <property type="chains" value="A=19-147"/>
</dbReference>
<dbReference type="PDB" id="8SIL">
    <property type="method" value="X-ray"/>
    <property type="resolution" value="1.70 A"/>
    <property type="chains" value="A=19-147"/>
</dbReference>
<dbReference type="PDB" id="8W6K">
    <property type="method" value="X-ray"/>
    <property type="resolution" value="2.00 A"/>
    <property type="chains" value="A=19-147"/>
</dbReference>
<dbReference type="PDB" id="8WDI">
    <property type="method" value="X-ray"/>
    <property type="resolution" value="2.20 A"/>
    <property type="chains" value="A=19-147"/>
</dbReference>
<dbReference type="PDB" id="8WZF">
    <property type="method" value="X-ray"/>
    <property type="resolution" value="1.60 A"/>
    <property type="chains" value="A=19-147"/>
</dbReference>
<dbReference type="PDB" id="8WZG">
    <property type="method" value="X-ray"/>
    <property type="resolution" value="1.60 A"/>
    <property type="chains" value="A=19-147"/>
</dbReference>
<dbReference type="PDB" id="8WZR">
    <property type="method" value="X-ray"/>
    <property type="resolution" value="1.60 A"/>
    <property type="chains" value="A=19-147"/>
</dbReference>
<dbReference type="PDB" id="8WZT">
    <property type="method" value="X-ray"/>
    <property type="resolution" value="1.60 A"/>
    <property type="chains" value="A=19-147"/>
</dbReference>
<dbReference type="PDB" id="8WZV">
    <property type="method" value="X-ray"/>
    <property type="resolution" value="1.60 A"/>
    <property type="chains" value="A=19-147"/>
</dbReference>
<dbReference type="PDB" id="8Y1R">
    <property type="method" value="X-ray"/>
    <property type="resolution" value="2.00 A"/>
    <property type="chains" value="A=19-147"/>
</dbReference>
<dbReference type="PDB" id="8Y1S">
    <property type="method" value="X-ray"/>
    <property type="resolution" value="1.52 A"/>
    <property type="chains" value="A=19-147"/>
</dbReference>
<dbReference type="PDB" id="8Y9W">
    <property type="method" value="X-ray"/>
    <property type="resolution" value="1.90 A"/>
    <property type="chains" value="A=19-147"/>
</dbReference>
<dbReference type="PDB" id="8YA1">
    <property type="method" value="X-ray"/>
    <property type="resolution" value="1.57 A"/>
    <property type="chains" value="A=19-147"/>
</dbReference>
<dbReference type="PDB" id="8YA4">
    <property type="method" value="X-ray"/>
    <property type="resolution" value="2.10 A"/>
    <property type="chains" value="A=19-147"/>
</dbReference>
<dbReference type="PDB" id="8YBG">
    <property type="method" value="X-ray"/>
    <property type="resolution" value="1.55 A"/>
    <property type="chains" value="A=19-147"/>
</dbReference>
<dbReference type="PDB" id="8YBH">
    <property type="method" value="X-ray"/>
    <property type="resolution" value="1.55 A"/>
    <property type="chains" value="A=19-147"/>
</dbReference>
<dbReference type="PDB" id="9B7C">
    <property type="method" value="X-ray"/>
    <property type="resolution" value="1.10 A"/>
    <property type="chains" value="A=19-147"/>
</dbReference>
<dbReference type="PDB" id="9B7E">
    <property type="method" value="X-ray"/>
    <property type="resolution" value="1.65 A"/>
    <property type="chains" value="A=19-147"/>
</dbReference>
<dbReference type="PDB" id="9B7F">
    <property type="method" value="X-ray"/>
    <property type="resolution" value="1.65 A"/>
    <property type="chains" value="A=19-147"/>
</dbReference>
<dbReference type="PDB" id="9ENZ">
    <property type="method" value="X-ray"/>
    <property type="resolution" value="1.60 A"/>
    <property type="chains" value="AAA=19-147"/>
</dbReference>
<dbReference type="PDB" id="9EO2">
    <property type="method" value="X-ray"/>
    <property type="resolution" value="1.36 A"/>
    <property type="chains" value="AAA=19-147"/>
</dbReference>
<dbReference type="PDB" id="9EX0">
    <property type="method" value="X-ray"/>
    <property type="resolution" value="1.45 A"/>
    <property type="chains" value="A=19-147"/>
</dbReference>
<dbReference type="PDB" id="9EX1">
    <property type="method" value="X-ray"/>
    <property type="resolution" value="1.78 A"/>
    <property type="chains" value="A=19-147"/>
</dbReference>
<dbReference type="PDB" id="9EX2">
    <property type="method" value="X-ray"/>
    <property type="resolution" value="1.17 A"/>
    <property type="chains" value="A=19-147"/>
</dbReference>
<dbReference type="PDB" id="9FUD">
    <property type="method" value="X-ray"/>
    <property type="resolution" value="2.05 A"/>
    <property type="chains" value="A=19-147"/>
</dbReference>
<dbReference type="PDB" id="9FUE">
    <property type="method" value="X-ray"/>
    <property type="resolution" value="2.05 A"/>
    <property type="chains" value="A=19-147"/>
</dbReference>
<dbReference type="PDB" id="9GCV">
    <property type="method" value="X-ray"/>
    <property type="resolution" value="2.70 A"/>
    <property type="chains" value="A=19-147"/>
</dbReference>
<dbReference type="PDB" id="9GHX">
    <property type="method" value="X-ray"/>
    <property type="resolution" value="2.19 A"/>
    <property type="chains" value="A=19-147"/>
</dbReference>
<dbReference type="PDB" id="9GI7">
    <property type="method" value="X-ray"/>
    <property type="resolution" value="1.76 A"/>
    <property type="chains" value="A=19-147"/>
</dbReference>
<dbReference type="PDB" id="9GOG">
    <property type="method" value="X-ray"/>
    <property type="resolution" value="1.24 A"/>
    <property type="chains" value="AAA=19-147"/>
</dbReference>
<dbReference type="PDB" id="9GOK">
    <property type="method" value="X-ray"/>
    <property type="resolution" value="1.18 A"/>
    <property type="chains" value="AAA=19-147"/>
</dbReference>
<dbReference type="PDB" id="9GYH">
    <property type="method" value="X-ray"/>
    <property type="resolution" value="1.60 A"/>
    <property type="chains" value="A/B=19-147"/>
</dbReference>
<dbReference type="PDB" id="9H3E">
    <property type="method" value="X-ray"/>
    <property type="resolution" value="1.50 A"/>
    <property type="chains" value="A=1-147"/>
</dbReference>
<dbReference type="PDB" id="9HC2">
    <property type="method" value="X-ray"/>
    <property type="resolution" value="1.27 A"/>
    <property type="chains" value="A=19-147"/>
</dbReference>
<dbReference type="PDB" id="9K9Z">
    <property type="method" value="X-ray"/>
    <property type="resolution" value="1.80 A"/>
    <property type="chains" value="A=1-147"/>
</dbReference>
<dbReference type="PDB" id="9KA0">
    <property type="method" value="X-ray"/>
    <property type="resolution" value="1.80 A"/>
    <property type="chains" value="A=1-147"/>
</dbReference>
<dbReference type="PDB" id="9KOT">
    <property type="method" value="X-ray"/>
    <property type="resolution" value="1.50 A"/>
    <property type="chains" value="A=19-147"/>
</dbReference>
<dbReference type="PDB" id="9L71">
    <property type="method" value="X-ray"/>
    <property type="resolution" value="2.00 A"/>
    <property type="chains" value="A=19-147"/>
</dbReference>
<dbReference type="PDB" id="9L9R">
    <property type="method" value="X-ray"/>
    <property type="resolution" value="1.45 A"/>
    <property type="chains" value="A=19-147"/>
</dbReference>
<dbReference type="PDB" id="9LMK">
    <property type="method" value="X-ray"/>
    <property type="resolution" value="1.50 A"/>
    <property type="chains" value="A=19-147"/>
</dbReference>
<dbReference type="PDB" id="9LML">
    <property type="method" value="X-ray"/>
    <property type="resolution" value="1.60 A"/>
    <property type="chains" value="A=19-147"/>
</dbReference>
<dbReference type="PDB" id="9LYZ">
    <property type="method" value="X-ray"/>
    <property type="resolution" value="2.50 A"/>
    <property type="chains" value="A=19-147"/>
</dbReference>
<dbReference type="PDBsum" id="132L"/>
<dbReference type="PDBsum" id="193L"/>
<dbReference type="PDBsum" id="194L"/>
<dbReference type="PDBsum" id="1A2Y"/>
<dbReference type="PDBsum" id="1AKI"/>
<dbReference type="PDBsum" id="1AT5"/>
<dbReference type="PDBsum" id="1AT6"/>
<dbReference type="PDBsum" id="1AZF"/>
<dbReference type="PDBsum" id="1B0D"/>
<dbReference type="PDBsum" id="1B2K"/>
<dbReference type="PDBsum" id="1BGI"/>
<dbReference type="PDBsum" id="1BHZ"/>
<dbReference type="PDBsum" id="1BVK"/>
<dbReference type="PDBsum" id="1BVX"/>
<dbReference type="PDBsum" id="1BWH"/>
<dbReference type="PDBsum" id="1BWI"/>
<dbReference type="PDBsum" id="1BWJ"/>
<dbReference type="PDBsum" id="1C08"/>
<dbReference type="PDBsum" id="1C10"/>
<dbReference type="PDBsum" id="1DPW"/>
<dbReference type="PDBsum" id="1DPX"/>
<dbReference type="PDBsum" id="1DQJ"/>
<dbReference type="PDBsum" id="1E8L"/>
<dbReference type="PDBsum" id="1F0W"/>
<dbReference type="PDBsum" id="1F10"/>
<dbReference type="PDBsum" id="1F3J"/>
<dbReference type="PDBsum" id="1FDL"/>
<dbReference type="PDBsum" id="1FLQ"/>
<dbReference type="PDBsum" id="1FLU"/>
<dbReference type="PDBsum" id="1FLW"/>
<dbReference type="PDBsum" id="1FLY"/>
<dbReference type="PDBsum" id="1FN5"/>
<dbReference type="PDBsum" id="1G7H"/>
<dbReference type="PDBsum" id="1G7I"/>
<dbReference type="PDBsum" id="1G7J"/>
<dbReference type="PDBsum" id="1G7L"/>
<dbReference type="PDBsum" id="1G7M"/>
<dbReference type="PDBsum" id="1GPQ"/>
<dbReference type="PDBsum" id="1GWD"/>
<dbReference type="PDBsum" id="1GXV"/>
<dbReference type="PDBsum" id="1GXX"/>
<dbReference type="PDBsum" id="1H6M"/>
<dbReference type="PDBsum" id="1H87"/>
<dbReference type="PDBsum" id="1HC0"/>
<dbReference type="PDBsum" id="1HEL"/>
<dbReference type="PDBsum" id="1HEM"/>
<dbReference type="PDBsum" id="1HEN"/>
<dbReference type="PDBsum" id="1HEO"/>
<dbReference type="PDBsum" id="1HEP"/>
<dbReference type="PDBsum" id="1HEQ"/>
<dbReference type="PDBsum" id="1HER"/>
<dbReference type="PDBsum" id="1HEW"/>
<dbReference type="PDBsum" id="1HF4"/>
<dbReference type="PDBsum" id="1HSW"/>
<dbReference type="PDBsum" id="1HSX"/>
<dbReference type="PDBsum" id="1IC4"/>
<dbReference type="PDBsum" id="1IC5"/>
<dbReference type="PDBsum" id="1IC7"/>
<dbReference type="PDBsum" id="1IEE"/>
<dbReference type="PDBsum" id="1IO5"/>
<dbReference type="PDBsum" id="1IOQ"/>
<dbReference type="PDBsum" id="1IOR"/>
<dbReference type="PDBsum" id="1IOS"/>
<dbReference type="PDBsum" id="1IOT"/>
<dbReference type="PDBsum" id="1IR7"/>
<dbReference type="PDBsum" id="1IR8"/>
<dbReference type="PDBsum" id="1IR9"/>
<dbReference type="PDBsum" id="1J1O"/>
<dbReference type="PDBsum" id="1J1P"/>
<dbReference type="PDBsum" id="1J1X"/>
<dbReference type="PDBsum" id="1JA2"/>
<dbReference type="PDBsum" id="1JA4"/>
<dbReference type="PDBsum" id="1JA6"/>
<dbReference type="PDBsum" id="1JA7"/>
<dbReference type="PDBsum" id="1JIS"/>
<dbReference type="PDBsum" id="1JIT"/>
<dbReference type="PDBsum" id="1JIY"/>
<dbReference type="PDBsum" id="1JJ0"/>
<dbReference type="PDBsum" id="1JJ1"/>
<dbReference type="PDBsum" id="1JJ3"/>
<dbReference type="PDBsum" id="1JPO"/>
<dbReference type="PDBsum" id="1JTO"/>
<dbReference type="PDBsum" id="1JTT"/>
<dbReference type="PDBsum" id="1KIP"/>
<dbReference type="PDBsum" id="1KIQ"/>
<dbReference type="PDBsum" id="1KIR"/>
<dbReference type="PDBsum" id="1KXW"/>
<dbReference type="PDBsum" id="1KXX"/>
<dbReference type="PDBsum" id="1KXY"/>
<dbReference type="PDBsum" id="1LCN"/>
<dbReference type="PDBsum" id="1LJ3"/>
<dbReference type="PDBsum" id="1LJ4"/>
<dbReference type="PDBsum" id="1LJE"/>
<dbReference type="PDBsum" id="1LJF"/>
<dbReference type="PDBsum" id="1LJG"/>
<dbReference type="PDBsum" id="1LJH"/>
<dbReference type="PDBsum" id="1LJI"/>
<dbReference type="PDBsum" id="1LJJ"/>
<dbReference type="PDBsum" id="1LJK"/>
<dbReference type="PDBsum" id="1LKR"/>
<dbReference type="PDBsum" id="1LKS"/>
<dbReference type="PDBsum" id="1LMA"/>
<dbReference type="PDBsum" id="1LPI"/>
<dbReference type="PDBsum" id="1LSA"/>
<dbReference type="PDBsum" id="1LSB"/>
<dbReference type="PDBsum" id="1LSC"/>
<dbReference type="PDBsum" id="1LSD"/>
<dbReference type="PDBsum" id="1LSE"/>
<dbReference type="PDBsum" id="1LSF"/>
<dbReference type="PDBsum" id="1LSG"/>
<dbReference type="PDBsum" id="1LSM"/>
<dbReference type="PDBsum" id="1LSN"/>
<dbReference type="PDBsum" id="1LSY"/>
<dbReference type="PDBsum" id="1LSZ"/>
<dbReference type="PDBsum" id="1LYO"/>
<dbReference type="PDBsum" id="1LYS"/>
<dbReference type="PDBsum" id="1LYZ"/>
<dbReference type="PDBsum" id="1LZ8"/>
<dbReference type="PDBsum" id="1LZ9"/>
<dbReference type="PDBsum" id="1LZA"/>
<dbReference type="PDBsum" id="1LZB"/>
<dbReference type="PDBsum" id="1LZC"/>
<dbReference type="PDBsum" id="1LZD"/>
<dbReference type="PDBsum" id="1LZE"/>
<dbReference type="PDBsum" id="1LZG"/>
<dbReference type="PDBsum" id="1LZH"/>
<dbReference type="PDBsum" id="1LZN"/>
<dbReference type="PDBsum" id="1LZT"/>
<dbReference type="PDBsum" id="1MEL"/>
<dbReference type="PDBsum" id="1MLC"/>
<dbReference type="PDBsum" id="1N4F"/>
<dbReference type="PDBsum" id="1NBY"/>
<dbReference type="PDBsum" id="1NBZ"/>
<dbReference type="PDBsum" id="1NDG"/>
<dbReference type="PDBsum" id="1NDM"/>
<dbReference type="PDBsum" id="1P2C"/>
<dbReference type="PDBsum" id="1PS5"/>
<dbReference type="PDBsum" id="1QIO"/>
<dbReference type="PDBsum" id="1QTK"/>
<dbReference type="PDBsum" id="1RCM"/>
<dbReference type="PDBsum" id="1RFP"/>
<dbReference type="PDBsum" id="1RI8"/>
<dbReference type="PDBsum" id="1RJC"/>
<dbReference type="PDBsum" id="1SF4"/>
<dbReference type="PDBsum" id="1SF6"/>
<dbReference type="PDBsum" id="1SF7"/>
<dbReference type="PDBsum" id="1SFB"/>
<dbReference type="PDBsum" id="1SFG"/>
<dbReference type="PDBsum" id="1SQ2"/>
<dbReference type="PDBsum" id="1T3P"/>
<dbReference type="PDBsum" id="1T6V"/>
<dbReference type="PDBsum" id="1UA6"/>
<dbReference type="PDBsum" id="1UC0"/>
<dbReference type="PDBsum" id="1UCO"/>
<dbReference type="PDBsum" id="1UIA"/>
<dbReference type="PDBsum" id="1UIB"/>
<dbReference type="PDBsum" id="1UIC"/>
<dbReference type="PDBsum" id="1UID"/>
<dbReference type="PDBsum" id="1UIE"/>
<dbReference type="PDBsum" id="1UIF"/>
<dbReference type="PDBsum" id="1UIG"/>
<dbReference type="PDBsum" id="1UIH"/>
<dbReference type="PDBsum" id="1UUZ"/>
<dbReference type="PDBsum" id="1V7S"/>
<dbReference type="PDBsum" id="1V7T"/>
<dbReference type="PDBsum" id="1VAT"/>
<dbReference type="PDBsum" id="1VAU"/>
<dbReference type="PDBsum" id="1VDP"/>
<dbReference type="PDBsum" id="1VDQ"/>
<dbReference type="PDBsum" id="1VDS"/>
<dbReference type="PDBsum" id="1VDT"/>
<dbReference type="PDBsum" id="1VED"/>
<dbReference type="PDBsum" id="1VFB"/>
<dbReference type="PDBsum" id="1W6Z"/>
<dbReference type="PDBsum" id="1WTM"/>
<dbReference type="PDBsum" id="1WTN"/>
<dbReference type="PDBsum" id="1XEI"/>
<dbReference type="PDBsum" id="1XEJ"/>
<dbReference type="PDBsum" id="1XEK"/>
<dbReference type="PDBsum" id="1XFP"/>
<dbReference type="PDBsum" id="1XGP"/>
<dbReference type="PDBsum" id="1XGQ"/>
<dbReference type="PDBsum" id="1XGR"/>
<dbReference type="PDBsum" id="1XGT"/>
<dbReference type="PDBsum" id="1XGU"/>
<dbReference type="PDBsum" id="1YIK"/>
<dbReference type="PDBsum" id="1YIL"/>
<dbReference type="PDBsum" id="1YKX"/>
<dbReference type="PDBsum" id="1YKY"/>
<dbReference type="PDBsum" id="1YKZ"/>
<dbReference type="PDBsum" id="1YL0"/>
<dbReference type="PDBsum" id="1YL1"/>
<dbReference type="PDBsum" id="1YQV"/>
<dbReference type="PDBsum" id="1Z55"/>
<dbReference type="PDBsum" id="1ZMY"/>
<dbReference type="PDBsum" id="1ZV5"/>
<dbReference type="PDBsum" id="1ZVH"/>
<dbReference type="PDBsum" id="1ZVY"/>
<dbReference type="PDBsum" id="2A6U"/>
<dbReference type="PDBsum" id="2A7D"/>
<dbReference type="PDBsum" id="2A7F"/>
<dbReference type="PDBsum" id="2AUB"/>
<dbReference type="PDBsum" id="2B5Z"/>
<dbReference type="PDBsum" id="2BLX"/>
<dbReference type="PDBsum" id="2BLY"/>
<dbReference type="PDBsum" id="2BPU"/>
<dbReference type="PDBsum" id="2C8O"/>
<dbReference type="PDBsum" id="2C8P"/>
<dbReference type="PDBsum" id="2CDS"/>
<dbReference type="PDBsum" id="2CGI"/>
<dbReference type="PDBsum" id="2D4I"/>
<dbReference type="PDBsum" id="2D4J"/>
<dbReference type="PDBsum" id="2D4K"/>
<dbReference type="PDBsum" id="2D6B"/>
<dbReference type="PDBsum" id="2D91"/>
<dbReference type="PDBsum" id="2DQC"/>
<dbReference type="PDBsum" id="2DQD"/>
<dbReference type="PDBsum" id="2DQE"/>
<dbReference type="PDBsum" id="2DQF"/>
<dbReference type="PDBsum" id="2DQG"/>
<dbReference type="PDBsum" id="2DQH"/>
<dbReference type="PDBsum" id="2DQI"/>
<dbReference type="PDBsum" id="2DQJ"/>
<dbReference type="PDBsum" id="2EIZ"/>
<dbReference type="PDBsum" id="2EKS"/>
<dbReference type="PDBsum" id="2EPE"/>
<dbReference type="PDBsum" id="2F2N"/>
<dbReference type="PDBsum" id="2F30"/>
<dbReference type="PDBsum" id="2F4A"/>
<dbReference type="PDBsum" id="2F4G"/>
<dbReference type="PDBsum" id="2FBB"/>
<dbReference type="PDBsum" id="2G4P"/>
<dbReference type="PDBsum" id="2G4Q"/>
<dbReference type="PDBsum" id="2H9J"/>
<dbReference type="PDBsum" id="2H9K"/>
<dbReference type="PDBsum" id="2HS7"/>
<dbReference type="PDBsum" id="2HS9"/>
<dbReference type="PDBsum" id="2HSO"/>
<dbReference type="PDBsum" id="2HTX"/>
<dbReference type="PDBsum" id="2HU1"/>
<dbReference type="PDBsum" id="2HU3"/>
<dbReference type="PDBsum" id="2HUB"/>
<dbReference type="PDBsum" id="2I25"/>
<dbReference type="PDBsum" id="2I26"/>
<dbReference type="PDBsum" id="2I6Z"/>
<dbReference type="PDBsum" id="2IFF"/>
<dbReference type="PDBsum" id="2LYM"/>
<dbReference type="PDBsum" id="2LYO"/>
<dbReference type="PDBsum" id="2LYZ"/>
<dbReference type="PDBsum" id="2LZH"/>
<dbReference type="PDBsum" id="2LZT"/>
<dbReference type="PDBsum" id="2PC2"/>
<dbReference type="PDBsum" id="2Q0M"/>
<dbReference type="PDBsum" id="2VB1"/>
<dbReference type="PDBsum" id="2W1L"/>
<dbReference type="PDBsum" id="2W1M"/>
<dbReference type="PDBsum" id="2W1X"/>
<dbReference type="PDBsum" id="2W1Y"/>
<dbReference type="PDBsum" id="2WAR"/>
<dbReference type="PDBsum" id="2X0A"/>
<dbReference type="PDBsum" id="2XBR"/>
<dbReference type="PDBsum" id="2XBS"/>
<dbReference type="PDBsum" id="2XJW"/>
<dbReference type="PDBsum" id="2XTH"/>
<dbReference type="PDBsum" id="2YBH"/>
<dbReference type="PDBsum" id="2YBI"/>
<dbReference type="PDBsum" id="2YBJ"/>
<dbReference type="PDBsum" id="2YBL"/>
<dbReference type="PDBsum" id="2YBM"/>
<dbReference type="PDBsum" id="2YBN"/>
<dbReference type="PDBsum" id="2YDG"/>
<dbReference type="PDBsum" id="2YSS"/>
<dbReference type="PDBsum" id="2YVB"/>
<dbReference type="PDBsum" id="2Z12"/>
<dbReference type="PDBsum" id="2Z18"/>
<dbReference type="PDBsum" id="2Z19"/>
<dbReference type="PDBsum" id="2ZNW"/>
<dbReference type="PDBsum" id="2ZNX"/>
<dbReference type="PDBsum" id="2ZQ3"/>
<dbReference type="PDBsum" id="2ZQ4"/>
<dbReference type="PDBsum" id="2ZYP"/>
<dbReference type="PDBsum" id="3A34"/>
<dbReference type="PDBsum" id="3A3Q"/>
<dbReference type="PDBsum" id="3A3R"/>
<dbReference type="PDBsum" id="3A67"/>
<dbReference type="PDBsum" id="3A6B"/>
<dbReference type="PDBsum" id="3A6C"/>
<dbReference type="PDBsum" id="3A8Z"/>
<dbReference type="PDBsum" id="3A90"/>
<dbReference type="PDBsum" id="3A91"/>
<dbReference type="PDBsum" id="3A92"/>
<dbReference type="PDBsum" id="3A93"/>
<dbReference type="PDBsum" id="3A94"/>
<dbReference type="PDBsum" id="3A95"/>
<dbReference type="PDBsum" id="3A96"/>
<dbReference type="PDBsum" id="3AGG"/>
<dbReference type="PDBsum" id="3AGH"/>
<dbReference type="PDBsum" id="3AGI"/>
<dbReference type="PDBsum" id="3AJN"/>
<dbReference type="PDBsum" id="3ATN"/>
<dbReference type="PDBsum" id="3ATO"/>
<dbReference type="PDBsum" id="3AW6"/>
<dbReference type="PDBsum" id="3AW7"/>
<dbReference type="PDBsum" id="3AZ4"/>
<dbReference type="PDBsum" id="3AZ5"/>
<dbReference type="PDBsum" id="3AZ6"/>
<dbReference type="PDBsum" id="3AZ7"/>
<dbReference type="PDBsum" id="3B6L"/>
<dbReference type="PDBsum" id="3B72"/>
<dbReference type="PDBsum" id="3D9A"/>
<dbReference type="PDBsum" id="3E3D"/>
<dbReference type="PDBsum" id="3EMS"/>
<dbReference type="PDBsum" id="3EXD"/>
<dbReference type="PDBsum" id="3F6Z"/>
<dbReference type="PDBsum" id="3G3A"/>
<dbReference type="PDBsum" id="3G3B"/>
<dbReference type="PDBsum" id="3HFM"/>
<dbReference type="PDBsum" id="3IJU"/>
<dbReference type="PDBsum" id="3IJV"/>
<dbReference type="PDBsum" id="3J4G"/>
<dbReference type="PDBsum" id="3J6K"/>
<dbReference type="PDBsum" id="3KAM"/>
<dbReference type="PDBsum" id="3LYM"/>
<dbReference type="PDBsum" id="3LYO"/>
<dbReference type="PDBsum" id="3LYT"/>
<dbReference type="PDBsum" id="3LYZ"/>
<dbReference type="PDBsum" id="3LZT"/>
<dbReference type="PDBsum" id="3M18"/>
<dbReference type="PDBsum" id="3M3U"/>
<dbReference type="PDBsum" id="3MBE"/>
<dbReference type="PDBsum" id="3N9A"/>
<dbReference type="PDBsum" id="3N9C"/>
<dbReference type="PDBsum" id="3N9E"/>
<dbReference type="PDBsum" id="3OJP"/>
<dbReference type="PDBsum" id="3OK0"/>
<dbReference type="PDBsum" id="3OTP"/>
<dbReference type="PDBsum" id="3P4Z"/>
<dbReference type="PDBsum" id="3P64"/>
<dbReference type="PDBsum" id="3P65"/>
<dbReference type="PDBsum" id="3P66"/>
<dbReference type="PDBsum" id="3P68"/>
<dbReference type="PDBsum" id="3QE8"/>
<dbReference type="PDBsum" id="3QNG"/>
<dbReference type="PDBsum" id="3QY4"/>
<dbReference type="PDBsum" id="3RNX"/>
<dbReference type="PDBsum" id="3RT5"/>
<dbReference type="PDBsum" id="3RU5"/>
<dbReference type="PDBsum" id="3RW8"/>
<dbReference type="PDBsum" id="3RZ4"/>
<dbReference type="PDBsum" id="3SP3"/>
<dbReference type="PDBsum" id="3T6U"/>
<dbReference type="PDBsum" id="3TMU"/>
<dbReference type="PDBsum" id="3TMV"/>
<dbReference type="PDBsum" id="3TMW"/>
<dbReference type="PDBsum" id="3TMX"/>
<dbReference type="PDBsum" id="3TXB"/>
<dbReference type="PDBsum" id="3TXD"/>
<dbReference type="PDBsum" id="3TXE"/>
<dbReference type="PDBsum" id="3TXF"/>
<dbReference type="PDBsum" id="3TXG"/>
<dbReference type="PDBsum" id="3TXH"/>
<dbReference type="PDBsum" id="3TXI"/>
<dbReference type="PDBsum" id="3TXJ"/>
<dbReference type="PDBsum" id="3TXK"/>
<dbReference type="PDBsum" id="3ULR"/>
<dbReference type="PDBsum" id="3W6A"/>
<dbReference type="PDBsum" id="3WL2"/>
<dbReference type="PDBsum" id="3WMK"/>
<dbReference type="PDBsum" id="3WPJ"/>
<dbReference type="PDBsum" id="3WPK"/>
<dbReference type="PDBsum" id="3WPL"/>
<dbReference type="PDBsum" id="3WU7"/>
<dbReference type="PDBsum" id="3WU8"/>
<dbReference type="PDBsum" id="3WU9"/>
<dbReference type="PDBsum" id="3WUA"/>
<dbReference type="PDBsum" id="3WUL"/>
<dbReference type="PDBsum" id="3WUM"/>
<dbReference type="PDBsum" id="3WUN"/>
<dbReference type="PDBsum" id="3WVX"/>
<dbReference type="PDBsum" id="3WVY"/>
<dbReference type="PDBsum" id="3WW5"/>
<dbReference type="PDBsum" id="3WW6"/>
<dbReference type="PDBsum" id="3WXT"/>
<dbReference type="PDBsum" id="3WXU"/>
<dbReference type="PDBsum" id="3ZEK"/>
<dbReference type="PDBsum" id="3ZVQ"/>
<dbReference type="PDBsum" id="4A7D"/>
<dbReference type="PDBsum" id="4A8A"/>
<dbReference type="PDBsum" id="4A8B"/>
<dbReference type="PDBsum" id="4AGA"/>
<dbReference type="PDBsum" id="4AXT"/>
<dbReference type="PDBsum" id="4B0D"/>
<dbReference type="PDBsum" id="4B1A"/>
<dbReference type="PDBsum" id="4B49"/>
<dbReference type="PDBsum" id="4B4E"/>
<dbReference type="PDBsum" id="4B4I"/>
<dbReference type="PDBsum" id="4B4J"/>
<dbReference type="PDBsum" id="4BAD"/>
<dbReference type="PDBsum" id="4BAF"/>
<dbReference type="PDBsum" id="4BAP"/>
<dbReference type="PDBsum" id="4BS7"/>
<dbReference type="PDBsum" id="4C3W"/>
<dbReference type="PDBsum" id="4CJ2"/>
<dbReference type="PDBsum" id="4D9Z"/>
<dbReference type="PDBsum" id="4DC4"/>
<dbReference type="PDBsum" id="4DD0"/>
<dbReference type="PDBsum" id="4DD1"/>
<dbReference type="PDBsum" id="4DD2"/>
<dbReference type="PDBsum" id="4DD3"/>
<dbReference type="PDBsum" id="4DD7"/>
<dbReference type="PDBsum" id="4DD9"/>
<dbReference type="PDBsum" id="4DDA"/>
<dbReference type="PDBsum" id="4DDB"/>
<dbReference type="PDBsum" id="4DDC"/>
<dbReference type="PDBsum" id="4DT3"/>
<dbReference type="PDBsum" id="4E3U"/>
<dbReference type="PDBsum" id="4EOF"/>
<dbReference type="PDBsum" id="4ET8"/>
<dbReference type="PDBsum" id="4ET9"/>
<dbReference type="PDBsum" id="4ETA"/>
<dbReference type="PDBsum" id="4ETB"/>
<dbReference type="PDBsum" id="4ETC"/>
<dbReference type="PDBsum" id="4ETD"/>
<dbReference type="PDBsum" id="4ETE"/>
<dbReference type="PDBsum" id="4FJR"/>
<dbReference type="PDBsum" id="4G49"/>
<dbReference type="PDBsum" id="4G4B"/>
<dbReference type="PDBsum" id="4G4C"/>
<dbReference type="PDBsum" id="4G4H"/>
<dbReference type="PDBsum" id="4GCB"/>
<dbReference type="PDBsum" id="4GCC"/>
<dbReference type="PDBsum" id="4GCD"/>
<dbReference type="PDBsum" id="4GCE"/>
<dbReference type="PDBsum" id="4GCF"/>
<dbReference type="PDBsum" id="4GLA"/>
<dbReference type="PDBsum" id="4GLV"/>
<dbReference type="PDBsum" id="4GN3"/>
<dbReference type="PDBsum" id="4GN4"/>
<dbReference type="PDBsum" id="4GN5"/>
<dbReference type="PDBsum" id="4H1P"/>
<dbReference type="PDBsum" id="4H8X"/>
<dbReference type="PDBsum" id="4H8Y"/>
<dbReference type="PDBsum" id="4H8Z"/>
<dbReference type="PDBsum" id="4H90"/>
<dbReference type="PDBsum" id="4H91"/>
<dbReference type="PDBsum" id="4H92"/>
<dbReference type="PDBsum" id="4H93"/>
<dbReference type="PDBsum" id="4H94"/>
<dbReference type="PDBsum" id="4H9A"/>
<dbReference type="PDBsum" id="4H9B"/>
<dbReference type="PDBsum" id="4H9C"/>
<dbReference type="PDBsum" id="4H9E"/>
<dbReference type="PDBsum" id="4H9F"/>
<dbReference type="PDBsum" id="4H9H"/>
<dbReference type="PDBsum" id="4H9I"/>
<dbReference type="PDBsum" id="4HP0"/>
<dbReference type="PDBsum" id="4HPI"/>
<dbReference type="PDBsum" id="4HSF"/>
<dbReference type="PDBsum" id="4HTK"/>
<dbReference type="PDBsum" id="4HTN"/>
<dbReference type="PDBsum" id="4HTQ"/>
<dbReference type="PDBsum" id="4HV1"/>
<dbReference type="PDBsum" id="4HV2"/>
<dbReference type="PDBsum" id="4I8S"/>
<dbReference type="PDBsum" id="4IAS"/>
<dbReference type="PDBsum" id="4IAT"/>
<dbReference type="PDBsum" id="4II8"/>
<dbReference type="PDBsum" id="4J1A"/>
<dbReference type="PDBsum" id="4J1B"/>
<dbReference type="PDBsum" id="4J7V"/>
<dbReference type="PDBsum" id="4KXI"/>
<dbReference type="PDBsum" id="4LFP"/>
<dbReference type="PDBsum" id="4LFX"/>
<dbReference type="PDBsum" id="4LGK"/>
<dbReference type="PDBsum" id="4LT0"/>
<dbReference type="PDBsum" id="4LT1"/>
<dbReference type="PDBsum" id="4LT2"/>
<dbReference type="PDBsum" id="4LT3"/>
<dbReference type="PDBsum" id="4LYB"/>
<dbReference type="PDBsum" id="4LYC"/>
<dbReference type="PDBsum" id="4LYM"/>
<dbReference type="PDBsum" id="4LYO"/>
<dbReference type="PDBsum" id="4LYT"/>
<dbReference type="PDBsum" id="4LYZ"/>
<dbReference type="PDBsum" id="4LZT"/>
<dbReference type="PDBsum" id="4M4O"/>
<dbReference type="PDBsum" id="4M6D"/>
<dbReference type="PDBsum" id="4MR1"/>
<dbReference type="PDBsum" id="4N0J"/>
<dbReference type="PDBsum" id="4N1C"/>
<dbReference type="PDBsum" id="4N1E"/>
<dbReference type="PDBsum" id="4N5R"/>
<dbReference type="PDBsum" id="4N8Z"/>
<dbReference type="PDBsum" id="4N9R"/>
<dbReference type="PDBsum" id="4NEB"/>
<dbReference type="PDBsum" id="4NFV"/>
<dbReference type="PDBsum" id="4NG1"/>
<dbReference type="PDBsum" id="4NG8"/>
<dbReference type="PDBsum" id="4NGI"/>
<dbReference type="PDBsum" id="4NGJ"/>
<dbReference type="PDBsum" id="4NGK"/>
<dbReference type="PDBsum" id="4NGL"/>
<dbReference type="PDBsum" id="4NGO"/>
<dbReference type="PDBsum" id="4NGV"/>
<dbReference type="PDBsum" id="4NGW"/>
<dbReference type="PDBsum" id="4NGY"/>
<dbReference type="PDBsum" id="4NGZ"/>
<dbReference type="PDBsum" id="4NHI"/>
<dbReference type="PDBsum" id="4NHP"/>
<dbReference type="PDBsum" id="4NHQ"/>
<dbReference type="PDBsum" id="4NHS"/>
<dbReference type="PDBsum" id="4NHT"/>
<dbReference type="PDBsum" id="4NIJ"/>
<dbReference type="PDBsum" id="4NSG"/>
<dbReference type="PDBsum" id="4NSH"/>
<dbReference type="PDBsum" id="4NSI"/>
<dbReference type="PDBsum" id="4NSJ"/>
<dbReference type="PDBsum" id="4NWE"/>
<dbReference type="PDBsum" id="4NWH"/>
<dbReference type="PDBsum" id="4NY5"/>
<dbReference type="PDBsum" id="4O34"/>
<dbReference type="PDBsum" id="4OOO"/>
<dbReference type="PDBsum" id="4OOT"/>
<dbReference type="PDBsum" id="4OWA"/>
<dbReference type="PDBsum" id="4OWB"/>
<dbReference type="PDBsum" id="4OWC"/>
<dbReference type="PDBsum" id="4OWE"/>
<dbReference type="PDBsum" id="4OWH"/>
<dbReference type="PDBsum" id="4P2E"/>
<dbReference type="PDBsum" id="4PGJ"/>
<dbReference type="PDBsum" id="4PHI"/>
<dbReference type="PDBsum" id="4PPO"/>
<dbReference type="PDBsum" id="4PRQ"/>
<dbReference type="PDBsum" id="4PRU"/>
<dbReference type="PDBsum" id="4QEQ"/>
<dbReference type="PDBsum" id="4QGZ"/>
<dbReference type="PDBsum" id="4QY9"/>
<dbReference type="PDBsum" id="4R0F"/>
<dbReference type="PDBsum" id="4R6C"/>
<dbReference type="PDBsum" id="4RDS"/>
<dbReference type="PDBsum" id="4RLM"/>
<dbReference type="PDBsum" id="4RLN"/>
<dbReference type="PDBsum" id="4RW1"/>
<dbReference type="PDBsum" id="4RW2"/>
<dbReference type="PDBsum" id="4TSA"/>
<dbReference type="PDBsum" id="4TSB"/>
<dbReference type="PDBsum" id="4TSC"/>
<dbReference type="PDBsum" id="4TTD"/>
<dbReference type="PDBsum" id="4TUN"/>
<dbReference type="PDBsum" id="4TWS"/>
<dbReference type="PDBsum" id="4U3X"/>
<dbReference type="PDBsum" id="4UWN"/>
<dbReference type="PDBsum" id="4UWU"/>
<dbReference type="PDBsum" id="4UWV"/>
<dbReference type="PDBsum" id="4W94"/>
<dbReference type="PDBsum" id="4W96"/>
<dbReference type="PDBsum" id="4WG1"/>
<dbReference type="PDBsum" id="4WG7"/>
<dbReference type="PDBsum" id="4WL6"/>
<dbReference type="PDBsum" id="4WL7"/>
<dbReference type="PDBsum" id="4WLD"/>
<dbReference type="PDBsum" id="4WLT"/>
<dbReference type="PDBsum" id="4WLX"/>
<dbReference type="PDBsum" id="4WLY"/>
<dbReference type="PDBsum" id="4WM1"/>
<dbReference type="PDBsum" id="4WM2"/>
<dbReference type="PDBsum" id="4WM3"/>
<dbReference type="PDBsum" id="4WM4"/>
<dbReference type="PDBsum" id="4WM5"/>
<dbReference type="PDBsum" id="4WM6"/>
<dbReference type="PDBsum" id="4WMG"/>
<dbReference type="PDBsum" id="4WO6"/>
<dbReference type="PDBsum" id="4WO9"/>
<dbReference type="PDBsum" id="4WOA"/>
<dbReference type="PDBsum" id="4X3B"/>
<dbReference type="PDBsum" id="4XAD"/>
<dbReference type="PDBsum" id="4XEN"/>
<dbReference type="PDBsum" id="4XJB"/>
<dbReference type="PDBsum" id="4XJD"/>
<dbReference type="PDBsum" id="4XJF"/>
<dbReference type="PDBsum" id="4XJG"/>
<dbReference type="PDBsum" id="4XJH"/>
<dbReference type="PDBsum" id="4XJI"/>
<dbReference type="PDBsum" id="4XN6"/>
<dbReference type="PDBsum" id="4XYY"/>
<dbReference type="PDBsum" id="4YEM"/>
<dbReference type="PDBsum" id="4YEN"/>
<dbReference type="PDBsum" id="4YEO"/>
<dbReference type="PDBsum" id="4YM8"/>
<dbReference type="PDBsum" id="4YOP"/>
<dbReference type="PDBsum" id="4Z3M"/>
<dbReference type="PDBsum" id="4Z41"/>
<dbReference type="PDBsum" id="4Z46"/>
<dbReference type="PDBsum" id="4Z98"/>
<dbReference type="PDBsum" id="4ZEE"/>
<dbReference type="PDBsum" id="4ZFP"/>
<dbReference type="PDBsum" id="4ZIX"/>
<dbReference type="PDBsum" id="5A3E"/>
<dbReference type="PDBsum" id="5A3Z"/>
<dbReference type="PDBsum" id="5AMY"/>
<dbReference type="PDBsum" id="5APC"/>
<dbReference type="PDBsum" id="5APD"/>
<dbReference type="PDBsum" id="5APE"/>
<dbReference type="PDBsum" id="5APF"/>
<dbReference type="PDBsum" id="5B05"/>
<dbReference type="PDBsum" id="5B06"/>
<dbReference type="PDBsum" id="5B07"/>
<dbReference type="PDBsum" id="5B1F"/>
<dbReference type="PDBsum" id="5B1G"/>
<dbReference type="PDBsum" id="5B59"/>
<dbReference type="PDBsum" id="5B5J"/>
<dbReference type="PDBsum" id="5C6I"/>
<dbReference type="PDBsum" id="5C6J"/>
<dbReference type="PDBsum" id="5C6L"/>
<dbReference type="PDBsum" id="5D5C"/>
<dbReference type="PDBsum" id="5D5F"/>
<dbReference type="PDBsum" id="5DL9"/>
<dbReference type="PDBsum" id="5DLA"/>
<dbReference type="PDBsum" id="5DM9"/>
<dbReference type="PDBsum" id="5E4P"/>
<dbReference type="PDBsum" id="5E9R"/>
<dbReference type="PDBsum" id="5EBH"/>
<dbReference type="PDBsum" id="5F14"/>
<dbReference type="PDBsum" id="5F16"/>
<dbReference type="PDBsum" id="5F81"/>
<dbReference type="PDBsum" id="5F9U"/>
<dbReference type="PDBsum" id="5F9X"/>
<dbReference type="PDBsum" id="5FCP"/>
<dbReference type="PDBsum" id="5FDJ"/>
<dbReference type="PDBsum" id="5FEK"/>
<dbReference type="PDBsum" id="5FEL"/>
<dbReference type="PDBsum" id="5FHW"/>
<dbReference type="PDBsum" id="5FST"/>
<dbReference type="PDBsum" id="5GWB"/>
<dbReference type="PDBsum" id="5HLL"/>
<dbReference type="PDBsum" id="5HMJ"/>
<dbReference type="PDBsum" id="5HMV"/>
<dbReference type="PDBsum" id="5HNC"/>
<dbReference type="PDBsum" id="5HNL"/>
<dbReference type="PDBsum" id="5HQ1"/>
<dbReference type="PDBsum" id="5I4W"/>
<dbReference type="PDBsum" id="5I4X"/>
<dbReference type="PDBsum" id="5I4Y"/>
<dbReference type="PDBsum" id="5I53"/>
<dbReference type="PDBsum" id="5I54"/>
<dbReference type="PDBsum" id="5I5Q"/>
<dbReference type="PDBsum" id="5IDD"/>
<dbReference type="PDBsum" id="5IEL"/>
<dbReference type="PDBsum" id="5IHG"/>
<dbReference type="PDBsum" id="5II3"/>
<dbReference type="PDBsum" id="5ILC"/>
<dbReference type="PDBsum" id="5ILF"/>
<dbReference type="PDBsum" id="5J7C"/>
<dbReference type="PDBsum" id="5JEN"/>
<dbReference type="PDBsum" id="5K2K"/>
<dbReference type="PDBsum" id="5K2N"/>
<dbReference type="PDBsum" id="5K2P"/>
<dbReference type="PDBsum" id="5K2Q"/>
<dbReference type="PDBsum" id="5K2R"/>
<dbReference type="PDBsum" id="5K2S"/>
<dbReference type="PDBsum" id="5K7O"/>
<dbReference type="PDBsum" id="5KJ9"/>
<dbReference type="PDBsum" id="5KKI"/>
<dbReference type="PDBsum" id="5KKJ"/>
<dbReference type="PDBsum" id="5KXK"/>
<dbReference type="PDBsum" id="5KXL"/>
<dbReference type="PDBsum" id="5KXM"/>
<dbReference type="PDBsum" id="5KXN"/>
<dbReference type="PDBsum" id="5KXO"/>
<dbReference type="PDBsum" id="5KXP"/>
<dbReference type="PDBsum" id="5KXR"/>
<dbReference type="PDBsum" id="5KXS"/>
<dbReference type="PDBsum" id="5KXT"/>
<dbReference type="PDBsum" id="5KXW"/>
<dbReference type="PDBsum" id="5KXX"/>
<dbReference type="PDBsum" id="5KXY"/>
<dbReference type="PDBsum" id="5KXZ"/>
<dbReference type="PDBsum" id="5KY1"/>
<dbReference type="PDBsum" id="5L3H"/>
<dbReference type="PDBsum" id="5L3I"/>
<dbReference type="PDBsum" id="5L9J"/>
<dbReference type="PDBsum" id="5LA5"/>
<dbReference type="PDBsum" id="5LA8"/>
<dbReference type="PDBsum" id="5LAF"/>
<dbReference type="PDBsum" id="5LAG"/>
<dbReference type="PDBsum" id="5LAN"/>
<dbReference type="PDBsum" id="5LIN"/>
<dbReference type="PDBsum" id="5LIO"/>
<dbReference type="PDBsum" id="5LVG"/>
<dbReference type="PDBsum" id="5LVH"/>
<dbReference type="PDBsum" id="5LVI"/>
<dbReference type="PDBsum" id="5LVJ"/>
<dbReference type="PDBsum" id="5LXW"/>
<dbReference type="PDBsum" id="5LYM"/>
<dbReference type="PDBsum" id="5LYT"/>
<dbReference type="PDBsum" id="5LYZ"/>
<dbReference type="PDBsum" id="5M1Y"/>
<dbReference type="PDBsum" id="5MJJ"/>
<dbReference type="PDBsum" id="5MYY"/>
<dbReference type="PDBsum" id="5NBJ"/>
<dbReference type="PDBsum" id="5NE0"/>
<dbReference type="PDBsum" id="5NJ1"/>
<dbReference type="PDBsum" id="5NJM"/>
<dbReference type="PDBsum" id="5NJP"/>
<dbReference type="PDBsum" id="5NJQ"/>
<dbReference type="PDBsum" id="5NJR"/>
<dbReference type="PDBsum" id="5NJS"/>
<dbReference type="PDBsum" id="5O4W"/>
<dbReference type="PDBsum" id="5O4X"/>
<dbReference type="PDBsum" id="5O6Q"/>
<dbReference type="PDBsum" id="5OB6"/>
<dbReference type="PDBsum" id="5OB7"/>
<dbReference type="PDBsum" id="5OB8"/>
<dbReference type="PDBsum" id="5OB9"/>
<dbReference type="PDBsum" id="5OCV"/>
<dbReference type="PDBsum" id="5OER"/>
<dbReference type="PDBsum" id="5OLE"/>
<dbReference type="PDBsum" id="5OOV"/>
<dbReference type="PDBsum" id="5OOY"/>
<dbReference type="PDBsum" id="5OP1"/>
<dbReference type="PDBsum" id="5T3F"/>
<dbReference type="PDBsum" id="5TK0"/>
<dbReference type="PDBsum" id="5UVJ"/>
<dbReference type="PDBsum" id="5V4G"/>
<dbReference type="PDBsum" id="5V4H"/>
<dbReference type="PDBsum" id="5V4I"/>
<dbReference type="PDBsum" id="5WR9"/>
<dbReference type="PDBsum" id="5WRA"/>
<dbReference type="PDBsum" id="5WRB"/>
<dbReference type="PDBsum" id="5YIN"/>
<dbReference type="PDBsum" id="5YKY"/>
<dbReference type="PDBsum" id="6A10"/>
<dbReference type="PDBsum" id="6A4N"/>
<dbReference type="PDBsum" id="6A4O"/>
<dbReference type="PDBsum" id="6A4P"/>
<dbReference type="PDBsum" id="6A4Q"/>
<dbReference type="PDBsum" id="6ABN"/>
<dbReference type="PDBsum" id="6ABZ"/>
<dbReference type="PDBsum" id="6AC2"/>
<dbReference type="PDBsum" id="6AD5"/>
<dbReference type="PDBsum" id="6ADF"/>
<dbReference type="PDBsum" id="6AEA"/>
<dbReference type="PDBsum" id="6AGN"/>
<dbReference type="PDBsum" id="6AGR"/>
<dbReference type="PDBsum" id="6AHH"/>
<dbReference type="PDBsum" id="6AHL"/>
<dbReference type="PDBsum" id="6APM"/>
<dbReference type="PDBsum" id="6B7U"/>
<dbReference type="PDBsum" id="6B7V"/>
<dbReference type="PDBsum" id="6B7W"/>
<dbReference type="PDBsum" id="6BO1"/>
<dbReference type="PDBsum" id="6BO2"/>
<dbReference type="PDBsum" id="6BRE"/>
<dbReference type="PDBsum" id="6CIW"/>
<dbReference type="PDBsum" id="6D6E"/>
<dbReference type="PDBsum" id="6D6F"/>
<dbReference type="PDBsum" id="6D6G"/>
<dbReference type="PDBsum" id="6D6H"/>
<dbReference type="PDBsum" id="6F1L"/>
<dbReference type="PDBsum" id="6F1M"/>
<dbReference type="PDBsum" id="6F1O"/>
<dbReference type="PDBsum" id="6F1P"/>
<dbReference type="PDBsum" id="6F1R"/>
<dbReference type="PDBsum" id="6F2I"/>
<dbReference type="PDBsum" id="6F2J"/>
<dbReference type="PDBsum" id="6F2K"/>
<dbReference type="PDBsum" id="6F9X"/>
<dbReference type="PDBsum" id="6F9Y"/>
<dbReference type="PDBsum" id="6F9Z"/>
<dbReference type="PDBsum" id="6FA0"/>
<dbReference type="PDBsum" id="6FRO"/>
<dbReference type="PDBsum" id="6FRQ"/>
<dbReference type="PDBsum" id="6FSJ"/>
<dbReference type="PDBsum" id="6FTR"/>
<dbReference type="PDBsum" id="6G5C"/>
<dbReference type="PDBsum" id="6G5V"/>
<dbReference type="PDBsum" id="6G5Y"/>
<dbReference type="PDBsum" id="6G8A"/>
<dbReference type="PDBsum" id="6GF0"/>
<dbReference type="PDBsum" id="6GNL"/>
<dbReference type="PDBsum" id="6GOB"/>
<dbReference type="PDBsum" id="6GOH"/>
<dbReference type="PDBsum" id="6GOI"/>
<dbReference type="PDBsum" id="6GOJ"/>
<dbReference type="PDBsum" id="6H0K"/>
<dbReference type="PDBsum" id="6H0L"/>
<dbReference type="PDBsum" id="6H3B"/>
<dbReference type="PDBsum" id="6H79"/>
<dbReference type="PDBsum" id="6HT2"/>
<dbReference type="PDBsum" id="6HU5"/>
<dbReference type="PDBsum" id="6HY4"/>
<dbReference type="PDBsum" id="6HY6"/>
<dbReference type="PDBsum" id="6HY8"/>
<dbReference type="PDBsum" id="6HYB"/>
<dbReference type="PDBsum" id="6IG6"/>
<dbReference type="PDBsum" id="6IRJ"/>
<dbReference type="PDBsum" id="6JB2"/>
<dbReference type="PDBsum" id="6JB5"/>
<dbReference type="PDBsum" id="6JB8"/>
<dbReference type="PDBsum" id="6JXP"/>
<dbReference type="PDBsum" id="6JXQ"/>
<dbReference type="PDBsum" id="6JZI"/>
<dbReference type="PDBsum" id="6K5Q"/>
<dbReference type="PDBsum" id="6K8G"/>
<dbReference type="PDBsum" id="6KCB"/>
<dbReference type="PDBsum" id="6KCD"/>
<dbReference type="PDBsum" id="6KD1"/>
<dbReference type="PDBsum" id="6LAV"/>
<dbReference type="PDBsum" id="6LL3"/>
<dbReference type="PDBsum" id="6LT5"/>
<dbReference type="PDBsum" id="6LYT"/>
<dbReference type="PDBsum" id="6LYZ"/>
<dbReference type="PDBsum" id="6MQV"/>
<dbReference type="PDBsum" id="6MUZ"/>
<dbReference type="PDBsum" id="6MX9"/>
<dbReference type="PDBsum" id="6O2H"/>
<dbReference type="PDBsum" id="6P4A"/>
<dbReference type="PDBsum" id="6P4B"/>
<dbReference type="PDBsum" id="6P4D"/>
<dbReference type="PDBsum" id="6PBB"/>
<dbReference type="PDBsum" id="6PL9"/>
<dbReference type="PDBsum" id="6PLA"/>
<dbReference type="PDBsum" id="6PLB"/>
<dbReference type="PDBsum" id="6Q88"/>
<dbReference type="PDBsum" id="6Q8R"/>
<dbReference type="PDBsum" id="6Q8T"/>
<dbReference type="PDBsum" id="6QEA"/>
<dbReference type="PDBsum" id="6QNB"/>
<dbReference type="PDBsum" id="6QQ3"/>
<dbReference type="PDBsum" id="6QQC"/>
<dbReference type="PDBsum" id="6QQD"/>
<dbReference type="PDBsum" id="6QQE"/>
<dbReference type="PDBsum" id="6QQF"/>
<dbReference type="PDBsum" id="6QWW"/>
<dbReference type="PDBsum" id="6QWX"/>
<dbReference type="PDBsum" id="6QWY"/>
<dbReference type="PDBsum" id="6QWZ"/>
<dbReference type="PDBsum" id="6QX0"/>
<dbReference type="PDBsum" id="6QXW"/>
<dbReference type="PDBsum" id="6QXX"/>
<dbReference type="PDBsum" id="6QXY"/>
<dbReference type="PDBsum" id="6QY0"/>
<dbReference type="PDBsum" id="6QY1"/>
<dbReference type="PDBsum" id="6QY2"/>
<dbReference type="PDBsum" id="6QY4"/>
<dbReference type="PDBsum" id="6QY5"/>
<dbReference type="PDBsum" id="6RNB"/>
<dbReference type="PDBsum" id="6RNC"/>
<dbReference type="PDBsum" id="6RO3"/>
<dbReference type="PDBsum" id="6RO5"/>
<dbReference type="PDBsum" id="6RT1"/>
<dbReference type="PDBsum" id="6RT3"/>
<dbReference type="PDBsum" id="6RT9"/>
<dbReference type="PDBsum" id="6RTA"/>
<dbReference type="PDBsum" id="6RXI"/>
<dbReference type="PDBsum" id="6S2N"/>
<dbReference type="PDBsum" id="6S7N"/>
<dbReference type="PDBsum" id="6SET"/>
<dbReference type="PDBsum" id="6SEU"/>
<dbReference type="PDBsum" id="6SEW"/>
<dbReference type="PDBsum" id="6SEX"/>
<dbReference type="PDBsum" id="6SEZ"/>
<dbReference type="PDBsum" id="6SIJ"/>
<dbReference type="PDBsum" id="6SIK"/>
<dbReference type="PDBsum" id="6SIL"/>
<dbReference type="PDBsum" id="6SIM"/>
<dbReference type="PDBsum" id="6SR0"/>
<dbReference type="PDBsum" id="6SR1"/>
<dbReference type="PDBsum" id="6SR2"/>
<dbReference type="PDBsum" id="6SR3"/>
<dbReference type="PDBsum" id="6SR4"/>
<dbReference type="PDBsum" id="6SR5"/>
<dbReference type="PDBsum" id="6SYC"/>
<dbReference type="PDBsum" id="6SYD"/>
<dbReference type="PDBsum" id="6SYE"/>
<dbReference type="PDBsum" id="6TVL"/>
<dbReference type="PDBsum" id="6TVY"/>
<dbReference type="PDBsum" id="6W7P"/>
<dbReference type="PDBsum" id="6W8E"/>
<dbReference type="PDBsum" id="6WEB"/>
<dbReference type="PDBsum" id="6WEC"/>
<dbReference type="PDBsum" id="6WGO"/>
<dbReference type="PDBsum" id="6WRL"/>
<dbReference type="PDBsum" id="6WRM"/>
<dbReference type="PDBsum" id="6WX5"/>
<dbReference type="PDBsum" id="6YBF"/>
<dbReference type="PDBsum" id="6YBI"/>
<dbReference type="PDBsum" id="6YJX"/>
<dbReference type="PDBsum" id="6YOB"/>
<dbReference type="PDBsum" id="6YOC"/>
<dbReference type="PDBsum" id="6YOD"/>
<dbReference type="PDBsum" id="6YOE"/>
<dbReference type="PDBsum" id="6ZS8"/>
<dbReference type="PDBsum" id="7A70"/>
<dbReference type="PDBsum" id="7AC2"/>
<dbReference type="PDBsum" id="7AVE"/>
<dbReference type="PDBsum" id="7AVF"/>
<dbReference type="PDBsum" id="7AVG"/>
<dbReference type="PDBsum" id="7B9J"/>
<dbReference type="PDBsum" id="7BAZ"/>
<dbReference type="PDBsum" id="7BB1"/>
<dbReference type="PDBsum" id="7BCU"/>
<dbReference type="PDBsum" id="7BCX"/>
<dbReference type="PDBsum" id="7BD0"/>
<dbReference type="PDBsum" id="7BDM"/>
<dbReference type="PDBsum" id="7BDZ"/>
<dbReference type="PDBsum" id="7BE0"/>
<dbReference type="PDBsum" id="7BE1"/>
<dbReference type="PDBsum" id="7BE2"/>
<dbReference type="PDBsum" id="7BEB"/>
<dbReference type="PDBsum" id="7BEC"/>
<dbReference type="PDBsum" id="7BHK"/>
<dbReference type="PDBsum" id="7BHL"/>
<dbReference type="PDBsum" id="7BHM"/>
<dbReference type="PDBsum" id="7BHN"/>
<dbReference type="PDBsum" id="7BMO"/>
<dbReference type="PDBsum" id="7BMP"/>
<dbReference type="PDBsum" id="7BMQ"/>
<dbReference type="PDBsum" id="7BMR"/>
<dbReference type="PDBsum" id="7BMS"/>
<dbReference type="PDBsum" id="7BMT"/>
<dbReference type="PDBsum" id="7BR5"/>
<dbReference type="PDBsum" id="7BVM"/>
<dbReference type="PDBsum" id="7BVO"/>
<dbReference type="PDBsum" id="7BYO"/>
<dbReference type="PDBsum" id="7BYP"/>
<dbReference type="PDBsum" id="7C09"/>
<dbReference type="PDBsum" id="7CDK"/>
<dbReference type="PDBsum" id="7CDM"/>
<dbReference type="PDBsum" id="7CDN"/>
<dbReference type="PDBsum" id="7CDO"/>
<dbReference type="PDBsum" id="7CDP"/>
<dbReference type="PDBsum" id="7CDQ"/>
<dbReference type="PDBsum" id="7CDR"/>
<dbReference type="PDBsum" id="7CDS"/>
<dbReference type="PDBsum" id="7CDT"/>
<dbReference type="PDBsum" id="7CDU"/>
<dbReference type="PDBsum" id="7CJZ"/>
<dbReference type="PDBsum" id="7CQO"/>
<dbReference type="PDBsum" id="7CVJ"/>
<dbReference type="PDBsum" id="7CVL"/>
<dbReference type="PDBsum" id="7D01"/>
<dbReference type="PDBsum" id="7D02"/>
<dbReference type="PDBsum" id="7D04"/>
<dbReference type="PDBsum" id="7D05"/>
<dbReference type="PDBsum" id="7D0W"/>
<dbReference type="PDBsum" id="7DEQ"/>
<dbReference type="PDBsum" id="7DER"/>
<dbReference type="PDBsum" id="7DLN"/>
<dbReference type="PDBsum" id="7DTB"/>
<dbReference type="PDBsum" id="7DTF"/>
<dbReference type="PDBsum" id="7E02"/>
<dbReference type="PDBsum" id="7F26"/>
<dbReference type="PDBsum" id="7FCU"/>
<dbReference type="PDBsum" id="7FCW"/>
<dbReference type="PDBsum" id="7FG8"/>
<dbReference type="PDBsum" id="7FGU"/>
<dbReference type="PDBsum" id="7FGV"/>
<dbReference type="PDBsum" id="7JMU"/>
<dbReference type="PDBsum" id="7KH5"/>
<dbReference type="PDBsum" id="7KNK"/>
<dbReference type="PDBsum" id="7L84"/>
<dbReference type="PDBsum" id="7LLP"/>
<dbReference type="PDBsum" id="7LN8"/>
<dbReference type="PDBsum" id="7LN9"/>
<dbReference type="PDBsum" id="7LOQ"/>
<dbReference type="PDBsum" id="7LOR"/>
<dbReference type="PDBsum" id="7LP6"/>
<dbReference type="PDBsum" id="7LPL"/>
<dbReference type="PDBsum" id="7LPM"/>
<dbReference type="PDBsum" id="7LYZ"/>
<dbReference type="PDBsum" id="7MRP"/>
<dbReference type="PDBsum" id="7NJF"/>
<dbReference type="PDBsum" id="7NKF"/>
<dbReference type="PDBsum" id="7O2O"/>
<dbReference type="PDBsum" id="7OL5"/>
<dbReference type="PDBsum" id="7OL6"/>
<dbReference type="PDBsum" id="7OL7"/>
<dbReference type="PDBsum" id="7OL8"/>
<dbReference type="PDBsum" id="7P6M"/>
<dbReference type="PDBsum" id="7PNH"/>
<dbReference type="PDBsum" id="7Q04"/>
<dbReference type="PDBsum" id="7Q05"/>
<dbReference type="PDBsum" id="7Q06"/>
<dbReference type="PDBsum" id="7Q0T"/>
<dbReference type="PDBsum" id="7Q0U"/>
<dbReference type="PDBsum" id="7Q0V"/>
<dbReference type="PDBsum" id="7QNP"/>
<dbReference type="PDBsum" id="7QQ1"/>
<dbReference type="PDBsum" id="7R1Q"/>
<dbReference type="PDBsum" id="7RXY"/>
<dbReference type="PDBsum" id="7RYD"/>
<dbReference type="PDBsum" id="7RYK"/>
<dbReference type="PDBsum" id="7RZ0"/>
<dbReference type="PDBsum" id="7RZ1"/>
<dbReference type="PDBsum" id="7RZ2"/>
<dbReference type="PDBsum" id="7S27"/>
<dbReference type="PDBsum" id="7S28"/>
<dbReference type="PDBsum" id="7S29"/>
<dbReference type="PDBsum" id="7S2A"/>
<dbReference type="PDBsum" id="7S2B"/>
<dbReference type="PDBsum" id="7S2C"/>
<dbReference type="PDBsum" id="7S2D"/>
<dbReference type="PDBsum" id="7S2E"/>
<dbReference type="PDBsum" id="7S2F"/>
<dbReference type="PDBsum" id="7S2G"/>
<dbReference type="PDBsum" id="7S2Q"/>
<dbReference type="PDBsum" id="7S2U"/>
<dbReference type="PDBsum" id="7S2V"/>
<dbReference type="PDBsum" id="7S2W"/>
<dbReference type="PDBsum" id="7S30"/>
<dbReference type="PDBsum" id="7S31"/>
<dbReference type="PDBsum" id="7S32"/>
<dbReference type="PDBsum" id="7S33"/>
<dbReference type="PDBsum" id="7S34"/>
<dbReference type="PDBsum" id="7S35"/>
<dbReference type="PDBsum" id="7S4W"/>
<dbReference type="PDBsum" id="7SKW"/>
<dbReference type="PDBsum" id="7TUM"/>
<dbReference type="PDBsum" id="7ULY"/>
<dbReference type="PDBsum" id="7VEI"/>
<dbReference type="PDBsum" id="7VGO"/>
<dbReference type="PDBsum" id="7VGP"/>
<dbReference type="PDBsum" id="7WBD"/>
<dbReference type="PDBsum" id="7WBE"/>
<dbReference type="PDBsum" id="7WBF"/>
<dbReference type="PDBsum" id="7WKR"/>
<dbReference type="PDBsum" id="7WUC"/>
<dbReference type="PDBsum" id="7WXS"/>
<dbReference type="PDBsum" id="7Y6A"/>
<dbReference type="PDBsum" id="7YNU"/>
<dbReference type="PDBsum" id="7YNV"/>
<dbReference type="PDBsum" id="7YRK"/>
<dbReference type="PDBsum" id="7Z6J"/>
<dbReference type="PDBsum" id="7ZU6"/>
<dbReference type="PDBsum" id="8A9D"/>
<dbReference type="PDBsum" id="8A9E"/>
<dbReference type="PDBsum" id="8A9R"/>
<dbReference type="PDBsum" id="8AAZ"/>
<dbReference type="PDBsum" id="8AJ3"/>
<dbReference type="PDBsum" id="8AJ4"/>
<dbReference type="PDBsum" id="8AJ5"/>
<dbReference type="PDBsum" id="8B3L"/>
<dbReference type="PDBsum" id="8B3T"/>
<dbReference type="PDBsum" id="8B3U"/>
<dbReference type="PDBsum" id="8B3V"/>
<dbReference type="PDBsum" id="8BOV"/>
<dbReference type="PDBsum" id="8BOY"/>
<dbReference type="PDBsum" id="8BPH"/>
<dbReference type="PDBsum" id="8BPJ"/>
<dbReference type="PDBsum" id="8BPU"/>
<dbReference type="PDBsum" id="8BQM"/>
<dbReference type="PDBsum" id="8BQP"/>
<dbReference type="PDBsum" id="8BQQ"/>
<dbReference type="PDBsum" id="8BQR"/>
<dbReference type="PDBsum" id="8BQT"/>
<dbReference type="PDBsum" id="8C39"/>
<dbReference type="PDBsum" id="8CL5"/>
<dbReference type="PDBsum" id="8CL6"/>
<dbReference type="PDBsum" id="8CPC"/>
<dbReference type="PDBsum" id="8CVU"/>
<dbReference type="PDBsum" id="8CVV"/>
<dbReference type="PDBsum" id="8CVW"/>
<dbReference type="PDBsum" id="8CW0"/>
<dbReference type="PDBsum" id="8CW1"/>
<dbReference type="PDBsum" id="8CW3"/>
<dbReference type="PDBsum" id="8CW5"/>
<dbReference type="PDBsum" id="8CW6"/>
<dbReference type="PDBsum" id="8CW7"/>
<dbReference type="PDBsum" id="8CW8"/>
<dbReference type="PDBsum" id="8CWB"/>
<dbReference type="PDBsum" id="8CWC"/>
<dbReference type="PDBsum" id="8CWD"/>
<dbReference type="PDBsum" id="8CWE"/>
<dbReference type="PDBsum" id="8CWF"/>
<dbReference type="PDBsum" id="8CWG"/>
<dbReference type="PDBsum" id="8CWH"/>
<dbReference type="PDBsum" id="8D5S"/>
<dbReference type="PDBsum" id="8D5T"/>
<dbReference type="PDBsum" id="8D5U"/>
<dbReference type="PDBsum" id="8D5W"/>
<dbReference type="PDBsum" id="8D5X"/>
<dbReference type="PDBsum" id="8D5Z"/>
<dbReference type="PDBsum" id="8D60"/>
<dbReference type="PDBsum" id="8D61"/>
<dbReference type="PDBsum" id="8D62"/>
<dbReference type="PDBsum" id="8D69"/>
<dbReference type="PDBsum" id="8D6B"/>
<dbReference type="PDBsum" id="8D6I"/>
<dbReference type="PDBsum" id="8D75"/>
<dbReference type="PDBsum" id="8D77"/>
<dbReference type="PDBsum" id="8D7A"/>
<dbReference type="PDBsum" id="8D7B"/>
<dbReference type="PDBsum" id="8D7C"/>
<dbReference type="PDBsum" id="8D7D"/>
<dbReference type="PDBsum" id="8D7J"/>
<dbReference type="PDBsum" id="8D7L"/>
<dbReference type="PDBsum" id="8D7Q"/>
<dbReference type="PDBsum" id="8D7S"/>
<dbReference type="PDBsum" id="8D8A"/>
<dbReference type="PDBsum" id="8D8B"/>
<dbReference type="PDBsum" id="8D8C"/>
<dbReference type="PDBsum" id="8D8D"/>
<dbReference type="PDBsum" id="8D8E"/>
<dbReference type="PDBsum" id="8D8F"/>
<dbReference type="PDBsum" id="8D8G"/>
<dbReference type="PDBsum" id="8D8H"/>
<dbReference type="PDBsum" id="8DCT"/>
<dbReference type="PDBsum" id="8DCU"/>
<dbReference type="PDBsum" id="8DCV"/>
<dbReference type="PDBsum" id="8DCW"/>
<dbReference type="PDBsum" id="8DYZ"/>
<dbReference type="PDBsum" id="8DZ7"/>
<dbReference type="PDBsum" id="8E54"/>
<dbReference type="PDBsum" id="8EZO"/>
<dbReference type="PDBsum" id="8EZP"/>
<dbReference type="PDBsum" id="8EZU"/>
<dbReference type="PDBsum" id="8EZX"/>
<dbReference type="PDBsum" id="8F00"/>
<dbReference type="PDBsum" id="8F0B"/>
<dbReference type="PDBsum" id="8F28"/>
<dbReference type="PDBsum" id="8F2G"/>
<dbReference type="PDBsum" id="8FP6"/>
<dbReference type="PDBsum" id="8FP7"/>
<dbReference type="PDBsum" id="8FP8"/>
<dbReference type="PDBsum" id="8FPB"/>
<dbReference type="PDBsum" id="8FPD"/>
<dbReference type="PDBsum" id="8FPM"/>
<dbReference type="PDBsum" id="8FPN"/>
<dbReference type="PDBsum" id="8FPP"/>
<dbReference type="PDBsum" id="8FPR"/>
<dbReference type="PDBsum" id="8FPU"/>
<dbReference type="PDBsum" id="8FRY"/>
<dbReference type="PDBsum" id="8FS0"/>
<dbReference type="PDBsum" id="8FS9"/>
<dbReference type="PDBsum" id="8FSA"/>
<dbReference type="PDBsum" id="8FSC"/>
<dbReference type="PDBsum" id="8FSF"/>
<dbReference type="PDBsum" id="8FSG"/>
<dbReference type="PDBsum" id="8FSH"/>
<dbReference type="PDBsum" id="8FSM"/>
<dbReference type="PDBsum" id="8FSN"/>
<dbReference type="PDBsum" id="8FST"/>
<dbReference type="PDBsum" id="8FSU"/>
<dbReference type="PDBsum" id="8FSV"/>
<dbReference type="PDBsum" id="8FSW"/>
<dbReference type="PDBsum" id="8FSX"/>
<dbReference type="PDBsum" id="8FSY"/>
<dbReference type="PDBsum" id="8FT0"/>
<dbReference type="PDBsum" id="8FT1"/>
<dbReference type="PDBsum" id="8FT2"/>
<dbReference type="PDBsum" id="8FT3"/>
<dbReference type="PDBsum" id="8GMV"/>
<dbReference type="PDBsum" id="8GMW"/>
<dbReference type="PDBsum" id="8GQ1"/>
<dbReference type="PDBsum" id="8H3W"/>
<dbReference type="PDBsum" id="8H8T"/>
<dbReference type="PDBsum" id="8H8U"/>
<dbReference type="PDBsum" id="8H8V"/>
<dbReference type="PDBsum" id="8H8W"/>
<dbReference type="PDBsum" id="8JQV"/>
<dbReference type="PDBsum" id="8K8M"/>
<dbReference type="PDBsum" id="8LYZ"/>
<dbReference type="PDBsum" id="8OM8"/>
<dbReference type="PDBsum" id="8OMS"/>
<dbReference type="PDBsum" id="8OMT"/>
<dbReference type="PDBsum" id="8OWC"/>
<dbReference type="PDBsum" id="8P1A"/>
<dbReference type="PDBsum" id="8P1B"/>
<dbReference type="PDBsum" id="8P1C"/>
<dbReference type="PDBsum" id="8P1D"/>
<dbReference type="PDBsum" id="8P2Q"/>
<dbReference type="PDBsum" id="8PFT"/>
<dbReference type="PDBsum" id="8PFU"/>
<dbReference type="PDBsum" id="8PFV"/>
<dbReference type="PDBsum" id="8PFW"/>
<dbReference type="PDBsum" id="8PFX"/>
<dbReference type="PDBsum" id="8PFY"/>
<dbReference type="PDBsum" id="8PH5"/>
<dbReference type="PDBsum" id="8PH6"/>
<dbReference type="PDBsum" id="8PH7"/>
<dbReference type="PDBsum" id="8PH8"/>
<dbReference type="PDBsum" id="8PIW"/>
<dbReference type="PDBsum" id="8POB"/>
<dbReference type="PDBsum" id="8PTE"/>
<dbReference type="PDBsum" id="8PYO"/>
<dbReference type="PDBsum" id="8PYP"/>
<dbReference type="PDBsum" id="8PYQ"/>
<dbReference type="PDBsum" id="8QCU"/>
<dbReference type="PDBsum" id="8QV8"/>
<dbReference type="PDBsum" id="8REG"/>
<dbReference type="PDBsum" id="8REH"/>
<dbReference type="PDBsum" id="8RGE"/>
<dbReference type="PDBsum" id="8RLF"/>
<dbReference type="PDBsum" id="8RLG"/>
<dbReference type="PDBsum" id="8RLH"/>
<dbReference type="PDBsum" id="8RLI"/>
<dbReference type="PDBsum" id="8RNV"/>
<dbReference type="PDBsum" id="8RNW"/>
<dbReference type="PDBsum" id="8RNX"/>
<dbReference type="PDBsum" id="8RNY"/>
<dbReference type="PDBsum" id="8RPM"/>
<dbReference type="PDBsum" id="8RSH"/>
<dbReference type="PDBsum" id="8RT2"/>
<dbReference type="PDBsum" id="8RT3"/>
<dbReference type="PDBsum" id="8RTJ"/>
<dbReference type="PDBsum" id="8RTK"/>
<dbReference type="PDBsum" id="8RUS"/>
<dbReference type="PDBsum" id="8S2U"/>
<dbReference type="PDBsum" id="8S2V"/>
<dbReference type="PDBsum" id="8SCY"/>
<dbReference type="PDBsum" id="8SIL"/>
<dbReference type="PDBsum" id="8W6K"/>
<dbReference type="PDBsum" id="8WDI"/>
<dbReference type="PDBsum" id="8WZF"/>
<dbReference type="PDBsum" id="8WZG"/>
<dbReference type="PDBsum" id="8WZR"/>
<dbReference type="PDBsum" id="8WZT"/>
<dbReference type="PDBsum" id="8WZV"/>
<dbReference type="PDBsum" id="8Y1R"/>
<dbReference type="PDBsum" id="8Y1S"/>
<dbReference type="PDBsum" id="8Y9W"/>
<dbReference type="PDBsum" id="8YA1"/>
<dbReference type="PDBsum" id="8YA4"/>
<dbReference type="PDBsum" id="8YBG"/>
<dbReference type="PDBsum" id="8YBH"/>
<dbReference type="PDBsum" id="9B7C"/>
<dbReference type="PDBsum" id="9B7E"/>
<dbReference type="PDBsum" id="9B7F"/>
<dbReference type="PDBsum" id="9ENZ"/>
<dbReference type="PDBsum" id="9EO2"/>
<dbReference type="PDBsum" id="9EX0"/>
<dbReference type="PDBsum" id="9EX1"/>
<dbReference type="PDBsum" id="9EX2"/>
<dbReference type="PDBsum" id="9FUD"/>
<dbReference type="PDBsum" id="9FUE"/>
<dbReference type="PDBsum" id="9GCV"/>
<dbReference type="PDBsum" id="9GHX"/>
<dbReference type="PDBsum" id="9GI7"/>
<dbReference type="PDBsum" id="9GOG"/>
<dbReference type="PDBsum" id="9GOK"/>
<dbReference type="PDBsum" id="9GYH"/>
<dbReference type="PDBsum" id="9H3E"/>
<dbReference type="PDBsum" id="9HC2"/>
<dbReference type="PDBsum" id="9K9Z"/>
<dbReference type="PDBsum" id="9KA0"/>
<dbReference type="PDBsum" id="9KOT"/>
<dbReference type="PDBsum" id="9L71"/>
<dbReference type="PDBsum" id="9L9R"/>
<dbReference type="PDBsum" id="9LMK"/>
<dbReference type="PDBsum" id="9LML"/>
<dbReference type="PDBsum" id="9LYZ"/>
<dbReference type="BMRB" id="P00698"/>
<dbReference type="EMDB" id="EMD-0864"/>
<dbReference type="EMDB" id="EMD-10090"/>
<dbReference type="EMDB" id="EMD-18669"/>
<dbReference type="EMDB" id="EMD-1981"/>
<dbReference type="EMDB" id="EMD-1982"/>
<dbReference type="EMDB" id="EMD-23957"/>
<dbReference type="EMDB" id="EMD-25184"/>
<dbReference type="EMDB" id="EMD-26596"/>
<dbReference type="EMDB" id="EMD-27902"/>
<dbReference type="EMDB" id="EMD-2945"/>
<dbReference type="EMDB" id="EMD-6313"/>
<dbReference type="EMDB" id="EMD-6342"/>
<dbReference type="EMDB" id="EMD-8217"/>
<dbReference type="PCDDB" id="P00698"/>
<dbReference type="SASBDB" id="P00698"/>
<dbReference type="SMR" id="P00698"/>
<dbReference type="BioGRID" id="676478">
    <property type="interactions" value="1"/>
</dbReference>
<dbReference type="DIP" id="DIP-46258N"/>
<dbReference type="FunCoup" id="P00698">
    <property type="interactions" value="126"/>
</dbReference>
<dbReference type="IntAct" id="P00698">
    <property type="interactions" value="6"/>
</dbReference>
<dbReference type="MINT" id="P00698"/>
<dbReference type="STRING" id="9031.ENSGALP00000016177"/>
<dbReference type="BindingDB" id="P00698"/>
<dbReference type="ChEMBL" id="CHEMBL1932892"/>
<dbReference type="Allergome" id="3294">
    <property type="allergen name" value="Gal d 4.0101"/>
</dbReference>
<dbReference type="Allergome" id="362">
    <property type="allergen name" value="Gal d 4"/>
</dbReference>
<dbReference type="CAZy" id="GH22">
    <property type="family name" value="Glycoside Hydrolase Family 22"/>
</dbReference>
<dbReference type="CarbonylDB" id="P00698"/>
<dbReference type="GlyGen" id="P00698">
    <property type="glycosylation" value="2 sites"/>
</dbReference>
<dbReference type="iPTMnet" id="P00698"/>
<dbReference type="PaxDb" id="9031-ENSGALP00000016177"/>
<dbReference type="ABCD" id="P00698">
    <property type="antibodies" value="50 sequenced antibodies"/>
</dbReference>
<dbReference type="Ensembl" id="ENSGALT00010028688.1">
    <property type="protein sequence ID" value="ENSGALP00010016495.1"/>
    <property type="gene ID" value="ENSGALG00010011983.1"/>
</dbReference>
<dbReference type="GeneID" id="396218"/>
<dbReference type="KEGG" id="gga:396218"/>
<dbReference type="CTD" id="4069"/>
<dbReference type="VEuPathDB" id="HostDB:geneid_396218"/>
<dbReference type="eggNOG" id="ENOG502S1S1">
    <property type="taxonomic scope" value="Eukaryota"/>
</dbReference>
<dbReference type="GeneTree" id="ENSGT00940000153832"/>
<dbReference type="HOGENOM" id="CLU_111620_0_1_1"/>
<dbReference type="InParanoid" id="P00698"/>
<dbReference type="OMA" id="GNGMNAW"/>
<dbReference type="OrthoDB" id="17373at2759"/>
<dbReference type="PhylomeDB" id="P00698"/>
<dbReference type="TreeFam" id="TF324882"/>
<dbReference type="BRENDA" id="3.2.1.17">
    <property type="organism ID" value="1306"/>
</dbReference>
<dbReference type="Reactome" id="R-GGA-5653890">
    <property type="pathway name" value="Lactose synthesis"/>
</dbReference>
<dbReference type="Reactome" id="R-GGA-6798695">
    <property type="pathway name" value="Neutrophil degranulation"/>
</dbReference>
<dbReference type="Reactome" id="R-GGA-6803157">
    <property type="pathway name" value="Antimicrobial peptides"/>
</dbReference>
<dbReference type="SABIO-RK" id="P00698"/>
<dbReference type="CD-CODE" id="783B6188">
    <property type="entry name" value="Synthetic Condensate 000211"/>
</dbReference>
<dbReference type="CD-CODE" id="870FBEC9">
    <property type="entry name" value="Synthetic Condensate 000218"/>
</dbReference>
<dbReference type="EvolutionaryTrace" id="P00698"/>
<dbReference type="PRO" id="PR:P00698"/>
<dbReference type="Proteomes" id="UP000000539">
    <property type="component" value="Chromosome 1"/>
</dbReference>
<dbReference type="Bgee" id="ENSGALG00000009963">
    <property type="expression patterns" value="Expressed in spleen and 7 other cell types or tissues"/>
</dbReference>
<dbReference type="GO" id="GO:0005737">
    <property type="term" value="C:cytoplasm"/>
    <property type="evidence" value="ECO:0000314"/>
    <property type="project" value="CAFA"/>
</dbReference>
<dbReference type="GO" id="GO:0005783">
    <property type="term" value="C:endoplasmic reticulum"/>
    <property type="evidence" value="ECO:0000314"/>
    <property type="project" value="AgBase"/>
</dbReference>
<dbReference type="GO" id="GO:0005615">
    <property type="term" value="C:extracellular space"/>
    <property type="evidence" value="ECO:0000314"/>
    <property type="project" value="AgBase"/>
</dbReference>
<dbReference type="GO" id="GO:0016231">
    <property type="term" value="F:beta-N-acetylglucosaminidase activity"/>
    <property type="evidence" value="ECO:0000314"/>
    <property type="project" value="AgBase"/>
</dbReference>
<dbReference type="GO" id="GO:0042802">
    <property type="term" value="F:identical protein binding"/>
    <property type="evidence" value="ECO:0000353"/>
    <property type="project" value="IntAct"/>
</dbReference>
<dbReference type="GO" id="GO:0003796">
    <property type="term" value="F:lysozyme activity"/>
    <property type="evidence" value="ECO:0000314"/>
    <property type="project" value="CACAO"/>
</dbReference>
<dbReference type="GO" id="GO:0016998">
    <property type="term" value="P:cell wall macromolecule catabolic process"/>
    <property type="evidence" value="ECO:0000314"/>
    <property type="project" value="CAFA"/>
</dbReference>
<dbReference type="GO" id="GO:0042742">
    <property type="term" value="P:defense response to bacterium"/>
    <property type="evidence" value="ECO:0000304"/>
    <property type="project" value="AgBase"/>
</dbReference>
<dbReference type="GO" id="GO:0050829">
    <property type="term" value="P:defense response to Gram-negative bacterium"/>
    <property type="evidence" value="ECO:0000318"/>
    <property type="project" value="GO_Central"/>
</dbReference>
<dbReference type="GO" id="GO:0050830">
    <property type="term" value="P:defense response to Gram-positive bacterium"/>
    <property type="evidence" value="ECO:0000318"/>
    <property type="project" value="GO_Central"/>
</dbReference>
<dbReference type="GO" id="GO:0031640">
    <property type="term" value="P:killing of cells of another organism"/>
    <property type="evidence" value="ECO:0007669"/>
    <property type="project" value="UniProtKB-KW"/>
</dbReference>
<dbReference type="CDD" id="cd16897">
    <property type="entry name" value="LYZ_C"/>
    <property type="match status" value="1"/>
</dbReference>
<dbReference type="FunFam" id="1.10.530.10:FF:000001">
    <property type="entry name" value="Lysozyme C"/>
    <property type="match status" value="1"/>
</dbReference>
<dbReference type="Gene3D" id="1.10.530.10">
    <property type="match status" value="1"/>
</dbReference>
<dbReference type="InterPro" id="IPR001916">
    <property type="entry name" value="Glyco_hydro_22"/>
</dbReference>
<dbReference type="InterPro" id="IPR019799">
    <property type="entry name" value="Glyco_hydro_22_CS"/>
</dbReference>
<dbReference type="InterPro" id="IPR000974">
    <property type="entry name" value="Glyco_hydro_22_lys"/>
</dbReference>
<dbReference type="InterPro" id="IPR023346">
    <property type="entry name" value="Lysozyme-like_dom_sf"/>
</dbReference>
<dbReference type="PANTHER" id="PTHR11407">
    <property type="entry name" value="LYSOZYME C"/>
    <property type="match status" value="1"/>
</dbReference>
<dbReference type="PANTHER" id="PTHR11407:SF28">
    <property type="entry name" value="LYSOZYME C"/>
    <property type="match status" value="1"/>
</dbReference>
<dbReference type="Pfam" id="PF00062">
    <property type="entry name" value="Lys"/>
    <property type="match status" value="1"/>
</dbReference>
<dbReference type="PRINTS" id="PR00137">
    <property type="entry name" value="LYSOZYME"/>
</dbReference>
<dbReference type="PRINTS" id="PR00135">
    <property type="entry name" value="LYZLACT"/>
</dbReference>
<dbReference type="SMART" id="SM00263">
    <property type="entry name" value="LYZ1"/>
    <property type="match status" value="1"/>
</dbReference>
<dbReference type="SUPFAM" id="SSF53955">
    <property type="entry name" value="Lysozyme-like"/>
    <property type="match status" value="1"/>
</dbReference>
<dbReference type="PROSITE" id="PS00128">
    <property type="entry name" value="GLYCOSYL_HYDROL_F22_1"/>
    <property type="match status" value="1"/>
</dbReference>
<dbReference type="PROSITE" id="PS51348">
    <property type="entry name" value="GLYCOSYL_HYDROL_F22_2"/>
    <property type="match status" value="1"/>
</dbReference>